<reference key="1">
    <citation type="journal article" date="1986" name="Nature">
        <title>Homologies in both primary and secondary structure between nuclear envelope and intermediate filament proteins.</title>
        <authorList>
            <person name="McKeon F.D."/>
            <person name="Kirschner M.W."/>
            <person name="Caput D."/>
        </authorList>
    </citation>
    <scope>NUCLEOTIDE SEQUENCE [MRNA] (ISOFORMS A AND C)</scope>
</reference>
<reference key="2">
    <citation type="journal article" date="1986" name="Proc. Natl. Acad. Sci. U.S.A.">
        <title>cDNA sequencing of nuclear lamins A and C reveals primary and secondary structural homology to intermediate filament proteins.</title>
        <authorList>
            <person name="Fisher D.Z."/>
            <person name="Chaudhary N."/>
            <person name="Blobel G."/>
        </authorList>
    </citation>
    <scope>NUCLEOTIDE SEQUENCE [MRNA] (ISOFORMS A AND C)</scope>
    <scope>PROTEIN SEQUENCE OF 583-644</scope>
</reference>
<reference key="3">
    <citation type="journal article" date="2005" name="J. Med. Genet.">
        <title>In vivo and in vitro examination of the functional significances of novel lamin gene mutations in heart failure patients.</title>
        <authorList>
            <person name="Sylvius N."/>
            <person name="Bilinska Z.T."/>
            <person name="Veinot J.P."/>
            <person name="Fidzianska A."/>
            <person name="Bolongo P.M."/>
            <person name="Poon S."/>
            <person name="McKeown P."/>
            <person name="Davies R.A."/>
            <person name="Chan K.-L."/>
            <person name="Tang A.S.L."/>
            <person name="Dyack S."/>
            <person name="Grzybowski J."/>
            <person name="Ruzyllo W."/>
            <person name="McBride H."/>
            <person name="Tesson F."/>
        </authorList>
    </citation>
    <scope>NUCLEOTIDE SEQUENCE [MRNA] (ISOFORM A)</scope>
    <scope>SUBCELLULAR LOCATION (ISOFORM C)</scope>
    <scope>VARIANTS CMD1A TRP-190; GLY-192 AND SER-541</scope>
    <scope>CHARACTERIZATION OF VARIANTS CMD1A GLY-192 AND SER-541</scope>
</reference>
<reference key="4">
    <citation type="submission" date="2003-07" db="EMBL/GenBank/DDBJ databases">
        <title>The progerin allele of lamin A disrupts chromatin organization.</title>
        <authorList>
            <person name="Csoka A.B."/>
        </authorList>
    </citation>
    <scope>NUCLEOTIDE SEQUENCE [MRNA] (ISOFORM 6)</scope>
</reference>
<reference key="5">
    <citation type="journal article" date="2004" name="Nat. Genet.">
        <title>Complete sequencing and characterization of 21,243 full-length human cDNAs.</title>
        <authorList>
            <person name="Ota T."/>
            <person name="Suzuki Y."/>
            <person name="Nishikawa T."/>
            <person name="Otsuki T."/>
            <person name="Sugiyama T."/>
            <person name="Irie R."/>
            <person name="Wakamatsu A."/>
            <person name="Hayashi K."/>
            <person name="Sato H."/>
            <person name="Nagai K."/>
            <person name="Kimura K."/>
            <person name="Makita H."/>
            <person name="Sekine M."/>
            <person name="Obayashi M."/>
            <person name="Nishi T."/>
            <person name="Shibahara T."/>
            <person name="Tanaka T."/>
            <person name="Ishii S."/>
            <person name="Yamamoto J."/>
            <person name="Saito K."/>
            <person name="Kawai Y."/>
            <person name="Isono Y."/>
            <person name="Nakamura Y."/>
            <person name="Nagahari K."/>
            <person name="Murakami K."/>
            <person name="Yasuda T."/>
            <person name="Iwayanagi T."/>
            <person name="Wagatsuma M."/>
            <person name="Shiratori A."/>
            <person name="Sudo H."/>
            <person name="Hosoiri T."/>
            <person name="Kaku Y."/>
            <person name="Kodaira H."/>
            <person name="Kondo H."/>
            <person name="Sugawara M."/>
            <person name="Takahashi M."/>
            <person name="Kanda K."/>
            <person name="Yokoi T."/>
            <person name="Furuya T."/>
            <person name="Kikkawa E."/>
            <person name="Omura Y."/>
            <person name="Abe K."/>
            <person name="Kamihara K."/>
            <person name="Katsuta N."/>
            <person name="Sato K."/>
            <person name="Tanikawa M."/>
            <person name="Yamazaki M."/>
            <person name="Ninomiya K."/>
            <person name="Ishibashi T."/>
            <person name="Yamashita H."/>
            <person name="Murakawa K."/>
            <person name="Fujimori K."/>
            <person name="Tanai H."/>
            <person name="Kimata M."/>
            <person name="Watanabe M."/>
            <person name="Hiraoka S."/>
            <person name="Chiba Y."/>
            <person name="Ishida S."/>
            <person name="Ono Y."/>
            <person name="Takiguchi S."/>
            <person name="Watanabe S."/>
            <person name="Yosida M."/>
            <person name="Hotuta T."/>
            <person name="Kusano J."/>
            <person name="Kanehori K."/>
            <person name="Takahashi-Fujii A."/>
            <person name="Hara H."/>
            <person name="Tanase T.-O."/>
            <person name="Nomura Y."/>
            <person name="Togiya S."/>
            <person name="Komai F."/>
            <person name="Hara R."/>
            <person name="Takeuchi K."/>
            <person name="Arita M."/>
            <person name="Imose N."/>
            <person name="Musashino K."/>
            <person name="Yuuki H."/>
            <person name="Oshima A."/>
            <person name="Sasaki N."/>
            <person name="Aotsuka S."/>
            <person name="Yoshikawa Y."/>
            <person name="Matsunawa H."/>
            <person name="Ichihara T."/>
            <person name="Shiohata N."/>
            <person name="Sano S."/>
            <person name="Moriya S."/>
            <person name="Momiyama H."/>
            <person name="Satoh N."/>
            <person name="Takami S."/>
            <person name="Terashima Y."/>
            <person name="Suzuki O."/>
            <person name="Nakagawa S."/>
            <person name="Senoh A."/>
            <person name="Mizoguchi H."/>
            <person name="Goto Y."/>
            <person name="Shimizu F."/>
            <person name="Wakebe H."/>
            <person name="Hishigaki H."/>
            <person name="Watanabe T."/>
            <person name="Sugiyama A."/>
            <person name="Takemoto M."/>
            <person name="Kawakami B."/>
            <person name="Yamazaki M."/>
            <person name="Watanabe K."/>
            <person name="Kumagai A."/>
            <person name="Itakura S."/>
            <person name="Fukuzumi Y."/>
            <person name="Fujimori Y."/>
            <person name="Komiyama M."/>
            <person name="Tashiro H."/>
            <person name="Tanigami A."/>
            <person name="Fujiwara T."/>
            <person name="Ono T."/>
            <person name="Yamada K."/>
            <person name="Fujii Y."/>
            <person name="Ozaki K."/>
            <person name="Hirao M."/>
            <person name="Ohmori Y."/>
            <person name="Kawabata A."/>
            <person name="Hikiji T."/>
            <person name="Kobatake N."/>
            <person name="Inagaki H."/>
            <person name="Ikema Y."/>
            <person name="Okamoto S."/>
            <person name="Okitani R."/>
            <person name="Kawakami T."/>
            <person name="Noguchi S."/>
            <person name="Itoh T."/>
            <person name="Shigeta K."/>
            <person name="Senba T."/>
            <person name="Matsumura K."/>
            <person name="Nakajima Y."/>
            <person name="Mizuno T."/>
            <person name="Morinaga M."/>
            <person name="Sasaki M."/>
            <person name="Togashi T."/>
            <person name="Oyama M."/>
            <person name="Hata H."/>
            <person name="Watanabe M."/>
            <person name="Komatsu T."/>
            <person name="Mizushima-Sugano J."/>
            <person name="Satoh T."/>
            <person name="Shirai Y."/>
            <person name="Takahashi Y."/>
            <person name="Nakagawa K."/>
            <person name="Okumura K."/>
            <person name="Nagase T."/>
            <person name="Nomura N."/>
            <person name="Kikuchi H."/>
            <person name="Masuho Y."/>
            <person name="Yamashita R."/>
            <person name="Nakai K."/>
            <person name="Yada T."/>
            <person name="Nakamura Y."/>
            <person name="Ohara O."/>
            <person name="Isogai T."/>
            <person name="Sugano S."/>
        </authorList>
    </citation>
    <scope>NUCLEOTIDE SEQUENCE [LARGE SCALE MRNA] (ISOFORM 4)</scope>
    <source>
        <tissue>Corpus callosum</tissue>
    </source>
</reference>
<reference key="6">
    <citation type="journal article" date="2006" name="Nature">
        <title>The DNA sequence and biological annotation of human chromosome 1.</title>
        <authorList>
            <person name="Gregory S.G."/>
            <person name="Barlow K.F."/>
            <person name="McLay K.E."/>
            <person name="Kaul R."/>
            <person name="Swarbreck D."/>
            <person name="Dunham A."/>
            <person name="Scott C.E."/>
            <person name="Howe K.L."/>
            <person name="Woodfine K."/>
            <person name="Spencer C.C.A."/>
            <person name="Jones M.C."/>
            <person name="Gillson C."/>
            <person name="Searle S."/>
            <person name="Zhou Y."/>
            <person name="Kokocinski F."/>
            <person name="McDonald L."/>
            <person name="Evans R."/>
            <person name="Phillips K."/>
            <person name="Atkinson A."/>
            <person name="Cooper R."/>
            <person name="Jones C."/>
            <person name="Hall R.E."/>
            <person name="Andrews T.D."/>
            <person name="Lloyd C."/>
            <person name="Ainscough R."/>
            <person name="Almeida J.P."/>
            <person name="Ambrose K.D."/>
            <person name="Anderson F."/>
            <person name="Andrew R.W."/>
            <person name="Ashwell R.I.S."/>
            <person name="Aubin K."/>
            <person name="Babbage A.K."/>
            <person name="Bagguley C.L."/>
            <person name="Bailey J."/>
            <person name="Beasley H."/>
            <person name="Bethel G."/>
            <person name="Bird C.P."/>
            <person name="Bray-Allen S."/>
            <person name="Brown J.Y."/>
            <person name="Brown A.J."/>
            <person name="Buckley D."/>
            <person name="Burton J."/>
            <person name="Bye J."/>
            <person name="Carder C."/>
            <person name="Chapman J.C."/>
            <person name="Clark S.Y."/>
            <person name="Clarke G."/>
            <person name="Clee C."/>
            <person name="Cobley V."/>
            <person name="Collier R.E."/>
            <person name="Corby N."/>
            <person name="Coville G.J."/>
            <person name="Davies J."/>
            <person name="Deadman R."/>
            <person name="Dunn M."/>
            <person name="Earthrowl M."/>
            <person name="Ellington A.G."/>
            <person name="Errington H."/>
            <person name="Frankish A."/>
            <person name="Frankland J."/>
            <person name="French L."/>
            <person name="Garner P."/>
            <person name="Garnett J."/>
            <person name="Gay L."/>
            <person name="Ghori M.R.J."/>
            <person name="Gibson R."/>
            <person name="Gilby L.M."/>
            <person name="Gillett W."/>
            <person name="Glithero R.J."/>
            <person name="Grafham D.V."/>
            <person name="Griffiths C."/>
            <person name="Griffiths-Jones S."/>
            <person name="Grocock R."/>
            <person name="Hammond S."/>
            <person name="Harrison E.S.I."/>
            <person name="Hart E."/>
            <person name="Haugen E."/>
            <person name="Heath P.D."/>
            <person name="Holmes S."/>
            <person name="Holt K."/>
            <person name="Howden P.J."/>
            <person name="Hunt A.R."/>
            <person name="Hunt S.E."/>
            <person name="Hunter G."/>
            <person name="Isherwood J."/>
            <person name="James R."/>
            <person name="Johnson C."/>
            <person name="Johnson D."/>
            <person name="Joy A."/>
            <person name="Kay M."/>
            <person name="Kershaw J.K."/>
            <person name="Kibukawa M."/>
            <person name="Kimberley A.M."/>
            <person name="King A."/>
            <person name="Knights A.J."/>
            <person name="Lad H."/>
            <person name="Laird G."/>
            <person name="Lawlor S."/>
            <person name="Leongamornlert D.A."/>
            <person name="Lloyd D.M."/>
            <person name="Loveland J."/>
            <person name="Lovell J."/>
            <person name="Lush M.J."/>
            <person name="Lyne R."/>
            <person name="Martin S."/>
            <person name="Mashreghi-Mohammadi M."/>
            <person name="Matthews L."/>
            <person name="Matthews N.S.W."/>
            <person name="McLaren S."/>
            <person name="Milne S."/>
            <person name="Mistry S."/>
            <person name="Moore M.J.F."/>
            <person name="Nickerson T."/>
            <person name="O'Dell C.N."/>
            <person name="Oliver K."/>
            <person name="Palmeiri A."/>
            <person name="Palmer S.A."/>
            <person name="Parker A."/>
            <person name="Patel D."/>
            <person name="Pearce A.V."/>
            <person name="Peck A.I."/>
            <person name="Pelan S."/>
            <person name="Phelps K."/>
            <person name="Phillimore B.J."/>
            <person name="Plumb R."/>
            <person name="Rajan J."/>
            <person name="Raymond C."/>
            <person name="Rouse G."/>
            <person name="Saenphimmachak C."/>
            <person name="Sehra H.K."/>
            <person name="Sheridan E."/>
            <person name="Shownkeen R."/>
            <person name="Sims S."/>
            <person name="Skuce C.D."/>
            <person name="Smith M."/>
            <person name="Steward C."/>
            <person name="Subramanian S."/>
            <person name="Sycamore N."/>
            <person name="Tracey A."/>
            <person name="Tromans A."/>
            <person name="Van Helmond Z."/>
            <person name="Wall M."/>
            <person name="Wallis J.M."/>
            <person name="White S."/>
            <person name="Whitehead S.L."/>
            <person name="Wilkinson J.E."/>
            <person name="Willey D.L."/>
            <person name="Williams H."/>
            <person name="Wilming L."/>
            <person name="Wray P.W."/>
            <person name="Wu Z."/>
            <person name="Coulson A."/>
            <person name="Vaudin M."/>
            <person name="Sulston J.E."/>
            <person name="Durbin R.M."/>
            <person name="Hubbard T."/>
            <person name="Wooster R."/>
            <person name="Dunham I."/>
            <person name="Carter N.P."/>
            <person name="McVean G."/>
            <person name="Ross M.T."/>
            <person name="Harrow J."/>
            <person name="Olson M.V."/>
            <person name="Beck S."/>
            <person name="Rogers J."/>
            <person name="Bentley D.R."/>
        </authorList>
    </citation>
    <scope>NUCLEOTIDE SEQUENCE [LARGE SCALE GENOMIC DNA]</scope>
</reference>
<reference key="7">
    <citation type="submission" date="2005-09" db="EMBL/GenBank/DDBJ databases">
        <authorList>
            <person name="Mural R.J."/>
            <person name="Istrail S."/>
            <person name="Sutton G.G."/>
            <person name="Florea L."/>
            <person name="Halpern A.L."/>
            <person name="Mobarry C.M."/>
            <person name="Lippert R."/>
            <person name="Walenz B."/>
            <person name="Shatkay H."/>
            <person name="Dew I."/>
            <person name="Miller J.R."/>
            <person name="Flanigan M.J."/>
            <person name="Edwards N.J."/>
            <person name="Bolanos R."/>
            <person name="Fasulo D."/>
            <person name="Halldorsson B.V."/>
            <person name="Hannenhalli S."/>
            <person name="Turner R."/>
            <person name="Yooseph S."/>
            <person name="Lu F."/>
            <person name="Nusskern D.R."/>
            <person name="Shue B.C."/>
            <person name="Zheng X.H."/>
            <person name="Zhong F."/>
            <person name="Delcher A.L."/>
            <person name="Huson D.H."/>
            <person name="Kravitz S.A."/>
            <person name="Mouchard L."/>
            <person name="Reinert K."/>
            <person name="Remington K.A."/>
            <person name="Clark A.G."/>
            <person name="Waterman M.S."/>
            <person name="Eichler E.E."/>
            <person name="Adams M.D."/>
            <person name="Hunkapiller M.W."/>
            <person name="Myers E.W."/>
            <person name="Venter J.C."/>
        </authorList>
    </citation>
    <scope>NUCLEOTIDE SEQUENCE [LARGE SCALE GENOMIC DNA]</scope>
</reference>
<reference key="8">
    <citation type="journal article" date="2004" name="Genome Res.">
        <title>The status, quality, and expansion of the NIH full-length cDNA project: the Mammalian Gene Collection (MGC).</title>
        <authorList>
            <consortium name="The MGC Project Team"/>
        </authorList>
    </citation>
    <scope>NUCLEOTIDE SEQUENCE [LARGE SCALE MRNA] (ISOFORMS A AND C)</scope>
    <source>
        <tissue>Kidney</tissue>
        <tissue>Lung</tissue>
        <tissue>Skin</tissue>
    </source>
</reference>
<reference key="9">
    <citation type="submission" date="2009-10" db="UniProtKB">
        <authorList>
            <person name="Bienvenut W.V."/>
            <person name="Lilla S."/>
            <person name="von Kriegsheim A."/>
            <person name="Lempens A."/>
            <person name="Kolch W."/>
            <person name="Norman J.C."/>
        </authorList>
    </citation>
    <scope>PROTEIN SEQUENCE OF 12-25; 29-90; 102-117; 120-166; 172-189; 197-216; 226-233; 241-260; 281-316; 320-329; 352-386; 440-453; 456-482; 472-482; 516-542; 585-624 AND 628-644</scope>
    <scope>PHOSPHORYLATION AT SER-22</scope>
    <scope>IDENTIFICATION BY MASS SPECTROMETRY</scope>
    <source>
        <tissue>Ovarian carcinoma</tissue>
    </source>
</reference>
<reference key="10">
    <citation type="journal article" date="1996" name="J. Biol. Chem.">
        <title>An alternative splicing product of the lamin A/C gene lacks exon 10.</title>
        <authorList>
            <person name="Machiels B.M."/>
            <person name="Zorenc A.H."/>
            <person name="Endert J.M."/>
            <person name="Kuijpers H.J."/>
            <person name="van Eys G.J."/>
            <person name="Ramaekers F.C."/>
            <person name="Broers J.L."/>
        </authorList>
    </citation>
    <scope>NUCLEOTIDE SEQUENCE [MRNA] OF 375-664 (ISOFORM ADELTA10)</scope>
    <source>
        <tissue>Colon</tissue>
    </source>
</reference>
<reference key="11">
    <citation type="journal article" date="1990" name="Cell">
        <title>Mutations of phosphorylation sites in lamin A that prevent nuclear lamina disassembly in mitosis.</title>
        <authorList>
            <person name="Heald R."/>
            <person name="McKeon F."/>
        </authorList>
    </citation>
    <scope>FUNCTION</scope>
    <scope>SUBCELLULAR LOCATION</scope>
    <scope>PHOSPHORYLATION AT SER-22 AND SER-392</scope>
    <scope>MUTAGENESIS OF 20-PRO--PRO-23; SER-22; ARG-28; LYS-32; ARG-41; ILE-373; ALA-375; ARG-377; GLU-381; GLU-384; ARG-386; 391-PRO--PRO-393 AND SER-392</scope>
</reference>
<reference key="12">
    <citation type="journal article" date="1990" name="Cell">
        <title>Identification of cell cycle-regulated phosphorylation sites on nuclear lamin C.</title>
        <authorList>
            <person name="Ward G.E."/>
            <person name="Kirschner M.W."/>
        </authorList>
    </citation>
    <scope>FUNCTION</scope>
    <scope>SUBCELLULAR LOCATION</scope>
    <scope>PHOSPHORYLATION AT SER-22; SER-392 AND SER-404</scope>
</reference>
<reference key="13">
    <citation type="journal article" date="1994" name="J. Cell Sci.">
        <title>The processing pathway of prelamin A.</title>
        <authorList>
            <person name="Sinensky M."/>
            <person name="Fantle K."/>
            <person name="Trujillo M."/>
            <person name="McLain T."/>
            <person name="Kupfer A."/>
            <person name="Dalton M."/>
        </authorList>
    </citation>
    <scope>PROTEOLYTIC CLEAVAGE</scope>
    <scope>ISOPRENYLATION AT CYS-661</scope>
    <scope>METHYLATION AT CYS-661</scope>
</reference>
<reference key="14">
    <citation type="journal article" date="1997" name="J. Biol. Chem.">
        <title>In vitro assay and characterization of the farnesylation-dependent prelamin A endoprotease.</title>
        <authorList>
            <person name="Kilic F."/>
            <person name="Dalton M.B."/>
            <person name="Burrell S.K."/>
            <person name="Mayer J.P."/>
            <person name="Patterson S.D."/>
            <person name="Sinensky M."/>
        </authorList>
    </citation>
    <scope>PROTEOLYTIC CLEAVAGE</scope>
    <scope>ISOPRENYLATION AT CYS-661</scope>
    <scope>METHYLATION AT CYS-661</scope>
</reference>
<reference key="15">
    <citation type="journal article" date="1999" name="Int. J. Cancer">
        <title>Antigens recognized by autologous antibody in patients with renal-cell carcinoma.</title>
        <authorList>
            <person name="Scanlan M.J."/>
            <person name="Gordan J.D."/>
            <person name="Williamson B."/>
            <person name="Stockert E."/>
            <person name="Bander N.H."/>
            <person name="Jongeneel C.V."/>
            <person name="Gure A.O."/>
            <person name="Jaeger D."/>
            <person name="Jaeger E."/>
            <person name="Knuth A."/>
            <person name="Chen Y.-T."/>
            <person name="Old L.J."/>
        </authorList>
    </citation>
    <scope>IDENTIFICATION AS A RENAL CANCER ANTIGEN</scope>
    <source>
        <tissue>Renal cell carcinoma</tissue>
    </source>
</reference>
<reference key="16">
    <citation type="journal article" date="1999" name="J. Biol. Chem.">
        <title>Prenylated prelamin A interacts with Narf, a novel nuclear protein.</title>
        <authorList>
            <person name="Barton R.M."/>
            <person name="Worman H.J."/>
        </authorList>
    </citation>
    <scope>INTERACTION WITH NARF</scope>
    <scope>MUTAGENESIS OF CYS-661</scope>
</reference>
<reference key="17">
    <citation type="journal article" date="2002" name="Mol. Biol. Cell">
        <title>Lamin A/C binding protein LAP2alpha is required for nuclear anchorage of retinoblastoma protein.</title>
        <authorList>
            <person name="Markiewicz E."/>
            <person name="Dechat T."/>
            <person name="Foisner R."/>
            <person name="Quinlan R.A."/>
            <person name="Hutchison C.J."/>
        </authorList>
    </citation>
    <scope>INTERACTION WITH TMPO-ALPHA AND RB1</scope>
</reference>
<reference key="18">
    <citation type="journal article" date="2003" name="Nature">
        <title>Recurrent de novo point mutations in lamin A cause Hutchinson-Gilford progeria syndrome.</title>
        <authorList>
            <person name="Eriksson M."/>
            <person name="Brown W.T."/>
            <person name="Gordon L.B."/>
            <person name="Glynn M.W."/>
            <person name="Singer J."/>
            <person name="Scott L."/>
            <person name="Erdos M.R."/>
            <person name="Robbins C.M."/>
            <person name="Moses T.Y."/>
            <person name="Berglund P."/>
            <person name="Dutra A."/>
            <person name="Pak E."/>
            <person name="Durkin S."/>
            <person name="Csoka A.B."/>
            <person name="Boehnke M."/>
            <person name="Glover T.W."/>
            <person name="Collins F.S."/>
        </authorList>
    </citation>
    <scope>ALTERNATIVE SPLICING</scope>
    <scope>INVOLVEMENT IN HGPS (ISOFORM 6)</scope>
    <scope>VARIANTS HGPS LYS-145 AND SER-608</scope>
</reference>
<reference key="19">
    <citation type="journal article" date="2005" name="J. Cell Sci.">
        <title>LEM2 is a novel MAN1-related inner nuclear membrane protein associated with A-type lamins.</title>
        <authorList>
            <person name="Brachner A."/>
            <person name="Reipert S."/>
            <person name="Foisner R."/>
            <person name="Gotzmann J."/>
        </authorList>
    </citation>
    <scope>INTERACTION WITH LEMD2 (ISOFORM C)</scope>
</reference>
<reference key="20">
    <citation type="journal article" date="2006" name="Cell">
        <title>Global, in vivo, and site-specific phosphorylation dynamics in signaling networks.</title>
        <authorList>
            <person name="Olsen J.V."/>
            <person name="Blagoev B."/>
            <person name="Gnad F."/>
            <person name="Macek B."/>
            <person name="Kumar C."/>
            <person name="Mortensen P."/>
            <person name="Mann M."/>
        </authorList>
    </citation>
    <scope>PHOSPHORYLATION [LARGE SCALE ANALYSIS] AT SER-277</scope>
    <scope>IDENTIFICATION BY MASS SPECTROMETRY [LARGE SCALE ANALYSIS]</scope>
    <source>
        <tissue>Cervix carcinoma</tissue>
    </source>
</reference>
<reference key="21">
    <citation type="journal article" date="2006" name="Nat. Biotechnol.">
        <title>A probability-based approach for high-throughput protein phosphorylation analysis and site localization.</title>
        <authorList>
            <person name="Beausoleil S.A."/>
            <person name="Villen J."/>
            <person name="Gerber S.A."/>
            <person name="Rush J."/>
            <person name="Gygi S.P."/>
        </authorList>
    </citation>
    <scope>PHOSPHORYLATION [LARGE SCALE ANALYSIS] AT THR-19; SER-22; SER-390; SER-392; SER-395; SER-628; SER-632 AND SER-636</scope>
    <scope>IDENTIFICATION BY MASS SPECTROMETRY [LARGE SCALE ANALYSIS]</scope>
    <source>
        <tissue>Cervix carcinoma</tissue>
    </source>
</reference>
<reference key="22">
    <citation type="journal article" date="2007" name="J. Proteome Res.">
        <title>Improved titanium dioxide enrichment of phosphopeptides from HeLa cells and high confident phosphopeptide identification by cross-validation of MS/MS and MS/MS/MS spectra.</title>
        <authorList>
            <person name="Yu L.R."/>
            <person name="Zhu Z."/>
            <person name="Chan K.C."/>
            <person name="Issaq H.J."/>
            <person name="Dimitrov D.S."/>
            <person name="Veenstra T.D."/>
        </authorList>
    </citation>
    <scope>PHOSPHORYLATION [LARGE SCALE ANALYSIS] AT SER-628</scope>
    <scope>IDENTIFICATION BY MASS SPECTROMETRY [LARGE SCALE ANALYSIS]</scope>
    <source>
        <tissue>Cervix carcinoma</tissue>
    </source>
</reference>
<reference key="23">
    <citation type="journal article" date="2008" name="J. Cell Biol.">
        <title>Sumoylation regulates lamin A function and is lost in lamin A mutants associated with familial cardiomyopathies.</title>
        <authorList>
            <person name="Zhang Y.Q."/>
            <person name="Sarge K.D."/>
        </authorList>
    </citation>
    <scope>SUBCELLULAR LOCATION</scope>
    <scope>SUMOYLATION AT LYS-201</scope>
    <scope>MUTAGENESIS OF LYS-201</scope>
    <scope>CHARACTERIZATION OF VARIANTS CMD1A GLY-203 AND LYS-203</scope>
</reference>
<reference key="24">
    <citation type="journal article" date="2008" name="J. Proteome Res.">
        <title>Combining protein-based IMAC, peptide-based IMAC, and MudPIT for efficient phosphoproteomic analysis.</title>
        <authorList>
            <person name="Cantin G.T."/>
            <person name="Yi W."/>
            <person name="Lu B."/>
            <person name="Park S.K."/>
            <person name="Xu T."/>
            <person name="Lee J.-D."/>
            <person name="Yates J.R. III"/>
        </authorList>
    </citation>
    <scope>PHOSPHORYLATION [LARGE SCALE ANALYSIS] AT SER-628</scope>
    <scope>IDENTIFICATION BY MASS SPECTROMETRY [LARGE SCALE ANALYSIS]</scope>
    <source>
        <tissue>Cervix carcinoma</tissue>
    </source>
</reference>
<reference key="25">
    <citation type="journal article" date="2008" name="Mol. Cell">
        <title>Kinase-selective enrichment enables quantitative phosphoproteomics of the kinome across the cell cycle.</title>
        <authorList>
            <person name="Daub H."/>
            <person name="Olsen J.V."/>
            <person name="Bairlein M."/>
            <person name="Gnad F."/>
            <person name="Oppermann F.S."/>
            <person name="Korner R."/>
            <person name="Greff Z."/>
            <person name="Keri G."/>
            <person name="Stemmann O."/>
            <person name="Mann M."/>
        </authorList>
    </citation>
    <scope>PHOSPHORYLATION [LARGE SCALE ANALYSIS] AT SER-632</scope>
    <scope>IDENTIFICATION BY MASS SPECTROMETRY [LARGE SCALE ANALYSIS]</scope>
    <source>
        <tissue>Cervix carcinoma</tissue>
    </source>
</reference>
<reference key="26">
    <citation type="journal article" date="2008" name="Proc. Natl. Acad. Sci. U.S.A.">
        <title>A quantitative atlas of mitotic phosphorylation.</title>
        <authorList>
            <person name="Dephoure N."/>
            <person name="Zhou C."/>
            <person name="Villen J."/>
            <person name="Beausoleil S.A."/>
            <person name="Bakalarski C.E."/>
            <person name="Elledge S.J."/>
            <person name="Gygi S.P."/>
        </authorList>
    </citation>
    <scope>PHOSPHORYLATION [LARGE SCALE ANALYSIS] AT SER-12; SER-18; THR-19; SER-22; SER-301; SER-390; SER-392; SER-395; SER-458; SER-628; SER-632; SER-636 AND SER-652</scope>
    <scope>IDENTIFICATION BY MASS SPECTROMETRY [LARGE SCALE ANALYSIS]</scope>
    <source>
        <tissue>Cervix carcinoma</tissue>
    </source>
</reference>
<reference key="27">
    <citation type="journal article" date="2009" name="Anal. Chem.">
        <title>Lys-N and trypsin cover complementary parts of the phosphoproteome in a refined SCX-based approach.</title>
        <authorList>
            <person name="Gauci S."/>
            <person name="Helbig A.O."/>
            <person name="Slijper M."/>
            <person name="Krijgsveld J."/>
            <person name="Heck A.J."/>
            <person name="Mohammed S."/>
        </authorList>
    </citation>
    <scope>IDENTIFICATION BY MASS SPECTROMETRY [LARGE SCALE ANALYSIS]</scope>
</reference>
<reference key="28">
    <citation type="journal article" date="2009" name="Biol. Cell">
        <title>Emerin-prelamin A interplay in human fibroblasts.</title>
        <authorList>
            <person name="Capanni C."/>
            <person name="Del Coco R."/>
            <person name="Mattioli E."/>
            <person name="Camozzi D."/>
            <person name="Columbaro M."/>
            <person name="Schena E."/>
            <person name="Merlini L."/>
            <person name="Squarzoni S."/>
            <person name="Maraldi N.M."/>
            <person name="Lattanzi G."/>
        </authorList>
    </citation>
    <scope>SUBCELLULAR LOCATION</scope>
    <scope>INTERACTION WITH EMD</scope>
</reference>
<reference key="29">
    <citation type="journal article" date="2009" name="J. Cell. Mol. Med.">
        <title>The R439C mutation in LMNA causes lamin oligomerization and susceptibility to oxidative stress.</title>
        <authorList>
            <person name="Verstraeten V.L."/>
            <person name="Caputo S."/>
            <person name="van Steensel M.A."/>
            <person name="Duband-Goulet I."/>
            <person name="Zinn-Justin S."/>
            <person name="Kamps M."/>
            <person name="Kuijpers H.J."/>
            <person name="Ostlund C."/>
            <person name="Worman H.J."/>
            <person name="Briede J.J."/>
            <person name="Le Dour C."/>
            <person name="Marcelis C.L."/>
            <person name="van Geel M."/>
            <person name="Steijlen P.M."/>
            <person name="van den Wijngaard A."/>
            <person name="Ramaekers F.C."/>
            <person name="Broers J.L."/>
        </authorList>
    </citation>
    <scope>SUBCELLULAR LOCATION</scope>
    <scope>CHARACTERIZATION OF VARIANTS FPLD2 CYS-439 AND TRP-482</scope>
</reference>
<reference key="30">
    <citation type="journal article" date="2009" name="Science">
        <title>Lysine acetylation targets protein complexes and co-regulates major cellular functions.</title>
        <authorList>
            <person name="Choudhary C."/>
            <person name="Kumar C."/>
            <person name="Gnad F."/>
            <person name="Nielsen M.L."/>
            <person name="Rehman M."/>
            <person name="Walther T.C."/>
            <person name="Olsen J.V."/>
            <person name="Mann M."/>
        </authorList>
    </citation>
    <scope>ACETYLATION [LARGE SCALE ANALYSIS] AT LYS-108; LYS-270; LYS-311 AND LYS-450</scope>
    <scope>IDENTIFICATION BY MASS SPECTROMETRY [LARGE SCALE ANALYSIS]</scope>
</reference>
<reference key="31">
    <citation type="journal article" date="2010" name="Biochim. Biophys. Acta">
        <title>Increased plasticity of the nuclear envelope and hypermobility of telomeres due to the loss of A-type lamins.</title>
        <authorList>
            <person name="De Vos W.H."/>
            <person name="Houben F."/>
            <person name="Hoebe R.A."/>
            <person name="Hennekam R."/>
            <person name="van Engelen B."/>
            <person name="Manders E.M."/>
            <person name="Ramaekers F.C."/>
            <person name="Broers J.L."/>
            <person name="Van Oostveldt P."/>
        </authorList>
    </citation>
    <scope>FUNCTION</scope>
</reference>
<reference key="32">
    <citation type="journal article" date="2010" name="Circ. Cardiovasc. Genet.">
        <title>Morphological analysis of 13 LMNA variants identified in a cohort of 324 unrelated patients with idiopathic or familial dilated cardiomyopathy.</title>
        <authorList>
            <person name="Cowan J."/>
            <person name="Li D."/>
            <person name="Gonzalez-Quintana J."/>
            <person name="Morales A."/>
            <person name="Hershberger R.E."/>
        </authorList>
    </citation>
    <scope>SUBCELLULAR LOCATION</scope>
    <scope>VARIANTS CMD1A LEU-89; PRO-101; PRO-166; GLN-190; LYS-203; SER-210; PRO-215; THR-318; HIS-388; CYS-399 AND HIS-471</scope>
</reference>
<reference key="33">
    <citation type="journal article" date="2010" name="Circulation">
        <title>Prelamin A acts to accelerate smooth muscle cell senescence and is a novel biomarker of human vascular aging.</title>
        <authorList>
            <person name="Ragnauth C.D."/>
            <person name="Warren D.T."/>
            <person name="Liu Y."/>
            <person name="McNair R."/>
            <person name="Tajsic T."/>
            <person name="Figg N."/>
            <person name="Shroff R."/>
            <person name="Skepper J."/>
            <person name="Shanahan C.M."/>
        </authorList>
    </citation>
    <scope>FUNCTION</scope>
    <scope>PROTEOLYTIC PROCESSING</scope>
    <scope>TISSUE SPECIFICITY</scope>
</reference>
<reference key="34">
    <citation type="journal article" date="2010" name="J. Biol. Chem.">
        <title>Mammalian SUN protein interaction networks at the inner nuclear membrane and their role in laminopathy disease processes.</title>
        <authorList>
            <person name="Haque F."/>
            <person name="Mazzeo D."/>
            <person name="Patel J.T."/>
            <person name="Smallwood D.T."/>
            <person name="Ellis J.A."/>
            <person name="Shanahan C.M."/>
            <person name="Shackleton S."/>
        </authorList>
    </citation>
    <scope>INTERACTION WITH SUN1</scope>
    <scope>CHARACTERIZATION OF VARIANTS EDMD2 PRO-527 AND PRO-530</scope>
    <scope>CHARACTERIZATION OF VARIANT HGPS SER-608</scope>
</reference>
<reference key="35">
    <citation type="journal article" date="2010" name="Sci. Signal.">
        <title>Quantitative phosphoproteomics reveals widespread full phosphorylation site occupancy during mitosis.</title>
        <authorList>
            <person name="Olsen J.V."/>
            <person name="Vermeulen M."/>
            <person name="Santamaria A."/>
            <person name="Kumar C."/>
            <person name="Miller M.L."/>
            <person name="Jensen L.J."/>
            <person name="Gnad F."/>
            <person name="Cox J."/>
            <person name="Jensen T.S."/>
            <person name="Nigg E.A."/>
            <person name="Brunak S."/>
            <person name="Mann M."/>
        </authorList>
    </citation>
    <scope>ACETYLATION [LARGE SCALE ANALYSIS] AT MET-1</scope>
    <scope>PHOSPHORYLATION [LARGE SCALE ANALYSIS] AT THR-3; SER-12; THR-19; SER-22; SER-212; SER-277; SER-301; SER-390; SER-392; SER-395; SER-404; SER-414; SER-431; SER-458; SER-463; THR-505; SER-628; SER-632; SER-636 AND SER-652</scope>
    <scope>IDENTIFICATION BY MASS SPECTROMETRY [LARGE SCALE ANALYSIS]</scope>
    <source>
        <tissue>Cervix carcinoma</tissue>
    </source>
</reference>
<reference key="36">
    <citation type="journal article" date="2011" name="BMC Syst. Biol.">
        <title>Initial characterization of the human central proteome.</title>
        <authorList>
            <person name="Burkard T.R."/>
            <person name="Planyavsky M."/>
            <person name="Kaupe I."/>
            <person name="Breitwieser F.P."/>
            <person name="Buerckstuemmer T."/>
            <person name="Bennett K.L."/>
            <person name="Superti-Furga G."/>
            <person name="Colinge J."/>
        </authorList>
    </citation>
    <scope>IDENTIFICATION BY MASS SPECTROMETRY [LARGE SCALE ANALYSIS]</scope>
</reference>
<reference key="37">
    <citation type="journal article" date="2011" name="J. Biol. Chem.">
        <title>Identification of a novel muscle enriched A-type Lamin interacting protein (MLIP).</title>
        <authorList>
            <person name="Ahmady E."/>
            <person name="Deeke S.A."/>
            <person name="Rabaa S."/>
            <person name="Kouri L."/>
            <person name="Kenney L."/>
            <person name="Stewart A.F."/>
            <person name="Burgon P.G."/>
        </authorList>
    </citation>
    <scope>INTERACTION WITH MLIP</scope>
</reference>
<reference key="38">
    <citation type="journal article" date="2011" name="Sci. Signal.">
        <title>System-wide temporal characterization of the proteome and phosphoproteome of human embryonic stem cell differentiation.</title>
        <authorList>
            <person name="Rigbolt K.T."/>
            <person name="Prokhorova T.A."/>
            <person name="Akimov V."/>
            <person name="Henningsen J."/>
            <person name="Johansen P.T."/>
            <person name="Kratchmarova I."/>
            <person name="Kassem M."/>
            <person name="Mann M."/>
            <person name="Olsen J.V."/>
            <person name="Blagoev B."/>
        </authorList>
    </citation>
    <scope>PHOSPHORYLATION [LARGE SCALE ANALYSIS] AT SER-390; SER-392; SER-404; SER-414; SER-458 AND SER-636</scope>
    <scope>IDENTIFICATION BY MASS SPECTROMETRY [LARGE SCALE ANALYSIS]</scope>
</reference>
<reference key="39">
    <citation type="journal article" date="2012" name="PLoS ONE">
        <title>Requirements for efficient proteolytic cleavage of prelamin A by ZMPSTE24.</title>
        <authorList>
            <person name="Barrowman J."/>
            <person name="Hamblet C."/>
            <person name="Kane M.S."/>
            <person name="Michaelis S."/>
        </authorList>
    </citation>
    <scope>MUTAGENESIS OF ARG-644; LEU-647; LEU-648; ASN-650 AND CYS-661</scope>
    <scope>CHARACTERIZATION OF VARIANT HGPS CYS-644</scope>
</reference>
<reference key="40">
    <citation type="journal article" date="2013" name="Am. J. Med. Genet. A">
        <title>LMNA-associated cardiocutaneous progeria: An inherited autosomal dominant premature aging syndrome with late onset.</title>
        <authorList>
            <person name="Kane M.S."/>
            <person name="Lindsay M.E."/>
            <person name="Judge D.P."/>
            <person name="Barrowman J."/>
            <person name="Ap Rhys C."/>
            <person name="Simonson L."/>
            <person name="Dietz H.C."/>
            <person name="Michaelis S."/>
        </authorList>
    </citation>
    <scope>FUNCTION</scope>
    <scope>SUBCELLULAR LOCATION</scope>
    <scope>INVOLVEMENT IN HGPS</scope>
    <scope>VARIANT HGPS GLY-300</scope>
    <scope>CHARACTERIZATION OF VARIANT HGPS GLY-300</scope>
</reference>
<reference key="41">
    <citation type="journal article" date="2013" name="J. Proteome Res.">
        <title>Toward a comprehensive characterization of a human cancer cell phosphoproteome.</title>
        <authorList>
            <person name="Zhou H."/>
            <person name="Di Palma S."/>
            <person name="Preisinger C."/>
            <person name="Peng M."/>
            <person name="Polat A.N."/>
            <person name="Heck A.J."/>
            <person name="Mohammed S."/>
        </authorList>
    </citation>
    <scope>PHOSPHORYLATION [LARGE SCALE ANALYSIS] AT SER-12; THR-19; SER-22; SER-51; SER-66; SER-71; SER-107; SER-212; SER-301; SER-390; SER-392; SER-398; SER-429; SER-458; SER-463; SER-533; SER-613; SER-619; SER-628; SER-632 AND SER-636</scope>
    <scope>IDENTIFICATION BY MASS SPECTROMETRY [LARGE SCALE ANALYSIS]</scope>
    <source>
        <tissue>Cervix carcinoma</tissue>
        <tissue>Erythroleukemia</tissue>
    </source>
</reference>
<reference key="42">
    <citation type="journal article" date="2013" name="Nat. Commun.">
        <title>Depleting the methyltransferase Suv39h1 improves DNA repair and extends lifespan in a progeria mouse model.</title>
        <authorList>
            <person name="Liu B."/>
            <person name="Wang Z."/>
            <person name="Zhang L."/>
            <person name="Ghosh S."/>
            <person name="Zheng H."/>
            <person name="Zhou Z."/>
        </authorList>
    </citation>
    <scope>SUBCELLULAR LOCATION</scope>
    <scope>INTERACTION WITH SUV39H1</scope>
</reference>
<reference key="43">
    <citation type="journal article" date="2011" name="J. Biol. Chem.">
        <title>Myotonic dystrophy protein kinase is critical for nuclear envelope integrity.</title>
        <authorList>
            <person name="Harmon E.B."/>
            <person name="Harmon M.L."/>
            <person name="Larsen T.D."/>
            <person name="Yang J."/>
            <person name="Glasford J.W."/>
            <person name="Perryman M.B."/>
        </authorList>
    </citation>
    <scope>INTERACTION WITH DMPK</scope>
</reference>
<reference key="44">
    <citation type="journal article" date="2013" name="Science">
        <title>Nuclear lamin-A scales with tissue stiffness and enhances matrix-directed differentiation.</title>
        <authorList>
            <person name="Swift J."/>
            <person name="Ivanovska I.L."/>
            <person name="Buxboim A."/>
            <person name="Harada T."/>
            <person name="Dingal P.C."/>
            <person name="Pinter J."/>
            <person name="Pajerowski J.D."/>
            <person name="Spinler K.R."/>
            <person name="Shin J.W."/>
            <person name="Tewari M."/>
            <person name="Rehfeldt F."/>
            <person name="Speicher D.W."/>
            <person name="Discher D.E."/>
        </authorList>
    </citation>
    <scope>FUNCTION</scope>
</reference>
<reference key="45">
    <citation type="journal article" date="2014" name="Curr. Biol.">
        <title>Matrix elasticity regulates lamin-A,C phosphorylation and turnover with feedback to actomyosin.</title>
        <authorList>
            <person name="Buxboim A."/>
            <person name="Swift J."/>
            <person name="Irianto J."/>
            <person name="Spinler K.R."/>
            <person name="Dingal P.C."/>
            <person name="Athirasala A."/>
            <person name="Kao Y.R."/>
            <person name="Cho S."/>
            <person name="Harada T."/>
            <person name="Shin J.W."/>
            <person name="Discher D.E."/>
        </authorList>
    </citation>
    <scope>FUNCTION</scope>
    <scope>PHOSPHORYLATION AT SER-22; SER-390 AND SER-392</scope>
    <scope>MUTAGENESIS OF SER-22</scope>
</reference>
<reference key="46">
    <citation type="journal article" date="2014" name="J. Cell Sci.">
        <title>Interphase phosphorylation of lamin A.</title>
        <authorList>
            <person name="Kochin V."/>
            <person name="Shimi T."/>
            <person name="Torvaldson E."/>
            <person name="Adam S.A."/>
            <person name="Goldman A."/>
            <person name="Pack C.G."/>
            <person name="Melo-Cardenas J."/>
            <person name="Imanishi S.Y."/>
            <person name="Goldman R.D."/>
            <person name="Eriksson J.E."/>
        </authorList>
    </citation>
    <scope>FUNCTION</scope>
    <scope>SUBCELLULAR LOCATION</scope>
    <scope>PHOSPHORYLATION AT THR-3; SER-5; THR-10; SER-12; SER-18; THR-19; SER-22; SER-390; SER-392; SER-403; SER-404; SER-406; SER-407; THR-416; SER-423; SER-426; SER-458; SER-628; SER-636 AND SER-652</scope>
    <scope>MUTAGENESIS OF SER-22; SER-390; SER-392; 404-SER--SER-407 AND SER-628</scope>
</reference>
<reference key="47">
    <citation type="journal article" date="2014" name="J. Proteomics">
        <title>An enzyme assisted RP-RPLC approach for in-depth analysis of human liver phosphoproteome.</title>
        <authorList>
            <person name="Bian Y."/>
            <person name="Song C."/>
            <person name="Cheng K."/>
            <person name="Dong M."/>
            <person name="Wang F."/>
            <person name="Huang J."/>
            <person name="Sun D."/>
            <person name="Wang L."/>
            <person name="Ye M."/>
            <person name="Zou H."/>
        </authorList>
    </citation>
    <scope>PHOSPHORYLATION [LARGE SCALE ANALYSIS] AT SER-12; THR-19; SER-22; SER-212; SER-301; SER-307; SER-390; SER-395; SER-403; SER-404; SER-414; SER-458; SER-463; SER-612 AND SER-636</scope>
    <scope>IDENTIFICATION BY MASS SPECTROMETRY [LARGE SCALE ANALYSIS]</scope>
    <source>
        <tissue>Liver</tissue>
    </source>
</reference>
<reference key="48">
    <citation type="journal article" date="2014" name="Nat. Struct. Mol. Biol.">
        <title>Uncovering global SUMOylation signaling networks in a site-specific manner.</title>
        <authorList>
            <person name="Hendriks I.A."/>
            <person name="D'Souza R.C."/>
            <person name="Yang B."/>
            <person name="Verlaan-de Vries M."/>
            <person name="Mann M."/>
            <person name="Vertegaal A.C."/>
        </authorList>
    </citation>
    <scope>SUMOYLATION [LARGE SCALE ANALYSIS] AT LYS-97; LYS-208; LYS-233; LYS-311; LYS-378; LYS-417 AND LYS-420</scope>
    <scope>IDENTIFICATION BY MASS SPECTROMETRY [LARGE SCALE ANALYSIS]</scope>
</reference>
<reference key="49">
    <citation type="journal article" date="2014" name="Proc. Natl. Acad. Sci. U.S.A.">
        <title>Mapping of SUMO sites and analysis of SUMOylation changes induced by external stimuli.</title>
        <authorList>
            <person name="Impens F."/>
            <person name="Radoshevich L."/>
            <person name="Cossart P."/>
            <person name="Ribet D."/>
        </authorList>
    </citation>
    <scope>SUMOYLATION [LARGE SCALE ANALYSIS] AT LYS-233 AND LYS-597</scope>
    <scope>IDENTIFICATION BY MASS SPECTROMETRY [LARGE SCALE ANALYSIS]</scope>
</reference>
<reference key="50">
    <citation type="journal article" date="2015" name="Cell Rep.">
        <title>SUMO-2 orchestrates chromatin modifiers in response to DNA damage.</title>
        <authorList>
            <person name="Hendriks I.A."/>
            <person name="Treffers L.W."/>
            <person name="Verlaan-de Vries M."/>
            <person name="Olsen J.V."/>
            <person name="Vertegaal A.C."/>
        </authorList>
    </citation>
    <scope>SUMOYLATION [LARGE SCALE ANALYSIS] AT LYS-97; LYS-311; LYS-378 AND LYS-420</scope>
    <scope>IDENTIFICATION BY MASS SPECTROMETRY [LARGE SCALE ANALYSIS]</scope>
</reference>
<reference key="51">
    <citation type="journal article" date="2015" name="Mol. Cell. Proteomics">
        <title>System-wide analysis of SUMOylation dynamics in response to replication stress reveals novel small ubiquitin-like modified target proteins and acceptor lysines relevant for genome stability.</title>
        <authorList>
            <person name="Xiao Z."/>
            <person name="Chang J.G."/>
            <person name="Hendriks I.A."/>
            <person name="Sigurdsson J.O."/>
            <person name="Olsen J.V."/>
            <person name="Vertegaal A.C."/>
        </authorList>
    </citation>
    <scope>SUMOYLATION [LARGE SCALE ANALYSIS] AT LYS-233; LYS-260; LYS-270; LYS-378; LYS-417 AND LYS-420</scope>
    <scope>IDENTIFICATION BY MASS SPECTROMETRY [LARGE SCALE ANALYSIS]</scope>
</reference>
<reference key="52">
    <citation type="journal article" date="2015" name="Nat. Struct. Mol. Biol.">
        <title>The active site of O-GlcNAc transferase imposes constraints on substrate sequence.</title>
        <authorList>
            <person name="Pathak S."/>
            <person name="Alonso J."/>
            <person name="Schimpl M."/>
            <person name="Rafie K."/>
            <person name="Blair D.E."/>
            <person name="Borodkin V.S."/>
            <person name="Albarbarawi O."/>
            <person name="van Aalten D.M.F."/>
        </authorList>
    </citation>
    <scope>GLYCOSYLATION AT SER-625 AND SER-628</scope>
</reference>
<reference key="53">
    <citation type="journal article" date="2015" name="Proteomics">
        <title>N-terminome analysis of the human mitochondrial proteome.</title>
        <authorList>
            <person name="Vaca Jacome A.S."/>
            <person name="Rabilloud T."/>
            <person name="Schaeffer-Reiss C."/>
            <person name="Rompais M."/>
            <person name="Ayoub D."/>
            <person name="Lane L."/>
            <person name="Bairoch A."/>
            <person name="Van Dorsselaer A."/>
            <person name="Carapito C."/>
        </authorList>
    </citation>
    <scope>IDENTIFICATION BY MASS SPECTROMETRY [LARGE SCALE ANALYSIS]</scope>
</reference>
<reference key="54">
    <citation type="journal article" date="2017" name="Nat. Struct. Mol. Biol.">
        <title>Site-specific mapping of the human SUMO proteome reveals co-modification with phosphorylation.</title>
        <authorList>
            <person name="Hendriks I.A."/>
            <person name="Lyon D."/>
            <person name="Young C."/>
            <person name="Jensen L.J."/>
            <person name="Vertegaal A.C."/>
            <person name="Nielsen M.L."/>
        </authorList>
    </citation>
    <scope>SUMOYLATION [LARGE SCALE ANALYSIS] AT LYS-32; LYS-97; LYS-171; LYS-201; LYS-208; LYS-219; LYS-233; LYS-260; LYS-270; LYS-311; LYS-366; LYS-378; LYS-417; LYS-420; LYS-450; LYS-470; LYS-486 AND LYS-597</scope>
    <scope>IDENTIFICATION BY MASS SPECTROMETRY [LARGE SCALE ANALYSIS]</scope>
</reference>
<reference key="55">
    <citation type="journal article" date="2018" name="Biochem. J.">
        <title>Intersectin goes nuclear: secret life of an endocytic protein.</title>
        <authorList>
            <person name="Alvisi G."/>
            <person name="Paolini L."/>
            <person name="Contarini A."/>
            <person name="Zambarda C."/>
            <person name="Di Antonio V."/>
            <person name="Colosini A."/>
            <person name="Mercandelli N."/>
            <person name="Timmoneri M."/>
            <person name="Palu G."/>
            <person name="Caimi L."/>
            <person name="Ricotta D."/>
            <person name="Radeghieri A."/>
        </authorList>
    </citation>
    <scope>INTERACTION WITH ITSN1 ISOFORM 2</scope>
    <scope>SUBCELLULAR LOCATION</scope>
</reference>
<reference key="56">
    <citation type="journal article" date="2022" name="J. Mol. Cell Biol.">
        <title>Inner nuclear membrane protein TMEM201 maintains endothelial cell migration and angiogenesis by interacting with the LINC complex.</title>
        <authorList>
            <person name="Zhang Y."/>
            <person name="Kong Y."/>
            <person name="Guo H."/>
            <person name="Liu Y."/>
            <person name="Zang Y."/>
            <person name="Li J."/>
        </authorList>
    </citation>
    <scope>INTERACTION WITH TMEM201</scope>
</reference>
<reference key="57">
    <citation type="journal article" date="2023" name="Mol. Cell">
        <title>ATR promotes clearance of damaged DNA and damaged cells by rupturing micronuclei.</title>
        <authorList>
            <person name="Joo Y.K."/>
            <person name="Black E.M."/>
            <person name="Trier I."/>
            <person name="Haakma W."/>
            <person name="Zou L."/>
            <person name="Kabeche L."/>
        </authorList>
    </citation>
    <scope>FUNCTION</scope>
    <scope>SUBCELLULAR LOCATION</scope>
    <scope>PHOSPHORYLATION AT SER-392 AND SER-395</scope>
    <scope>MUTAGENESIS OF SER-392 AND SER-395</scope>
</reference>
<reference key="58">
    <citation type="journal article" date="2023" name="Mol. Cell">
        <title>DNA damage induces nuclear envelope rupture through ATR-mediated phosphorylation of lamin A/C.</title>
        <authorList>
            <person name="Kovacs M.T."/>
            <person name="Vallette M."/>
            <person name="Wiertsema P."/>
            <person name="Dingli F."/>
            <person name="Loew D."/>
            <person name="Nader G.P.F."/>
            <person name="Piel M."/>
            <person name="Ceccaldi R."/>
        </authorList>
    </citation>
    <scope>FUNCTION</scope>
    <scope>SUBCELLULAR LOCATION</scope>
    <scope>PHOSPHORYLATION AT SER-282</scope>
    <scope>MUTAGENESIS OF SER-282</scope>
</reference>
<reference key="59">
    <citation type="journal article" date="2002" name="J. Biol. Chem.">
        <title>Structure of the globular tail of nuclear lamin.</title>
        <authorList>
            <person name="Dhe-Paganon S."/>
            <person name="Werner E.D."/>
            <person name="Chi Y.I."/>
            <person name="Shoelson S.E."/>
        </authorList>
    </citation>
    <scope>X-RAY CRYSTALLOGRAPHY (1.4 ANGSTROMS) OF 435-552</scope>
</reference>
<reference key="60">
    <citation type="journal article" date="2002" name="Structure">
        <title>The Ig-like structure of the C-terminal domain of lamin A/C, mutated in muscular dystrophies, cardiomyopathy, and partial lipodystrophy.</title>
        <authorList>
            <person name="Krimm I."/>
            <person name="Ostlund C."/>
            <person name="Gilquin B."/>
            <person name="Couprie J."/>
            <person name="Hossenlopp P."/>
            <person name="Mornon J.-P."/>
            <person name="Bonne G."/>
            <person name="Courvalin J.-C."/>
            <person name="Worman H.J."/>
            <person name="Zinn-Justin S."/>
        </authorList>
    </citation>
    <scope>STRUCTURE BY NMR OF 428-549</scope>
</reference>
<reference key="61">
    <citation type="journal article" date="2004" name="J. Mol. Biol.">
        <title>Crystal structure of the human lamin A coil 2B dimer: implications for the head-to-tail association of nuclear lamins.</title>
        <authorList>
            <person name="Strelkov S.V."/>
            <person name="Schumacher J."/>
            <person name="Burkhard P."/>
            <person name="Aebi U."/>
            <person name="Herrmann H."/>
        </authorList>
    </citation>
    <scope>X-RAY CRYSTALLOGRAPHY (2.2 ANGSTROMS) OF 305-387</scope>
    <scope>SUBUNIT</scope>
</reference>
<reference evidence="107" key="62">
    <citation type="journal article" date="2019" name="Nat. Commun.">
        <title>Structural basis for lamin assembly at the molecular level.</title>
        <authorList>
            <person name="Ahn J."/>
            <person name="Jo I."/>
            <person name="Kang S.M."/>
            <person name="Hong S."/>
            <person name="Kim S."/>
            <person name="Jeong S."/>
            <person name="Kim Y.H."/>
            <person name="Park B.J."/>
            <person name="Ha N.C."/>
        </authorList>
    </citation>
    <scope>X-RAY CRYSTALLOGRAPHY (3.21 ANGSTROMS) OF 1-300</scope>
    <scope>FUNCTION</scope>
    <scope>SUBUNIT</scope>
</reference>
<reference evidence="108" key="63">
    <citation type="journal article" date="2021" name="Biochem. Biophys. Res. Commun.">
        <title>Beta-strand-mediated dimeric formation of the Ig-like domains of human lamin A/C and B1.</title>
        <authorList>
            <person name="Ahn J."/>
            <person name="Lee J."/>
            <person name="Jeong S."/>
            <person name="Kang S.M."/>
            <person name="Park B.J."/>
            <person name="Ha N.C."/>
        </authorList>
    </citation>
    <scope>X-RAY CRYSTALLOGRAPHY (1.80 ANGSTROMS) OF 406-553</scope>
    <scope>SUBUNIT</scope>
</reference>
<reference key="64">
    <citation type="journal article" date="1999" name="Nat. Genet.">
        <title>Mutations in the gene encoding lamin A/C cause autosomal dominant Emery-Dreifuss muscular dystrophy.</title>
        <authorList>
            <person name="Bonne G."/>
            <person name="Di Barletta M.R."/>
            <person name="Varnous S."/>
            <person name="Becane H.-M."/>
            <person name="Hammouda E.-H."/>
            <person name="Merlini L."/>
            <person name="Muntoni F."/>
            <person name="Greenberg C.R."/>
            <person name="Gary F."/>
            <person name="Urtizberea J.-A."/>
            <person name="Duboc D."/>
            <person name="Fardeau M."/>
            <person name="Toniolo D."/>
            <person name="Schwartz K."/>
        </authorList>
    </citation>
    <scope>VARIANTS EDMD2 TRP-453; PRO-527 AND PRO-530</scope>
    <scope>FUNCTION</scope>
    <scope>SUBCELLULAR LOCATION</scope>
</reference>
<reference key="65">
    <citation type="journal article" date="1999" name="N. Engl. J. Med.">
        <title>Missense mutations in the rod domain of the lamin A/C gene as causes of dilated cardiomyopathy and conduction-system disease.</title>
        <authorList>
            <person name="Fatkin D."/>
            <person name="MacRae C."/>
            <person name="Sasaki T."/>
            <person name="Wolff M.R."/>
            <person name="Porcu M."/>
            <person name="Frenneaux M."/>
            <person name="Atherton J."/>
            <person name="Vidaillet H.J. Jr."/>
            <person name="Spudich S."/>
            <person name="De Girolami U."/>
            <person name="Seidman J.G."/>
            <person name="Seidman C.E."/>
        </authorList>
    </citation>
    <scope>VARIANTS CMD1A GLY-60; ARG-85; LYS-195 AND GLY-203</scope>
    <scope>FUNCTION</scope>
</reference>
<reference key="66">
    <citation type="journal article" date="2000" name="Am. J. Hum. Genet.">
        <title>Mutational and haplotype analyses of families with familial partial lipodystrophy (Dunnigan variety) reveal recurrent missense mutations in the globular C-terminal domain of lamin A/C.</title>
        <authorList>
            <person name="Speckman R.A."/>
            <person name="Garg A."/>
            <person name="Du F."/>
            <person name="Bennett L."/>
            <person name="Veile R."/>
            <person name="Arioglu E."/>
            <person name="Taylor S.I."/>
            <person name="Lovett M."/>
            <person name="Bowcock A.M."/>
        </authorList>
    </citation>
    <scope>VARIANTS FPLD2 ASP-465; GLN-482; TRP-482 AND HIS-582</scope>
</reference>
<reference key="67">
    <citation type="journal article" date="2000" name="Am. J. Hum. Genet.">
        <authorList>
            <person name="Speckman R.A."/>
            <person name="Garg A."/>
            <person name="Du F."/>
            <person name="Bennett L."/>
            <person name="Veile R."/>
            <person name="Arioglu E."/>
            <person name="Taylor S.I."/>
            <person name="Lovett M."/>
            <person name="Bowcock A.M."/>
        </authorList>
    </citation>
    <scope>ERRATUM OF PUBMED:10739751</scope>
</reference>
<reference key="68">
    <citation type="journal article" date="2000" name="Am. J. Hum. Genet.">
        <title>Different mutations in the LMNA gene cause autosomal dominant and autosomal recessive Emery-Dreifuss muscular dystrophy.</title>
        <authorList>
            <person name="Raffaele di Barletta M."/>
            <person name="Ricci E."/>
            <person name="Galluzzi G."/>
            <person name="Tonali P."/>
            <person name="Mora M."/>
            <person name="Morandi L."/>
            <person name="Romorini A."/>
            <person name="Voit T."/>
            <person name="Orstavik K.H."/>
            <person name="Merlini L."/>
            <person name="Trevisan C."/>
            <person name="Biancalana V."/>
            <person name="Housmanowa-Petrusewicz I."/>
            <person name="Bione S."/>
            <person name="Ricotti R."/>
            <person name="Schwartz K."/>
            <person name="Bonne G."/>
            <person name="Toniolo D."/>
        </authorList>
    </citation>
    <scope>VARIANTS EDMD2 TYR-222; GLN-249; GLN-336; TRP-453; THR-469; PRO-527 AND LYS-528</scope>
</reference>
<reference key="69">
    <citation type="journal article" date="2000" name="Ann. Neurol.">
        <title>Clinical and molecular genetic spectrum of autosomal dominant Emery-Dreifuss muscular dystrophy due to mutations of the lamin A/C gene.</title>
        <authorList>
            <person name="Bonne G."/>
            <person name="Mercuri E."/>
            <person name="Muchir A."/>
            <person name="Urtizberea A."/>
            <person name="Becane H.M."/>
            <person name="Recan D."/>
            <person name="Merlini L."/>
            <person name="Wehnert M."/>
            <person name="Boor R."/>
            <person name="Reuner U."/>
            <person name="Vorgerd M."/>
            <person name="Wicklein E.M."/>
            <person name="Eymard B."/>
            <person name="Duboc D."/>
            <person name="Penisson-Besnier I."/>
            <person name="Cuisset J.M."/>
            <person name="Ferrer X."/>
            <person name="Desguerre I."/>
            <person name="Lacombe D."/>
            <person name="Bushby K."/>
            <person name="Pollitt C."/>
            <person name="Toniolo D."/>
            <person name="Fardeau M."/>
            <person name="Schwartz K."/>
            <person name="Muntoni F."/>
        </authorList>
    </citation>
    <scope>VARIANTS EDMD2 CYS-45; PRO-50; SER-63; GLU-112 DEL; PRO-222; GLU-232; GLN-249; LYS-261 DEL; PRO-294; LYS-358; LYS-371; LYS-386; TRP-453; LYS-456; SER-520; PRO-527 AND LYS-528</scope>
</reference>
<reference key="70">
    <citation type="journal article" date="2000" name="Hum. Mol. Genet.">
        <title>Nuclear lamin A/C R482Q mutation in Canadian kindreds with Dunnigan-type familial partial lipodystrophy.</title>
        <authorList>
            <person name="Cao H."/>
            <person name="Hegele R.A."/>
        </authorList>
    </citation>
    <scope>VARIANT FPLD2 GLN-482</scope>
    <scope>FUNCTION</scope>
</reference>
<reference key="71">
    <citation type="journal article" date="2000" name="Hum. Mol. Genet.">
        <title>Identification of mutations in the gene encoding lamins A/C in autosomal dominant limb girdle muscular dystrophy with atrioventricular conduction disturbances (LGMD1B).</title>
        <authorList>
            <person name="Muchir A."/>
            <person name="Bonne G."/>
            <person name="van der Kooi A.J."/>
            <person name="van Meegen M."/>
            <person name="Baas F."/>
            <person name="Bolhuis P.A."/>
            <person name="de Visser M."/>
            <person name="Schwartz K."/>
        </authorList>
    </citation>
    <scope>VARIANTS EDMD2 LYS-208 DEL AND HIS-377</scope>
    <scope>FUNCTION</scope>
</reference>
<reference key="72">
    <citation type="journal article" date="2000" name="Nat. Genet.">
        <title>LMNA, encoding lamin A/C, is mutated in partial lipodystrophy.</title>
        <authorList>
            <person name="Shackleton S."/>
            <person name="Lloyd D.J."/>
            <person name="Jackson S.N.J."/>
            <person name="Evans R."/>
            <person name="Niermeijer M.F."/>
            <person name="Singh B.M."/>
            <person name="Schmidt H."/>
            <person name="Brabant G."/>
            <person name="Kumar S."/>
            <person name="Durrington P.N."/>
            <person name="Gregory S."/>
            <person name="O'Rahilly S."/>
            <person name="Trembath R.C."/>
        </authorList>
    </citation>
    <scope>VARIANTS FPLD2 LEU-482 AND TRP-482</scope>
</reference>
<reference key="73">
    <citation type="journal article" date="2000" name="Neurology">
        <title>Autosomal dominant Emery-Dreifuss dystrophy due to mutations in rod domain of the lamin A/C gene.</title>
        <authorList>
            <person name="Felice K.J."/>
            <person name="Schwartz R.C."/>
            <person name="Brown C.A."/>
            <person name="Leicher C.R."/>
            <person name="Grunnet M.L."/>
        </authorList>
    </citation>
    <scope>VARIANTS EDMD2 PRO-150 AND LYS-261 DEL</scope>
</reference>
<reference key="74">
    <citation type="journal article" date="2001" name="Am. J. Med. Genet.">
        <title>Novel and recurrent mutations in lamin A/C in patients with Emery-Dreifuss muscular dystrophy.</title>
        <authorList>
            <person name="Brown C.A."/>
            <person name="Lanning R.W."/>
            <person name="McKinney K.Q."/>
            <person name="Salvino A.R."/>
            <person name="Cherniske E."/>
            <person name="Crowe C.A."/>
            <person name="Darras B.T."/>
            <person name="Gominak S."/>
            <person name="Greenberg C.R."/>
            <person name="Grosmann C."/>
            <person name="Heydemann P."/>
            <person name="Mendell J.R."/>
            <person name="Pober B.R."/>
            <person name="Sasaki T."/>
            <person name="Shapiro F."/>
            <person name="Simpson D.A."/>
            <person name="Suchowersky O."/>
            <person name="Spence J.E."/>
        </authorList>
    </citation>
    <scope>VARIANTS EDMD2 PRO-25; THR-43; SER-50; PRO-133; 196-ARG--THR-199 DELINS SER; GLN-249; LYS-261 DEL; LYS-358; TRP-453; ILE-456; PRO-527 AND HIS-624</scope>
</reference>
<reference key="75">
    <citation type="journal article" date="2001" name="J. Card. Fail.">
        <title>Novel lamin A/C mutations in two families with dilated cardiomyopathy and conduction system disease.</title>
        <authorList>
            <person name="Jakobs P.M."/>
            <person name="Hanson E.L."/>
            <person name="Crispell K.A."/>
            <person name="Toy W."/>
            <person name="Keegan H."/>
            <person name="Schilling K."/>
            <person name="Icenogle T.B."/>
            <person name="Litt M."/>
            <person name="Hershberger R.E."/>
        </authorList>
    </citation>
    <scope>VARIANT CMD1A LYS-203</scope>
</reference>
<reference key="76">
    <citation type="journal article" date="2001" name="J. Cell Sci.">
        <title>Properties of lamin A mutants found in Emery-Dreifuss muscular dystrophy, cardiomyopathy and Dunnigan-type partial lipodystrophy.</title>
        <authorList>
            <person name="Oestlund C."/>
            <person name="Bonne G."/>
            <person name="Schwartz K."/>
            <person name="Worman H.J."/>
        </authorList>
    </citation>
    <scope>CHARACTERIZATION OF VARIANTS CMD1A GLY-60; ARG-85; LYS-195 AND GLY-203</scope>
    <scope>CHARACTERIZATION OF VARIANTS EDMD2 LYS-358; LYS-371; LYS-386; TRP-453; SER-520; PRO-527; LYS-528 AND PRO-530</scope>
    <scope>CHARACTERIZATION OF VARIANTS FPLD2 GLN-482; TRP-482 AND ASN-486</scope>
</reference>
<reference key="77">
    <citation type="journal article" date="2001" name="Neuromuscul. Disord.">
        <title>A missense mutation in the exon 8 of lamin A/C gene in a Japanese case of autosomal dominant limb-girdle muscular dystrophy and cardiac conduction block.</title>
        <authorList>
            <person name="Kitaguchi T."/>
            <person name="Matsubara S."/>
            <person name="Sato M."/>
            <person name="Miyamoto K."/>
            <person name="Hirai S."/>
            <person name="Schwartz K."/>
            <person name="Bonne G."/>
        </authorList>
    </citation>
    <scope>VARIANT EDMD2 HIS-481</scope>
</reference>
<reference key="78">
    <citation type="journal article" date="2002" name="Am. Heart J.">
        <title>A novel lamin A/C mutation in a family with dilated cardiomyopathy, prominent conduction system disease, and need for permanent pacemaker implantation.</title>
        <authorList>
            <person name="Hershberger R.E."/>
            <person name="Hanson E.L."/>
            <person name="Jakobs P.M."/>
            <person name="Keegan H."/>
            <person name="Coates K."/>
            <person name="Bousman S."/>
            <person name="Litt M."/>
        </authorList>
    </citation>
    <scope>VARIANT CMD1A PRO-215</scope>
</reference>
<reference key="79">
    <citation type="journal article" date="2002" name="Am. J. Hum. Genet.">
        <title>Homozygous defects in LMNA, encoding lamin A/C nuclear-envelope proteins, cause autosomal recessive axonal neuropathy in human (Charcot-Marie-Tooth disorder type 2) and mouse.</title>
        <authorList>
            <person name="De Sandre-Giovannoli A."/>
            <person name="Chaouch M."/>
            <person name="Kozlov S."/>
            <person name="Vallat J.-M."/>
            <person name="Tazir M."/>
            <person name="Kassouri N."/>
            <person name="Szepetowski P."/>
            <person name="Hammadouche T."/>
            <person name="Vandenberghe A."/>
            <person name="Stewart C.L."/>
            <person name="Grid D."/>
            <person name="Levy N."/>
        </authorList>
    </citation>
    <scope>VARIANT CMT2B1 CYS-298</scope>
    <scope>FUNCTION</scope>
</reference>
<reference key="80">
    <citation type="journal article" date="2002" name="Am. J. Hum. Genet.">
        <authorList>
            <person name="De Sandre-Giovannoli A."/>
            <person name="Chaouch M."/>
            <person name="Kozlov S."/>
            <person name="Vallat J.-M."/>
            <person name="Tazir M."/>
            <person name="Kassouri N."/>
            <person name="Szepetowski P."/>
            <person name="Hammadouche T."/>
            <person name="Vandenberghe A."/>
            <person name="Stewart C.L."/>
            <person name="Grid D."/>
            <person name="Levy N."/>
        </authorList>
    </citation>
    <scope>ERRATUM OF PUBMED:11799477</scope>
</reference>
<reference key="81">
    <citation type="journal article" date="2002" name="Am. J. Hum. Genet.">
        <title>Mandibuloacral dysplasia is caused by a mutation in LMNA-encoding lamin A/C.</title>
        <authorList>
            <person name="Novelli G."/>
            <person name="Muchir A."/>
            <person name="Sangiuolo F."/>
            <person name="Helbling-Leclerc A."/>
            <person name="D'Apice M.R."/>
            <person name="Massart C."/>
            <person name="Capon F."/>
            <person name="Sbraccia P."/>
            <person name="Federici M."/>
            <person name="Lauro R."/>
            <person name="Tudisco C."/>
            <person name="Pallotta R."/>
            <person name="Scarano G."/>
            <person name="Dallapiccola B."/>
            <person name="Merlini L."/>
            <person name="Bonne G."/>
        </authorList>
    </citation>
    <scope>VARIANT MADA HIS-527</scope>
    <scope>FUNCTION</scope>
</reference>
<reference key="82">
    <citation type="journal article" date="2002" name="Am. J. Med.">
        <title>Multisystem dystrophy syndrome due to novel missense mutations in the amino-terminal head and alpha-helical rod domains of the lamin A/C gene.</title>
        <authorList>
            <person name="Garg A."/>
            <person name="Speckman R.A."/>
            <person name="Bowcock A.M."/>
        </authorList>
    </citation>
    <scope>VARIANTS FPLD2 TRP-28 AND GLY-62</scope>
</reference>
<reference key="83">
    <citation type="journal article" date="2002" name="J. Am. Coll. Cardiol.">
        <title>Autosomal dominant dilated cardiomyopathy with atrioventricular block: a lamin A/C defect-related disease.</title>
        <authorList>
            <person name="Arbustini E."/>
            <person name="Pilotto A."/>
            <person name="Repetto A."/>
            <person name="Grasso M."/>
            <person name="Negri A."/>
            <person name="Diegoli M."/>
            <person name="Campana C."/>
            <person name="Scelsi L."/>
            <person name="Baldini E."/>
            <person name="Gavazzi A."/>
            <person name="Tavazzi L."/>
        </authorList>
    </citation>
    <scope>VARIANTS CMD1A GLU-97; TRP-190 AND LYS-317</scope>
</reference>
<reference key="84">
    <citation type="journal article" date="2002" name="J. Hum. Genet.">
        <title>Identification of lamin A/C (LMNA) gene mutations in Korean patients with autosomal dominant Emery-Dreifuss muscular dystrophy and limb-girdle muscular dystrophy 1B.</title>
        <authorList>
            <person name="Ki C.-S."/>
            <person name="Hong J.S."/>
            <person name="Jeong G.-Y."/>
            <person name="Ahn K.J."/>
            <person name="Choi K.-M."/>
            <person name="Kim D.-K."/>
            <person name="Kim J.-W."/>
        </authorList>
    </citation>
    <scope>VARIANT EDMD2 GLN-249</scope>
    <scope>VARIANT EDMD2 LEU-377</scope>
</reference>
<reference key="85">
    <citation type="journal article" date="2002" name="Neurology">
        <title>Lamin A/C mutations with lipodystrophy, cardiac abnormalities, and muscular dystrophy.</title>
        <authorList>
            <person name="van der Kooi A.J."/>
            <person name="Bonne G."/>
            <person name="Eymard B."/>
            <person name="Duboc D."/>
            <person name="Talim B."/>
            <person name="Van der Valk M."/>
            <person name="Reiss P."/>
            <person name="Richard P."/>
            <person name="Demay L."/>
            <person name="Merlini L."/>
            <person name="Schwartz K."/>
            <person name="Busch H.F.M."/>
            <person name="de Visser M."/>
        </authorList>
    </citation>
    <scope>VARIANTS FPLD2 GLY-60 AND PRO-527</scope>
</reference>
<reference key="86">
    <citation type="journal article" date="2002" name="Neuromuscul. Disord.">
        <title>Frequent low penetrance mutations in the Lamin A/C gene, causing Emery Dreifuss muscular dystrophy.</title>
        <authorList>
            <person name="Vytopil M."/>
            <person name="Ricci E."/>
            <person name="Dello Russo A."/>
            <person name="Hanisch F."/>
            <person name="Neudecker S."/>
            <person name="Zierz S."/>
            <person name="Ricotti R."/>
            <person name="Demay L."/>
            <person name="Richard P."/>
            <person name="Wehnert M."/>
            <person name="Bonne G."/>
            <person name="Merlini L."/>
            <person name="Toniolo D."/>
        </authorList>
    </citation>
    <scope>VARIANTS EDMD2 LYS-32 DEL; ASN-63; GLN-336; GLN-343 AND CYS-401</scope>
</reference>
<reference key="87">
    <citation type="journal article" date="2003" name="Eur. J. Heart Fail.">
        <title>Apical left ventricular aneurysm without atrio-ventricular block due to a lamin A/C gene mutation.</title>
        <authorList>
            <person name="Forissier J.-F."/>
            <person name="Bonne G."/>
            <person name="Bouchier C."/>
            <person name="Duboscq-Bidot L."/>
            <person name="Richard P."/>
            <person name="Wisnewski C."/>
            <person name="Briault S."/>
            <person name="Moraine C."/>
            <person name="Dubourg O."/>
            <person name="Schwartz K."/>
            <person name="Komajda M."/>
        </authorList>
    </citation>
    <scope>VARIANT CMD1A CYS-541</scope>
</reference>
<reference key="88">
    <citation type="journal article" date="2003" name="Hum. Mutat.">
        <title>Functional consequences of an LMNA mutation associated with a new cardiac and non-cardiac phenotype.</title>
        <authorList>
            <person name="Charniot J.-C."/>
            <person name="Pascal C."/>
            <person name="Bouchier C."/>
            <person name="Sebillon P."/>
            <person name="Salama J."/>
            <person name="Duboscq-Bidot L."/>
            <person name="Peuchmaurd M."/>
            <person name="Desnos M."/>
            <person name="Artigou J.-Y."/>
            <person name="Komajda M."/>
        </authorList>
    </citation>
    <scope>VARIANT EDMD2 HIS-377</scope>
</reference>
<reference key="89">
    <citation type="journal article" date="2003" name="J. Am. Coll. Cardiol.">
        <title>Natural history of dilated cardiomyopathy due to lamin A/C gene mutations.</title>
        <authorList>
            <consortium name="Familial dilated cardiomyopathy registry research group"/>
            <person name="Taylor M.R.G."/>
            <person name="Fain P.R."/>
            <person name="Sinagra G."/>
            <person name="Robinson M.L."/>
            <person name="Robertson A.D."/>
            <person name="Carniel E."/>
            <person name="Di Lenarda A."/>
            <person name="Bohlmeyer T.J."/>
            <person name="Ferguson D.A."/>
            <person name="Brodsky G.L."/>
            <person name="Boucek M.M."/>
            <person name="Lascor J."/>
            <person name="Moss A.C."/>
            <person name="Li W.-L.P."/>
            <person name="Stetler G.L."/>
            <person name="Muntoni F."/>
            <person name="Bristow M.R."/>
            <person name="Mestroni L."/>
        </authorList>
    </citation>
    <scope>VARIANTS CMD1A LEU-89; HIS-377 AND LEU-573</scope>
</reference>
<reference key="90">
    <citation type="journal article" date="2003" name="J. Am. Coll. Cardiol.">
        <authorList>
            <consortium name="Familial dilated cardiomyopathy registry research group"/>
            <person name="Taylor M.R.G."/>
            <person name="Fain P.R."/>
            <person name="Sinagra G."/>
            <person name="Robinson M.L."/>
            <person name="Robertson A.D."/>
            <person name="Carniel E."/>
            <person name="Di Lenarda A."/>
            <person name="Bohlmeyer T.J."/>
            <person name="Ferguson D.A."/>
            <person name="Brodsky G.L."/>
            <person name="Boucek M.M."/>
            <person name="Lascor J."/>
            <person name="Moss A.C."/>
            <person name="Li W.-L.P."/>
            <person name="Stetler G.L."/>
            <person name="Muntoni F."/>
            <person name="Bristow M.R."/>
            <person name="Mestroni L."/>
        </authorList>
    </citation>
    <scope>ERRATUM OF PUBMED:12628721</scope>
</reference>
<reference key="91">
    <citation type="journal article" date="2003" name="J. Clin. Endocrinol. Metab.">
        <title>A new clinical condition linked to a novel mutation in lamins A and C with generalized lipoatrophy, insulin-resistant diabetes, disseminated leukomelanodermic papules, liver steatosis, and cardiomyopathy.</title>
        <authorList>
            <person name="Caux F."/>
            <person name="Dubosclard E."/>
            <person name="Lascols O."/>
            <person name="Buendia B."/>
            <person name="Chazouilleres O."/>
            <person name="Cohen A."/>
            <person name="Courvalin J.-C."/>
            <person name="Laroche L."/>
            <person name="Capeau J."/>
            <person name="Vigouroux C."/>
            <person name="Christin-Maitre S."/>
        </authorList>
    </citation>
    <scope>VARIANT FPLD2 LEU-133</scope>
</reference>
<reference key="92">
    <citation type="journal article" date="2003" name="J. Hum. Genet.">
        <title>LMNA is mutated in Hutchinson-Gilford progeria (MIM 176670) but not in Wiedemann-Rautenstrauch progeroid syndrome (MIM 264090).</title>
        <authorList>
            <person name="Cao H."/>
            <person name="Hegele R.A."/>
        </authorList>
    </citation>
    <scope>VARIANTS HGPS CYS-471; CYS-527 AND SER-608</scope>
</reference>
<reference key="93">
    <citation type="journal article" date="2003" name="J. Med. Genet.">
        <title>Expanding the phenotype of LMNA mutations in dilated cardiomyopathy and functional consequences of these mutations.</title>
        <authorList>
            <person name="Sebillon P."/>
            <person name="Bouchier C."/>
            <person name="Bidot L.D."/>
            <person name="Bonne G."/>
            <person name="Ahamed K."/>
            <person name="Charron P."/>
            <person name="Drouin-Garraud V."/>
            <person name="Millaire A."/>
            <person name="Desrumeaux G."/>
            <person name="Benaiche A."/>
            <person name="Charniot J.-C."/>
            <person name="Schwartz K."/>
            <person name="Villard E."/>
            <person name="Komajda M."/>
        </authorList>
    </citation>
    <scope>VARIANT CMD1A LYS-161</scope>
</reference>
<reference key="94">
    <citation type="journal article" date="2003" name="J. Med. Genet.">
        <title>Mutation analysis of the lamin A/C gene (LMNA) among patients with different cardiomuscular phenotypes.</title>
        <authorList>
            <person name="Vytopil M."/>
            <person name="Benedetti S."/>
            <person name="Ricci E."/>
            <person name="Galluzzi G."/>
            <person name="Dello Russo A."/>
            <person name="Merlini L."/>
            <person name="Boriani G."/>
            <person name="Gallina M."/>
            <person name="Morandi L."/>
            <person name="Politano L."/>
            <person name="Moggio M."/>
            <person name="Chiveri L."/>
            <person name="Hausmanova-Petrusewicz I."/>
            <person name="Ricotti R."/>
            <person name="Vohanka S."/>
            <person name="Toman J."/>
            <person name="Toniolo D."/>
        </authorList>
    </citation>
    <scope>VARIANTS EDMD2 GLY-25; LYS-32 DEL; VAL-35; GLY-65; GLU-112 DEL; PRO-248; GLN-249; CYS-267; VAL-446; TRP-453; ARG-528 AND HIS-541</scope>
    <scope>VARIANT CMD1A CYS-435</scope>
</reference>
<reference key="95">
    <citation type="journal article" date="2003" name="Lancet">
        <title>LMNA mutations in atypical Werner's syndrome.</title>
        <authorList>
            <person name="Chen L."/>
            <person name="Lee L."/>
            <person name="Kudlow B.A."/>
            <person name="Dos Santos H.G."/>
            <person name="Sletvold O."/>
            <person name="Shafeghati Y."/>
            <person name="Botha E.G."/>
            <person name="Garg A."/>
            <person name="Hanson N.B."/>
            <person name="Martin G.M."/>
            <person name="Mian I.S."/>
            <person name="Kennedy B.K."/>
            <person name="Oshima J."/>
        </authorList>
    </citation>
    <scope>VARIANT CMDHH PRO-57</scope>
    <scope>VARIANT HGPS ARG-140</scope>
    <scope>FUNCTION</scope>
</reference>
<reference key="96">
    <citation type="journal article" date="2003" name="Stroke">
        <title>Clinical relevance of atrial fibrillation/flutter, stroke, pacemaker implant, and heart failure in Emery-Dreifuss muscular dystrophy: a long-term longitudinal study.</title>
        <authorList>
            <person name="Boriani G."/>
            <person name="Gallina M."/>
            <person name="Merlini L."/>
            <person name="Bonne G."/>
            <person name="Toniolo D."/>
            <person name="Amati S."/>
            <person name="Biffi M."/>
            <person name="Martignani C."/>
            <person name="Frabetti L."/>
            <person name="Bonvicini M."/>
            <person name="Rapezzi C."/>
            <person name="Branzi A."/>
        </authorList>
    </citation>
    <scope>VARIANTS EDMD2 ASN-63; PRO-140; GLN-249; LEU-377; LYS-386 AND PRO-527</scope>
</reference>
<reference key="97">
    <citation type="journal article" date="2004" name="Am. J. Cardiol.">
        <title>Familial dilated cardiomyopathy and isolated left ventricular noncompaction associated with lamin A/C gene mutations.</title>
        <authorList>
            <person name="Hermida-Prieto M."/>
            <person name="Monserrat L."/>
            <person name="Castro-Beiras A."/>
            <person name="Laredo R."/>
            <person name="Soler R."/>
            <person name="Peteiro J."/>
            <person name="Rodriguez E."/>
            <person name="Bouzas B."/>
            <person name="Alvarez N."/>
            <person name="Muniz J."/>
            <person name="Crespo-Leiro M."/>
        </authorList>
    </citation>
    <scope>VARIANTS CMD1A TRP-190 AND LEU-349</scope>
</reference>
<reference key="98">
    <citation type="journal article" date="2004" name="Eur. Heart J.">
        <title>A novel mutation, Ser143Pro, in the lamin A/C gene is common in Finnish patients with familial dilated cardiomyopathy.</title>
        <authorList>
            <person name="Kaerkkaeinen S."/>
            <person name="Helioe T."/>
            <person name="Miettinen R."/>
            <person name="Tuomainen P."/>
            <person name="Peltola P."/>
            <person name="Rummukainen J."/>
            <person name="Ylitalo K."/>
            <person name="Kaartinen M."/>
            <person name="Kuusisto J."/>
            <person name="Toivonen L."/>
            <person name="Nieminen M.S."/>
            <person name="Laakso M."/>
            <person name="Peuhkurinen K."/>
        </authorList>
    </citation>
    <scope>VARIANT CMD1A PRO-143</scope>
</reference>
<reference key="99">
    <citation type="journal article" date="2004" name="Hum. Mol. Genet.">
        <title>Lamin A and ZMPSTE24 (FACE-1) defects cause nuclear disorganization and identify restrictive dermopathy as a lethal neonatal laminopathy.</title>
        <authorList>
            <person name="Navarro C.L."/>
            <person name="De Sandre-Giovannoli A."/>
            <person name="Bernard R."/>
            <person name="Boccaccio I."/>
            <person name="Boyer A."/>
            <person name="Genevieve D."/>
            <person name="Hadj-Rabia S."/>
            <person name="Gaudy-Marqueste C."/>
            <person name="Smitt H.S."/>
            <person name="Vabres P."/>
            <person name="Faivre L."/>
            <person name="Verloes A."/>
            <person name="Van Essen T."/>
            <person name="Flori E."/>
            <person name="Hennekam R."/>
            <person name="Beemer F.A."/>
            <person name="Laurent N."/>
            <person name="Le Merrer M."/>
            <person name="Cau P."/>
            <person name="Levy N."/>
        </authorList>
    </citation>
    <scope>INVOLVEMENT IN RSDM2</scope>
    <scope>FUNCTION</scope>
    <scope>SUBCELLULAR LOCATION</scope>
</reference>
<reference key="100">
    <citation type="journal article" date="2004" name="J. Med. Genet.">
        <title>Novel lamin A/C gene (LMNA) mutations in atypical progeroid syndromes.</title>
        <authorList>
            <person name="Csoka A.B."/>
            <person name="Cao H."/>
            <person name="Sammak P.J."/>
            <person name="Constantinescu D."/>
            <person name="Schatten G.P."/>
            <person name="Hegele R.A."/>
        </authorList>
    </citation>
    <scope>VARIANT HGPS CYS-644</scope>
    <scope>VARIANTS ILE-10 AND VAL-578</scope>
</reference>
<reference key="101">
    <citation type="journal article" date="2004" name="J. Med. Genet.">
        <title>Homozygous missense mutation in the lamin A/C gene causes autosomal recessive Hutchinson-Gilford progeria syndrome.</title>
        <authorList>
            <person name="Plasilova M."/>
            <person name="Chattopadhyay C."/>
            <person name="Pal P."/>
            <person name="Schaub N.A."/>
            <person name="Buechner S.A."/>
            <person name="Mueller H."/>
            <person name="Miny P."/>
            <person name="Ghosh A."/>
            <person name="Heinimann K."/>
        </authorList>
    </citation>
    <scope>VARIANT HGPS ASN-542</scope>
</reference>
<reference key="102">
    <citation type="journal article" date="2004" name="J. Med. Genet.">
        <title>A new mutation of the lamin A/C gene leading to autosomal dominant axonal neuropathy, muscular dystrophy, cardiac disease, and leuconychia.</title>
        <authorList>
            <person name="Goizet C."/>
            <person name="Yaou R.B."/>
            <person name="Demay L."/>
            <person name="Richard P."/>
            <person name="Bouillot S."/>
            <person name="Rouanet M."/>
            <person name="Hermosilla E."/>
            <person name="Le Masson G."/>
            <person name="Lagueny A."/>
            <person name="Bonne G."/>
            <person name="Ferrer X."/>
        </authorList>
    </citation>
    <scope>VARIANT ASP-33</scope>
    <scope>VARIANT EDMD2 GLY-33</scope>
</reference>
<reference key="103">
    <citation type="journal article" date="2004" name="Muscle Nerve">
        <title>Nuclear envelope alterations in fibroblasts from patients with muscular dystrophy, cardiomyopathy, and partial lipodystrophy carrying lamin A/C gene mutations.</title>
        <authorList>
            <person name="Muchir A."/>
            <person name="Medioni J."/>
            <person name="Laluc M."/>
            <person name="Massart C."/>
            <person name="Arimura T."/>
            <person name="van der Kooi A.J."/>
            <person name="Desguerre I."/>
            <person name="Mayer M."/>
            <person name="Ferrer X."/>
            <person name="Briault S."/>
            <person name="Hirano M."/>
            <person name="Worman H.J."/>
            <person name="Mallet A."/>
            <person name="Wehnert M."/>
            <person name="Schwartz K."/>
            <person name="Bonne G."/>
        </authorList>
    </citation>
    <scope>SUBCELLULAR LOCATION</scope>
    <scope>CHARACTERIZATION OF VARIANTS EDMD2 LYS-32 DEL; SER-63; GLN-249; LYS-358; CYS-401; TRP-453 AND PRO-527</scope>
    <scope>CHARACTERIZATION OF VARIANTS EDMD2 LYS-208 DEL AND HIS-377</scope>
    <scope>CHARACTERIZATION OF VARIANT FPLD2 LEU-482</scope>
    <scope>CHARACTERIZATION OF VARIANT CMD1A CYS-541</scope>
</reference>
<reference key="104">
    <citation type="journal article" date="2005" name="Ann. Neurol.">
        <title>p.S143F mutation in lamin A/C: a new phenotype combining myopathy and progeria.</title>
        <authorList>
            <person name="Kirschner J."/>
            <person name="Brune T."/>
            <person name="Wehnert M."/>
            <person name="Denecke J."/>
            <person name="Wasner C."/>
            <person name="Feuer A."/>
            <person name="Marquardt T."/>
            <person name="Ketelsen U.-P."/>
            <person name="Wieacker P."/>
            <person name="Boennemann C.G."/>
            <person name="Korinthenberg R."/>
        </authorList>
    </citation>
    <scope>VARIANT HGPS PHE-143</scope>
</reference>
<reference key="105">
    <citation type="journal article" date="2005" name="Hum. Genet.">
        <title>Gene symbol: LMNA. Disease: cardiomyopathy, dilated, with conduction defect 1.</title>
        <authorList>
            <person name="Arbustini Eloisa A.E."/>
            <person name="Pilotto A."/>
            <person name="Pasotti M."/>
            <person name="Grasso M."/>
            <person name="Diegoli M."/>
            <person name="Campana C."/>
            <person name="Gavazzi A."/>
            <person name="Alessandra R."/>
            <person name="Tavazzi L."/>
        </authorList>
    </citation>
    <scope>VARIANT CMD1A ASN-260</scope>
</reference>
<reference key="106">
    <citation type="journal article" date="2005" name="J. Clin. Endocrinol. Metab.">
        <title>A novel homozygous Ala529Val LMNA mutation in Turkish patients with mandibuloacral dysplasia.</title>
        <authorList>
            <person name="Garg A."/>
            <person name="Cogulu O."/>
            <person name="Ozkinay F."/>
            <person name="Onay H."/>
            <person name="Agarwal A.K."/>
        </authorList>
    </citation>
    <scope>VARIANT MADA VAL-529</scope>
</reference>
<reference key="107">
    <citation type="journal article" date="2005" name="J. Med. Genet.">
        <title>Lamin A N-terminal phosphorylation is associated with myoblast activation: impairment in Emery-Dreifuss muscular dystrophy.</title>
        <authorList>
            <person name="Cenni V."/>
            <person name="Sabatelli P."/>
            <person name="Mattioli E."/>
            <person name="Marmiroli S."/>
            <person name="Capanni C."/>
            <person name="Ognibene A."/>
            <person name="Squarzoni S."/>
            <person name="Maraldi N.M."/>
            <person name="Bonne G."/>
            <person name="Columbaro M."/>
            <person name="Merlini L."/>
            <person name="Lattanzi G."/>
        </authorList>
    </citation>
    <scope>VARIANT EDMD2 HIS-377</scope>
    <scope>VARIANTS EDMD2 ASN-63; PRO-140; GLN-190; GLN-249 AND PRO-527</scope>
</reference>
<reference key="108">
    <citation type="journal article" date="2006" name="J. Clin. Endocrinol. Metab.">
        <title>A homozygous mutation in the lamin A/C gene associated with a novel syndrome of arthropathy, tendinous calcinosis, and progeroid features.</title>
        <authorList>
            <person name="Van Esch H."/>
            <person name="Agarwal A.K."/>
            <person name="Debeer P."/>
            <person name="Fryns J.-P."/>
            <person name="Garg A."/>
        </authorList>
    </citation>
    <scope>VARIANT MADA LEU-573</scope>
</reference>
<reference key="109">
    <citation type="journal article" date="2007" name="Biochem. Biophys. Res. Commun.">
        <title>Collagen expression in fibroblasts with a novel LMNA mutation.</title>
        <authorList>
            <person name="Nguyen D."/>
            <person name="Leistritz D.F."/>
            <person name="Turner L."/>
            <person name="MacGregor D."/>
            <person name="Ohson K."/>
            <person name="Dancey P."/>
            <person name="Martin G.M."/>
            <person name="Oshima J."/>
        </authorList>
    </citation>
    <scope>VARIANT CMDHH ARG-59</scope>
</reference>
<reference key="110">
    <citation type="journal article" date="2007" name="Clin. Genet.">
        <title>Novel LMNA mutations seen in patients with familial partial lipodystrophy subtype 2 (FPLD2; MIM 151660).</title>
        <authorList>
            <person name="Lanktree M."/>
            <person name="Cao H."/>
            <person name="Rabkin S.W."/>
            <person name="Hanna A."/>
            <person name="Hegele R.A."/>
        </authorList>
    </citation>
    <scope>VARIANTS FPLD2 ASN-230; CYS-399 AND LEU-573</scope>
</reference>
<reference key="111">
    <citation type="journal article" date="2007" name="Neurogenetics">
        <title>Mutations of the LMNA gene can mimic autosomal dominant proximal spinal muscular atrophy.</title>
        <authorList>
            <person name="Rudnik-Schoeneborn S."/>
            <person name="Botzenhart E."/>
            <person name="Eggermann T."/>
            <person name="Senderek J."/>
            <person name="Schoser B.G.H."/>
            <person name="Schroeder R."/>
            <person name="Wehnert M."/>
            <person name="Wirth B."/>
            <person name="Zerres K."/>
        </authorList>
    </citation>
    <scope>VARIANT EDMD2 HIS-377</scope>
</reference>
<reference key="112">
    <citation type="journal article" date="2007" name="J. Clin. Endocrinol. Metab.">
        <title>New metabolic phenotypes in laminopathies: LMNA mutations in patients with severe metabolic syndrome.</title>
        <authorList>
            <person name="Decaudain A."/>
            <person name="Vantyghem M.C."/>
            <person name="Guerci B."/>
            <person name="Hecart A.C."/>
            <person name="Auclair M."/>
            <person name="Reznik Y."/>
            <person name="Narbonne H."/>
            <person name="Ducluzeau P.H."/>
            <person name="Donadille B."/>
            <person name="Lebbe C."/>
            <person name="Bereziat V."/>
            <person name="Capeau J."/>
            <person name="Lascols O."/>
            <person name="Vigouroux C."/>
        </authorList>
    </citation>
    <scope>VARIANT PRO-421</scope>
</reference>
<reference key="113">
    <citation type="journal article" date="2008" name="Ann. Neurol.">
        <title>De novo LMNA mutations cause a new form of congenital muscular dystrophy.</title>
        <authorList>
            <person name="Quijano-Roy S."/>
            <person name="Mbieleu B."/>
            <person name="Bonnemann C.G."/>
            <person name="Jeannet P.Y."/>
            <person name="Colomer J."/>
            <person name="Clarke N.F."/>
            <person name="Cuisset J.M."/>
            <person name="Roper H."/>
            <person name="De Meirleir L."/>
            <person name="D'Amico A."/>
            <person name="Ben Yaou R."/>
            <person name="Nascimento A."/>
            <person name="Barois A."/>
            <person name="Demay L."/>
            <person name="Bertini E."/>
            <person name="Ferreiro A."/>
            <person name="Sewry C.A."/>
            <person name="Romero N.B."/>
            <person name="Ryan M."/>
            <person name="Muntoni F."/>
            <person name="Guicheney P."/>
            <person name="Richard P."/>
            <person name="Bonne G."/>
            <person name="Estournet B."/>
        </authorList>
    </citation>
    <scope>VARIANTS MDCL SER-39; PRO-50; TRP-249; PRO-302; LYS-358; SER-380; PRO-453; PRO-455 AND ASP-456</scope>
</reference>
<reference key="114">
    <citation type="journal article" date="2008" name="J. Med. Genet.">
        <title>Heart-hand syndrome of Slovenian type: a new kind of laminopathy.</title>
        <authorList>
            <person name="Renou L."/>
            <person name="Stora S."/>
            <person name="Yaou R.B."/>
            <person name="Volk M."/>
            <person name="Sinkovec M."/>
            <person name="Demay L."/>
            <person name="Richard P."/>
            <person name="Peterlin B."/>
            <person name="Bonne G."/>
        </authorList>
    </citation>
    <scope>INVOLVEMENT IN HHS-SLOVENIAN</scope>
    <scope>FUNCTION</scope>
</reference>
<reference key="115">
    <citation type="journal article" date="2019" name="Nat. Cell Biol.">
        <title>The nucleoskeleton protein IFFO1 immobilizes broken DNA and suppresses chromosome translocation during tumorigenesis.</title>
        <authorList>
            <person name="Li W."/>
            <person name="Bai X."/>
            <person name="Li J."/>
            <person name="Zhao Y."/>
            <person name="Liu J."/>
            <person name="Zhao H."/>
            <person name="Liu L."/>
            <person name="Ding M."/>
            <person name="Wang Q."/>
            <person name="Shi F.Y."/>
            <person name="Hou M."/>
            <person name="Ji J."/>
            <person name="Gao G."/>
            <person name="Guo R."/>
            <person name="Sun Y."/>
            <person name="Liu Y."/>
            <person name="Xu D."/>
        </authorList>
    </citation>
    <scope>FUNCTION</scope>
    <scope>INTERACTION WITH IFFO1</scope>
    <scope>SUBCELLULAR LOCATION</scope>
    <scope>MUTAGENESIS OF SER-22 AND ARG-386</scope>
    <scope>CHARACTERIZATION OF VARIANT EDMD2 GLU-358</scope>
    <scope>REGION</scope>
</reference>
<reference key="116">
    <citation type="journal article" date="2009" name="Am. J. Med. Genet. A">
        <title>Ovarian failure and dilated cardiomyopathy due to a novel lamin mutation.</title>
        <authorList>
            <person name="McPherson E."/>
            <person name="Turner L."/>
            <person name="Zador I."/>
            <person name="Reynolds K."/>
            <person name="Macgregor D."/>
            <person name="Giampietro P.F."/>
        </authorList>
    </citation>
    <scope>VARIANT CMDHH ARG-59</scope>
</reference>
<reference key="117">
    <citation type="journal article" date="2009" name="Am. J. Cardiol.">
        <title>Comprehensive mutation scanning of LMNA in 268 patients with lone atrial fibrillation.</title>
        <authorList>
            <person name="Brauch K.M."/>
            <person name="Chen L.Y."/>
            <person name="Olson T.M."/>
        </authorList>
    </citation>
    <scope>VARIANTS SER-125; ILE-415 AND PRO-488</scope>
</reference>
<reference key="118">
    <citation type="journal article" date="2010" name="Int. J. Cardiol.">
        <title>Dilated cardiomyopathy with profound segmental wall motion abnormalities and ventricular arrhythmia caused by the R541C mutation in the LMNA gene.</title>
        <authorList>
            <person name="Saj M."/>
            <person name="Jankowska A."/>
            <person name="Lewandowski M."/>
            <person name="Szwed H."/>
            <person name="Szperl M."/>
            <person name="Ploski R."/>
            <person name="Bilinska Z.T."/>
        </authorList>
    </citation>
    <scope>VARIANT CMD1A CYS-541</scope>
</reference>
<reference key="119">
    <citation type="journal article" date="2011" name="Eur. J. Med. Genet.">
        <title>Clinical and mutational spectrum in a cohort of 105 unrelated patients with dilated cardiomyopathy.</title>
        <authorList>
            <person name="Millat G."/>
            <person name="Bouvagnet P."/>
            <person name="Chevalier P."/>
            <person name="Sebbag L."/>
            <person name="Dulac A."/>
            <person name="Dauphin C."/>
            <person name="Jouk P.S."/>
            <person name="Delrue M.A."/>
            <person name="Thambo J.B."/>
            <person name="Le Metayer P."/>
            <person name="Seronde M.F."/>
            <person name="Faivre L."/>
            <person name="Eicher J.C."/>
            <person name="Rousson R."/>
        </authorList>
    </citation>
    <scope>VARIANTS CMD1A PHE-92; LYS-161; LYS-317 AND ARG-523</scope>
</reference>
<reference key="120">
    <citation type="journal article" date="2011" name="Eur. J. Med. Genet.">
        <title>LMNA mutation in progeroid syndrome in association with strokes.</title>
        <authorList>
            <person name="Gonzalez-Quereda L."/>
            <person name="Delgadillo V."/>
            <person name="Juan-Mateu J."/>
            <person name="Verdura E."/>
            <person name="Rodriguez M.J."/>
            <person name="Baiget M."/>
            <person name="Pineda M."/>
            <person name="Gallano P."/>
        </authorList>
    </citation>
    <scope>VARIANT HGPS LYS-138</scope>
</reference>
<reference key="121">
    <citation type="journal article" date="2011" name="Hum. Mutat.">
        <title>Novel LMNA mutations in patients with Emery-Dreifuss muscular dystrophy and functional characterization of four LMNA mutations.</title>
        <authorList>
            <person name="Scharner J."/>
            <person name="Brown C.A."/>
            <person name="Bower M."/>
            <person name="Iannaccone S.T."/>
            <person name="Khatri I.A."/>
            <person name="Escolar D."/>
            <person name="Gordon E."/>
            <person name="Felice K."/>
            <person name="Crowe C.A."/>
            <person name="Grosmann C."/>
            <person name="Meriggioli M.N."/>
            <person name="Asamoah A."/>
            <person name="Gordon O."/>
            <person name="Gnocchi V.F."/>
            <person name="Ellis J.A."/>
            <person name="Mendell J.R."/>
            <person name="Zammit P.S."/>
        </authorList>
    </citation>
    <scope>VARIANTS EDMD2 SER-39; CYS-45; PRO-150; PRO-189; ARG-190 INS; LEU-206; TRP-249; GLN-249; PRO-268; PRO-271; PRO-294; PRO-295; PRO-303; GLN-355 DEL; LYS-358; LYS-361; LYS-386; ASP-449; TRP-453; PRO-454; TYR-461; ARG-467; PRO-527; LYS-528; ARG-528; SER-541; PRO-541; SER-602 AND CYS-644</scope>
    <scope>CHARACTERIZATION OF VARIANTS EDMD2 PRO-25; TRP-249; ILE-456 AND PRO-541</scope>
</reference>
<reference key="122">
    <citation type="journal article" date="2011" name="Hum. Mol. Genet.">
        <title>High prevalence of laminopathies among patients with metabolic syndrome.</title>
        <authorList>
            <person name="Dutour A."/>
            <person name="Roll P."/>
            <person name="Gaborit B."/>
            <person name="Courrier S."/>
            <person name="Alessi M.C."/>
            <person name="Tregouet D.A."/>
            <person name="Angelis F."/>
            <person name="Robaglia-Schlupp A."/>
            <person name="Lesavre N."/>
            <person name="Cau P."/>
            <person name="Levy N."/>
            <person name="Badens C."/>
            <person name="Morange P.E."/>
        </authorList>
    </citation>
    <scope>VARIANTS ASP-411 AND ASP-631</scope>
</reference>
<reference key="123">
    <citation type="journal article" date="2012" name="Muscle Nerve">
        <title>Autosomal recessive Emery-Dreifuss muscular dystrophy caused by a novel mutation (R225Q) in the lamin A/C gene identified by exome sequencing.</title>
        <authorList>
            <person name="Jimenez-Escrig A."/>
            <person name="Gobernado I."/>
            <person name="Garcia-Villanueva M."/>
            <person name="Sanchez-Herranz A."/>
        </authorList>
    </citation>
    <scope>VARIANT EDMD3 GLN-225</scope>
    <scope>FUNCTION</scope>
</reference>
<reference key="124">
    <citation type="journal article" date="2013" name="PLoS ONE">
        <title>Mutations in LMNA modulate the lamin A--Nesprin-2 interaction and cause LINC complex alterations.</title>
        <authorList>
            <person name="Yang L."/>
            <person name="Munck M."/>
            <person name="Swamvdinathan K."/>
            <person name="Kapinos L.E."/>
            <person name="Noegel A.A."/>
            <person name="Neumann S."/>
        </authorList>
    </citation>
    <scope>CHARACTERIZATION OF VARIANTS CYS-401; ASP-411; CYS-413; ILE-415; CYS-419; PRO-421 AND GLY-427</scope>
    <scope>INTERACTION WITH SYNE2</scope>
</reference>
<reference key="125">
    <citation type="journal article" date="2014" name="Diabetes Metab.">
        <title>LMNA gene mutation as a model of cardiometabolic dysfunction: from genetic analysis to treatment response.</title>
        <authorList>
            <person name="Chirico V."/>
            <person name="Ferrau V."/>
            <person name="Loddo I."/>
            <person name="Briuglia S."/>
            <person name="Amorini M."/>
            <person name="Salpietro V."/>
            <person name="Lacquaniti A."/>
            <person name="Salpietro C."/>
            <person name="Arrigo T."/>
        </authorList>
    </citation>
    <scope>VARIANT FPLD2 GLU-515</scope>
</reference>
<reference key="126">
    <citation type="journal article" date="2017" name="Clin. Genet.">
        <title>Improved diagnostic yield of neuromuscular disorders applying clinical exome sequencing in patients arising from a consanguineous population.</title>
        <authorList>
            <person name="Fattahi Z."/>
            <person name="Kalhor Z."/>
            <person name="Fadaee M."/>
            <person name="Vazehan R."/>
            <person name="Parsimehr E."/>
            <person name="Abolhassani A."/>
            <person name="Beheshtian M."/>
            <person name="Zamani G."/>
            <person name="Nafissi S."/>
            <person name="Nilipour Y."/>
            <person name="Akbari M.R."/>
            <person name="Kahrizi K."/>
            <person name="Kariminejad A."/>
            <person name="Najmabadi H."/>
        </authorList>
    </citation>
    <scope>VARIANT EDMD3 SER-24</scope>
    <scope>VARIANT EDMD2 CYS-259</scope>
</reference>
<organism>
    <name type="scientific">Homo sapiens</name>
    <name type="common">Human</name>
    <dbReference type="NCBI Taxonomy" id="9606"/>
    <lineage>
        <taxon>Eukaryota</taxon>
        <taxon>Metazoa</taxon>
        <taxon>Chordata</taxon>
        <taxon>Craniata</taxon>
        <taxon>Vertebrata</taxon>
        <taxon>Euteleostomi</taxon>
        <taxon>Mammalia</taxon>
        <taxon>Eutheria</taxon>
        <taxon>Euarchontoglires</taxon>
        <taxon>Primates</taxon>
        <taxon>Haplorrhini</taxon>
        <taxon>Catarrhini</taxon>
        <taxon>Hominidae</taxon>
        <taxon>Homo</taxon>
    </lineage>
</organism>
<gene>
    <name type="primary">LMNA</name>
    <name type="synonym">LMN1</name>
</gene>
<comment type="function">
    <molecule>Lamin-A/C</molecule>
    <text evidence="7 9 10 14 21 25 37 45 59 61 75 78 79 80 83 85 86 90 91 94 95">Lamins are intermediate filament proteins that assemble into a filamentous meshwork, and which constitute the major components of the nuclear lamina, a fibrous layer on the nucleoplasmic side of the inner nuclear membrane (PubMed:10080180, PubMed:10580070, PubMed:10587585, PubMed:10814726, PubMed:11799477, PubMed:12075506, PubMed:12927431, PubMed:15317753, PubMed:18551513, PubMed:18611980, PubMed:2188730, PubMed:22431096, PubMed:2344612, PubMed:23666920, PubMed:24741066, PubMed:31434876, PubMed:31548606, PubMed:37788673, PubMed:37832547). Lamins provide a framework for the nuclear envelope, bridging the nuclear envelope and chromatin, thereby playing an important role in nuclear assembly, chromatin organization, nuclear membrane and telomere dynamics (PubMed:10080180, PubMed:10580070, PubMed:10587585, PubMed:10814726, PubMed:11799477, PubMed:12075506, PubMed:12927431, PubMed:15317753, PubMed:18551513, PubMed:18611980, PubMed:22431096, PubMed:23666920, PubMed:24741066, PubMed:31548606, PubMed:37788673, PubMed:37832547). Lamin A and C also regulate matrix stiffness by conferring nuclear mechanical properties (PubMed:23990565, PubMed:25127216). The structural integrity of the lamina is strictly controlled by the cell cycle, as seen by the disintegration and formation of the nuclear envelope in prophase and telophase, respectively (PubMed:2188730, PubMed:2344612). Lamin A and C are present in equal amounts in the lamina of mammals (PubMed:10080180, PubMed:10580070, PubMed:10587585, PubMed:10814726, PubMed:11799477, PubMed:12075506, PubMed:12927431, PubMed:15317753, PubMed:18551513, PubMed:18611980, PubMed:22431096, PubMed:23666920, PubMed:31548606). Also invoved in DNA repair: recruited by DNA repair proteins XRCC4 and IFFO1 to the DNA double-strand breaks (DSBs) to prevent chromosome translocation by immobilizing broken DNA ends (PubMed:31548606). Required for normal development of peripheral nervous system and skeletal muscle and for muscle satellite cell proliferation (PubMed:10080180, PubMed:10814726, PubMed:11799477, PubMed:18551513, PubMed:22431096). Required for osteoblastogenesis and bone formation (PubMed:12075506, PubMed:15317753, PubMed:18611980). Also prevents fat infiltration of muscle and bone marrow, helping to maintain the volume and strength of skeletal muscle and bone (PubMed:10587585). Required for cardiac homeostasis (PubMed:10580070, PubMed:12927431, PubMed:18611980, PubMed:23666920).</text>
</comment>
<comment type="function">
    <molecule>Prelamin-A/C</molecule>
    <text evidence="69">Prelamin-A/C can accelerate smooth muscle cell senescence (PubMed:20458013). It acts to disrupt mitosis and induce DNA damage in vascular smooth muscle cells (VSMCs), leading to mitotic failure, genomic instability, and premature senescence (PubMed:20458013).</text>
</comment>
<comment type="subunit">
    <text evidence="1 8 28 47 67 71 76 81 82 89 90 91 92 93">Homodimer of lamin A and lamin C (PubMed:15476822, PubMed:31434876, PubMed:33706103). Lamin dimers then assemble into dimeric head-to-tail polymers (PubMed:31434876). Ultimately, two head-to-tail polymers assemble laterally into a protofilament with a uniformly shaped rod of 3.5 nm in diameter (PubMed:31434876). Interacts with lamin-associated polypeptides IA, IB and TMPO-alpha, RB1 and with emerin (PubMed:12475961). Interacts with SREBF1, SREBF2, SUN2 and TMEM43 (By similarity). Interacts with TMEM201 (PubMed:35311970). Proteolytically processed isoform A interacts with NARF (PubMed:10514485). Interacts with SUN1 (PubMed:19933576). Interacts with MLIP (PubMed:21498514). Interacts with DMPK; may regulate nuclear envelope stability (PubMed:21949239). Interacts with SUV39H1; the interaction increases stability of SUV39H1 (PubMed:23695662). Interacts with SYNE2 (PubMed:23977161). Interacts with ITSN1 isoform 2 (PubMed:29599122). Interacts with IFFO1; enables the formation of an interior nucleoskeleton that is recruited to DNA double-strand breaks (PubMed:31548606).</text>
</comment>
<comment type="subunit">
    <molecule>Prelamin-A/C</molecule>
    <text evidence="65">Interacts with EMD.</text>
</comment>
<comment type="subunit">
    <molecule>Isoform C</molecule>
    <text evidence="54">Interacts (via C-terminus) with LEMD2 (via N-terminus) (in vitro).</text>
</comment>
<comment type="interaction">
    <interactant intactId="EBI-351935">
        <id>P02545</id>
    </interactant>
    <interactant intactId="EBI-16436655">
        <id>Q6H8Q1-8</id>
        <label>ABLIM2</label>
    </interactant>
    <organismsDiffer>false</organismsDiffer>
    <experiments>3</experiments>
</comment>
<comment type="interaction">
    <interactant intactId="EBI-351935">
        <id>P02545</id>
    </interactant>
    <interactant intactId="EBI-1633210">
        <id>P18054</id>
        <label>ALOX12</label>
    </interactant>
    <organismsDiffer>false</organismsDiffer>
    <experiments>4</experiments>
</comment>
<comment type="interaction">
    <interactant intactId="EBI-351935">
        <id>P02545</id>
    </interactant>
    <interactant intactId="EBI-745641">
        <id>Q96DX5</id>
        <label>ASB9</label>
    </interactant>
    <organismsDiffer>false</organismsDiffer>
    <experiments>3</experiments>
</comment>
<comment type="interaction">
    <interactant intactId="EBI-351935">
        <id>P02545</id>
    </interactant>
    <interactant intactId="EBI-2410266">
        <id>Q8WXF7</id>
        <label>ATL1</label>
    </interactant>
    <organismsDiffer>false</organismsDiffer>
    <experiments>3</experiments>
</comment>
<comment type="interaction">
    <interactant intactId="EBI-351935">
        <id>P02545</id>
    </interactant>
    <interactant intactId="EBI-10988864">
        <id>P46379-2</id>
        <label>BAG6</label>
    </interactant>
    <organismsDiffer>false</organismsDiffer>
    <experiments>3</experiments>
</comment>
<comment type="interaction">
    <interactant intactId="EBI-351935">
        <id>P02545</id>
    </interactant>
    <interactant intactId="EBI-742750">
        <id>Q8TBE0</id>
        <label>BAHD1</label>
    </interactant>
    <organismsDiffer>false</organismsDiffer>
    <experiments>3</experiments>
</comment>
<comment type="interaction">
    <interactant intactId="EBI-351935">
        <id>P02545</id>
    </interactant>
    <interactant intactId="EBI-23662416">
        <id>Q9ULD4-2</id>
        <label>BRPF3</label>
    </interactant>
    <organismsDiffer>false</organismsDiffer>
    <experiments>3</experiments>
</comment>
<comment type="interaction">
    <interactant intactId="EBI-351935">
        <id>P02545</id>
    </interactant>
    <interactant intactId="EBI-9091443">
        <id>Q96GN5-2</id>
        <label>CDCA7L</label>
    </interactant>
    <organismsDiffer>false</organismsDiffer>
    <experiments>3</experiments>
</comment>
<comment type="interaction">
    <interactant intactId="EBI-351935">
        <id>P02545</id>
    </interactant>
    <interactant intactId="EBI-6660184">
        <id>Q3SX64</id>
        <label>CIMAP1D</label>
    </interactant>
    <organismsDiffer>false</organismsDiffer>
    <experiments>3</experiments>
</comment>
<comment type="interaction">
    <interactant intactId="EBI-351935">
        <id>P02545</id>
    </interactant>
    <interactant intactId="EBI-749800">
        <id>Q9UII6</id>
        <label>DUSP13B</label>
    </interactant>
    <organismsDiffer>false</organismsDiffer>
    <experiments>7</experiments>
</comment>
<comment type="interaction">
    <interactant intactId="EBI-351935">
        <id>P02545</id>
    </interactant>
    <interactant intactId="EBI-489887">
        <id>P50402</id>
        <label>EMD</label>
    </interactant>
    <organismsDiffer>false</organismsDiffer>
    <experiments>7</experiments>
</comment>
<comment type="interaction">
    <interactant intactId="EBI-351935">
        <id>P02545</id>
    </interactant>
    <interactant intactId="EBI-719941">
        <id>Q3B820</id>
        <label>FAM161A</label>
    </interactant>
    <organismsDiffer>false</organismsDiffer>
    <experiments>3</experiments>
</comment>
<comment type="interaction">
    <interactant intactId="EBI-351935">
        <id>P02545</id>
    </interactant>
    <interactant intactId="EBI-25843965">
        <id>A6H8Z2-3</id>
        <label>FAM221B</label>
    </interactant>
    <organismsDiffer>false</organismsDiffer>
    <experiments>3</experiments>
</comment>
<comment type="interaction">
    <interactant intactId="EBI-351935">
        <id>P02545</id>
    </interactant>
    <interactant intactId="EBI-12955347">
        <id>P58499</id>
        <label>FAM3B</label>
    </interactant>
    <organismsDiffer>false</organismsDiffer>
    <experiments>3</experiments>
</comment>
<comment type="interaction">
    <interactant intactId="EBI-351935">
        <id>P02545</id>
    </interactant>
    <interactant intactId="EBI-8468186">
        <id>Q8IZU1</id>
        <label>FAM9A</label>
    </interactant>
    <organismsDiffer>false</organismsDiffer>
    <experiments>3</experiments>
</comment>
<comment type="interaction">
    <interactant intactId="EBI-351935">
        <id>P02545</id>
    </interactant>
    <interactant intactId="EBI-745707">
        <id>Q8NEA9</id>
        <label>GMCL2</label>
    </interactant>
    <organismsDiffer>false</organismsDiffer>
    <experiments>3</experiments>
</comment>
<comment type="interaction">
    <interactant intactId="EBI-351935">
        <id>P02545</id>
    </interactant>
    <interactant intactId="EBI-494830">
        <id>P16104</id>
        <label>H2AX</label>
    </interactant>
    <organismsDiffer>false</organismsDiffer>
    <experiments>3</experiments>
</comment>
<comment type="interaction">
    <interactant intactId="EBI-351935">
        <id>P02545</id>
    </interactant>
    <interactant intactId="EBI-750650">
        <id>Q71DI3</id>
        <label>H3C15</label>
    </interactant>
    <organismsDiffer>false</organismsDiffer>
    <experiments>6</experiments>
</comment>
<comment type="interaction">
    <interactant intactId="EBI-351935">
        <id>P02545</id>
    </interactant>
    <interactant intactId="EBI-21251044">
        <id>Q0D2I5-5</id>
        <label>IFFO1</label>
    </interactant>
    <organismsDiffer>false</organismsDiffer>
    <experiments>4</experiments>
</comment>
<comment type="interaction">
    <interactant intactId="EBI-351935">
        <id>P02545</id>
    </interactant>
    <interactant intactId="EBI-713456">
        <id>Q13123</id>
        <label>IK</label>
    </interactant>
    <organismsDiffer>false</organismsDiffer>
    <experiments>3</experiments>
</comment>
<comment type="interaction">
    <interactant intactId="EBI-351935">
        <id>P02545</id>
    </interactant>
    <interactant intactId="EBI-17178971">
        <id>Q14005-2</id>
        <label>IL16</label>
    </interactant>
    <organismsDiffer>false</organismsDiffer>
    <experiments>3</experiments>
</comment>
<comment type="interaction">
    <interactant intactId="EBI-351935">
        <id>P02545</id>
    </interactant>
    <interactant intactId="EBI-10285157">
        <id>Q96EL1</id>
        <label>INKA1</label>
    </interactant>
    <organismsDiffer>false</organismsDiffer>
    <experiments>3</experiments>
</comment>
<comment type="interaction">
    <interactant intactId="EBI-351935">
        <id>P02545</id>
    </interactant>
    <interactant intactId="EBI-10220600">
        <id>Q8NA54</id>
        <label>IQUB</label>
    </interactant>
    <organismsDiffer>false</organismsDiffer>
    <experiments>3</experiments>
</comment>
<comment type="interaction">
    <interactant intactId="EBI-351935">
        <id>P02545</id>
    </interactant>
    <interactant intactId="EBI-714994">
        <id>Q99612</id>
        <label>KLF6</label>
    </interactant>
    <organismsDiffer>false</organismsDiffer>
    <experiments>3</experiments>
</comment>
<comment type="interaction">
    <interactant intactId="EBI-351935">
        <id>P02545</id>
    </interactant>
    <interactant intactId="EBI-10172290">
        <id>P60409</id>
        <label>KRTAP10-7</label>
    </interactant>
    <organismsDiffer>false</organismsDiffer>
    <experiments>3</experiments>
</comment>
<comment type="interaction">
    <interactant intactId="EBI-351935">
        <id>P02545</id>
    </interactant>
    <interactant intactId="EBI-968218">
        <id>P20700</id>
        <label>LMNB1</label>
    </interactant>
    <organismsDiffer>false</organismsDiffer>
    <experiments>23</experiments>
</comment>
<comment type="interaction">
    <interactant intactId="EBI-351935">
        <id>P02545</id>
    </interactant>
    <interactant intactId="EBI-2830427">
        <id>Q03252</id>
        <label>LMNB2</label>
    </interactant>
    <organismsDiffer>false</organismsDiffer>
    <experiments>10</experiments>
</comment>
<comment type="interaction">
    <interactant intactId="EBI-351935">
        <id>P02545</id>
    </interactant>
    <interactant intactId="EBI-2880203">
        <id>O76041</id>
        <label>NEBL</label>
    </interactant>
    <organismsDiffer>false</organismsDiffer>
    <experiments>3</experiments>
</comment>
<comment type="interaction">
    <interactant intactId="EBI-351935">
        <id>P02545</id>
    </interactant>
    <interactant intactId="EBI-2130062">
        <id>Q12986</id>
        <label>NFX1</label>
    </interactant>
    <organismsDiffer>false</organismsDiffer>
    <experiments>3</experiments>
</comment>
<comment type="interaction">
    <interactant intactId="EBI-351935">
        <id>P02545</id>
    </interactant>
    <interactant intactId="EBI-1051262">
        <id>Q9Y239</id>
        <label>NOD1</label>
    </interactant>
    <organismsDiffer>false</organismsDiffer>
    <experiments>3</experiments>
</comment>
<comment type="interaction">
    <interactant intactId="EBI-351935">
        <id>P02545</id>
    </interactant>
    <interactant intactId="EBI-11952806">
        <id>Q13133-3</id>
        <label>NR1H3</label>
    </interactant>
    <organismsDiffer>false</organismsDiffer>
    <experiments>3</experiments>
</comment>
<comment type="interaction">
    <interactant intactId="EBI-351935">
        <id>P02545</id>
    </interactant>
    <interactant intactId="EBI-22002759">
        <id>Q9BZ95-3</id>
        <label>NSD3</label>
    </interactant>
    <organismsDiffer>false</organismsDiffer>
    <experiments>3</experiments>
</comment>
<comment type="interaction">
    <interactant intactId="EBI-351935">
        <id>P02545</id>
    </interactant>
    <interactant intactId="EBI-25842707">
        <id>Q6X4W1-6</id>
        <label>NSMF</label>
    </interactant>
    <organismsDiffer>false</organismsDiffer>
    <experiments>3</experiments>
</comment>
<comment type="interaction">
    <interactant intactId="EBI-351935">
        <id>P02545</id>
    </interactant>
    <interactant intactId="EBI-1050769">
        <id>O75694</id>
        <label>NUP155</label>
    </interactant>
    <organismsDiffer>false</organismsDiffer>
    <experiments>6</experiments>
</comment>
<comment type="interaction">
    <interactant intactId="EBI-351935">
        <id>P02545</id>
    </interactant>
    <interactant intactId="EBI-1042651">
        <id>Q96RG2</id>
        <label>PASK</label>
    </interactant>
    <organismsDiffer>false</organismsDiffer>
    <experiments>2</experiments>
</comment>
<comment type="interaction">
    <interactant intactId="EBI-351935">
        <id>P02545</id>
    </interactant>
    <interactant intactId="EBI-11022007">
        <id>Q9HBE1-4</id>
        <label>PATZ1</label>
    </interactant>
    <organismsDiffer>false</organismsDiffer>
    <experiments>3</experiments>
</comment>
<comment type="interaction">
    <interactant intactId="EBI-351935">
        <id>P02545</id>
    </interactant>
    <interactant intactId="EBI-448369">
        <id>Q96FA3</id>
        <label>PELI1</label>
    </interactant>
    <organismsDiffer>false</organismsDiffer>
    <experiments>3</experiments>
</comment>
<comment type="interaction">
    <interactant intactId="EBI-351935">
        <id>P02545</id>
    </interactant>
    <interactant intactId="EBI-629434">
        <id>O75925</id>
        <label>PIAS1</label>
    </interactant>
    <organismsDiffer>false</organismsDiffer>
    <experiments>3</experiments>
</comment>
<comment type="interaction">
    <interactant intactId="EBI-351935">
        <id>P02545</id>
    </interactant>
    <interactant intactId="EBI-10223258">
        <id>Q03181-2</id>
        <label>PPARD</label>
    </interactant>
    <organismsDiffer>false</organismsDiffer>
    <experiments>3</experiments>
</comment>
<comment type="interaction">
    <interactant intactId="EBI-351935">
        <id>P02545</id>
    </interactant>
    <interactant intactId="EBI-12123390">
        <id>Q9NWB1-5</id>
        <label>RBFOX1</label>
    </interactant>
    <organismsDiffer>false</organismsDiffer>
    <experiments>3</experiments>
</comment>
<comment type="interaction">
    <interactant intactId="EBI-351935">
        <id>P02545</id>
    </interactant>
    <interactant intactId="EBI-746325">
        <id>Q8TCX5</id>
        <label>RHPN1</label>
    </interactant>
    <organismsDiffer>false</organismsDiffer>
    <experiments>3</experiments>
</comment>
<comment type="interaction">
    <interactant intactId="EBI-351935">
        <id>P02545</id>
    </interactant>
    <interactant intactId="EBI-749039">
        <id>Q8WVD3</id>
        <label>RNF138</label>
    </interactant>
    <organismsDiffer>false</organismsDiffer>
    <experiments>3</experiments>
</comment>
<comment type="interaction">
    <interactant intactId="EBI-351935">
        <id>P02545</id>
    </interactant>
    <interactant intactId="EBI-354303">
        <id>P62701</id>
        <label>RPS4X</label>
    </interactant>
    <organismsDiffer>false</organismsDiffer>
    <experiments>3</experiments>
</comment>
<comment type="interaction">
    <interactant intactId="EBI-351935">
        <id>P02545</id>
    </interactant>
    <interactant intactId="EBI-10181525">
        <id>Q6ZNE9</id>
        <label>RUFY4</label>
    </interactant>
    <organismsDiffer>false</organismsDiffer>
    <experiments>3</experiments>
</comment>
<comment type="interaction">
    <interactant intactId="EBI-351935">
        <id>P02545</id>
    </interactant>
    <interactant intactId="EBI-752324">
        <id>Q8N488</id>
        <label>RYBP</label>
    </interactant>
    <organismsDiffer>false</organismsDiffer>
    <experiments>3</experiments>
</comment>
<comment type="interaction">
    <interactant intactId="EBI-351935">
        <id>P02545</id>
    </interactant>
    <interactant intactId="EBI-2822550">
        <id>Q8IYM2</id>
        <label>SLFN12</label>
    </interactant>
    <organismsDiffer>false</organismsDiffer>
    <experiments>3</experiments>
</comment>
<comment type="interaction">
    <interactant intactId="EBI-351935">
        <id>P02545</id>
    </interactant>
    <interactant intactId="EBI-632715">
        <id>Q13573</id>
        <label>SNW1</label>
    </interactant>
    <organismsDiffer>false</organismsDiffer>
    <experiments>4</experiments>
</comment>
<comment type="interaction">
    <interactant intactId="EBI-351935">
        <id>P02545</id>
    </interactant>
    <interactant intactId="EBI-5235340">
        <id>Q7Z699</id>
        <label>SPRED1</label>
    </interactant>
    <organismsDiffer>false</organismsDiffer>
    <experiments>3</experiments>
</comment>
<comment type="interaction">
    <interactant intactId="EBI-351935">
        <id>P02545</id>
    </interactant>
    <interactant intactId="EBI-7082156">
        <id>Q7Z698</id>
        <label>SPRED2</label>
    </interactant>
    <organismsDiffer>false</organismsDiffer>
    <experiments>3</experiments>
</comment>
<comment type="interaction">
    <interactant intactId="EBI-351935">
        <id>P02545</id>
    </interactant>
    <interactant intactId="EBI-373258">
        <id>O75886</id>
        <label>STAM2</label>
    </interactant>
    <organismsDiffer>false</organismsDiffer>
    <experiments>3</experiments>
</comment>
<comment type="interaction">
    <interactant intactId="EBI-351935">
        <id>P02545</id>
    </interactant>
    <interactant intactId="EBI-357085">
        <id>Q9UNE7</id>
        <label>STUB1</label>
    </interactant>
    <organismsDiffer>false</organismsDiffer>
    <experiments>3</experiments>
</comment>
<comment type="interaction">
    <interactant intactId="EBI-351935">
        <id>P02545</id>
    </interactant>
    <interactant intactId="EBI-2796904">
        <id>O94901</id>
        <label>SUN1</label>
    </interactant>
    <organismsDiffer>false</organismsDiffer>
    <experiments>2</experiments>
</comment>
<comment type="interaction">
    <interactant intactId="EBI-351935">
        <id>P02545</id>
    </interactant>
    <interactant intactId="EBI-1044964">
        <id>Q9UH99</id>
        <label>SUN2</label>
    </interactant>
    <organismsDiffer>false</organismsDiffer>
    <experiments>5</experiments>
</comment>
<comment type="interaction">
    <interactant intactId="EBI-351935">
        <id>P02545</id>
    </interactant>
    <interactant intactId="EBI-6170976">
        <id>Q8WXH0-1</id>
        <label>SYNE2</label>
    </interactant>
    <organismsDiffer>false</organismsDiffer>
    <experiments>3</experiments>
</comment>
<comment type="interaction">
    <interactant intactId="EBI-351935">
        <id>P02545</id>
    </interactant>
    <interactant intactId="EBI-711018">
        <id>P54274-2</id>
        <label>TERF1</label>
    </interactant>
    <organismsDiffer>false</organismsDiffer>
    <experiments>3</experiments>
</comment>
<comment type="interaction">
    <interactant intactId="EBI-351935">
        <id>P02545</id>
    </interactant>
    <interactant intactId="EBI-395393">
        <id>P42166</id>
        <label>TMPO</label>
    </interactant>
    <organismsDiffer>false</organismsDiffer>
    <experiments>4</experiments>
</comment>
<comment type="interaction">
    <interactant intactId="EBI-351935">
        <id>P02545</id>
    </interactant>
    <interactant intactId="EBI-2509913">
        <id>Q96KP6</id>
        <label>TNIP3</label>
    </interactant>
    <organismsDiffer>false</organismsDiffer>
    <experiments>3</experiments>
</comment>
<comment type="interaction">
    <interactant intactId="EBI-351935">
        <id>P02545</id>
    </interactant>
    <interactant intactId="EBI-11525489">
        <id>Q86WT6-2</id>
        <label>TRIM69</label>
    </interactant>
    <organismsDiffer>false</organismsDiffer>
    <experiments>3</experiments>
</comment>
<comment type="interaction">
    <interactant intactId="EBI-351935">
        <id>P02545</id>
    </interactant>
    <interactant intactId="EBI-9088812">
        <id>Q5VYS8-5</id>
        <label>TUT7</label>
    </interactant>
    <organismsDiffer>false</organismsDiffer>
    <experiments>3</experiments>
</comment>
<comment type="interaction">
    <interactant intactId="EBI-351935">
        <id>P02545</id>
    </interactant>
    <interactant intactId="EBI-11530712">
        <id>Q04323-2</id>
        <label>UBXN1</label>
    </interactant>
    <organismsDiffer>false</organismsDiffer>
    <experiments>3</experiments>
</comment>
<comment type="interaction">
    <interactant intactId="EBI-351935">
        <id>P02545</id>
    </interactant>
    <interactant intactId="EBI-12041225">
        <id>Q9Y4E8-2</id>
        <label>USP15</label>
    </interactant>
    <organismsDiffer>false</organismsDiffer>
    <experiments>3</experiments>
</comment>
<comment type="interaction">
    <interactant intactId="EBI-351935">
        <id>P02545</id>
    </interactant>
    <interactant intactId="EBI-11975223">
        <id>Q70EL1-9</id>
        <label>USP54</label>
    </interactant>
    <organismsDiffer>false</organismsDiffer>
    <experiments>3</experiments>
</comment>
<comment type="interaction">
    <interactant intactId="EBI-351935">
        <id>P02545</id>
    </interactant>
    <interactant intactId="EBI-347088">
        <id>P63104</id>
        <label>YWHAZ</label>
    </interactant>
    <organismsDiffer>false</organismsDiffer>
    <experiments>2</experiments>
</comment>
<comment type="interaction">
    <interactant intactId="EBI-351935">
        <id>P02545</id>
    </interactant>
    <interactant intactId="EBI-744864">
        <id>P10074</id>
        <label>ZBTB48</label>
    </interactant>
    <organismsDiffer>false</organismsDiffer>
    <experiments>3</experiments>
</comment>
<comment type="interaction">
    <interactant intactId="EBI-351935">
        <id>P02545</id>
    </interactant>
    <interactant intactId="EBI-7236323">
        <id>Q6ZN57</id>
        <label>ZFP2</label>
    </interactant>
    <organismsDiffer>false</organismsDiffer>
    <experiments>3</experiments>
</comment>
<comment type="interaction">
    <interactant intactId="EBI-351935">
        <id>P02545</id>
    </interactant>
    <interactant intactId="EBI-947213">
        <id>Q8WW38</id>
        <label>ZFPM2</label>
    </interactant>
    <organismsDiffer>false</organismsDiffer>
    <experiments>3</experiments>
</comment>
<comment type="interaction">
    <interactant intactId="EBI-351935">
        <id>P02545</id>
    </interactant>
    <interactant intactId="EBI-2602314">
        <id>Q15776</id>
        <label>ZKSCAN8</label>
    </interactant>
    <organismsDiffer>false</organismsDiffer>
    <experiments>3</experiments>
</comment>
<comment type="interaction">
    <interactant intactId="EBI-351935">
        <id>P02545</id>
    </interactant>
    <interactant intactId="EBI-717634">
        <id>P17024</id>
        <label>ZNF20</label>
    </interactant>
    <organismsDiffer>false</organismsDiffer>
    <experiments>3</experiments>
</comment>
<comment type="interaction">
    <interactant intactId="EBI-351935">
        <id>P02545</id>
    </interactant>
    <interactant intactId="EBI-2818408">
        <id>Q14585</id>
        <label>ZNF345</label>
    </interactant>
    <organismsDiffer>false</organismsDiffer>
    <experiments>3</experiments>
</comment>
<comment type="interaction">
    <interactant intactId="EBI-351935">
        <id>P02545</id>
    </interactant>
    <interactant intactId="EBI-8489702">
        <id>Q9C0F3</id>
        <label>ZNF436</label>
    </interactant>
    <organismsDiffer>false</organismsDiffer>
    <experiments>3</experiments>
</comment>
<comment type="interaction">
    <interactant intactId="EBI-351935">
        <id>P02545</id>
    </interactant>
    <interactant intactId="EBI-12010736">
        <id>Q8N0Y2-2</id>
        <label>ZNF444</label>
    </interactant>
    <organismsDiffer>false</organismsDiffer>
    <experiments>3</experiments>
</comment>
<comment type="interaction">
    <interactant intactId="EBI-351935">
        <id>P02545</id>
    </interactant>
    <interactant intactId="EBI-25831733">
        <id>Q96MN9-2</id>
        <label>ZNF488</label>
    </interactant>
    <organismsDiffer>false</organismsDiffer>
    <experiments>3</experiments>
</comment>
<comment type="interaction">
    <interactant intactId="EBI-351935">
        <id>P02545</id>
    </interactant>
    <interactant intactId="EBI-10486136">
        <id>Q6ZNH5</id>
        <label>ZNF497</label>
    </interactant>
    <organismsDiffer>false</organismsDiffer>
    <experiments>3</experiments>
</comment>
<comment type="interaction">
    <interactant intactId="EBI-351935">
        <id>P02545</id>
    </interactant>
    <interactant intactId="EBI-10273713">
        <id>Q8TBZ8</id>
        <label>ZNF564</label>
    </interactant>
    <organismsDiffer>false</organismsDiffer>
    <experiments>3</experiments>
</comment>
<comment type="interaction">
    <interactant intactId="EBI-351935">
        <id>P02545</id>
    </interactant>
    <interactant intactId="EBI-10172590">
        <id>Q7Z3I7</id>
        <label>ZNF572</label>
    </interactant>
    <organismsDiffer>false</organismsDiffer>
    <experiments>3</experiments>
</comment>
<comment type="interaction">
    <interactant intactId="EBI-351935">
        <id>P02545</id>
    </interactant>
    <interactant intactId="EBI-9091553">
        <id>Q96LX8</id>
        <label>ZNF597</label>
    </interactant>
    <organismsDiffer>false</organismsDiffer>
    <experiments>3</experiments>
</comment>
<comment type="interaction">
    <interactant intactId="EBI-351935">
        <id>P02545</id>
    </interactant>
    <interactant intactId="EBI-4395789">
        <id>Q9BS31</id>
        <label>ZNF649</label>
    </interactant>
    <organismsDiffer>false</organismsDiffer>
    <experiments>3</experiments>
</comment>
<comment type="interaction">
    <interactant intactId="EBI-351935">
        <id>P02545</id>
    </interactant>
    <interactant intactId="EBI-1210440">
        <id>O43309</id>
        <label>ZSCAN12</label>
    </interactant>
    <organismsDiffer>false</organismsDiffer>
    <experiments>3</experiments>
</comment>
<comment type="interaction">
    <interactant intactId="EBI-351935">
        <id>P02545</id>
    </interactant>
    <interactant intactId="EBI-10178224">
        <id>P10073</id>
        <label>ZSCAN22</label>
    </interactant>
    <organismsDiffer>false</organismsDiffer>
    <experiments>3</experiments>
</comment>
<comment type="interaction">
    <interactant intactId="EBI-351935">
        <id>P02545</id>
    </interactant>
    <interactant intactId="EBI-7183650">
        <id>P10215</id>
        <label>NEC1</label>
    </interactant>
    <organismsDiffer>true</organismsDiffer>
    <experiments>2</experiments>
</comment>
<comment type="interaction">
    <interactant intactId="EBI-351935">
        <id>P02545</id>
    </interactant>
    <interactant intactId="EBI-7183680">
        <id>P10218</id>
        <label>NEC2</label>
    </interactant>
    <organismsDiffer>true</organismsDiffer>
    <experiments>2</experiments>
</comment>
<comment type="interaction">
    <interactant intactId="EBI-351949">
        <id>P02545-1</id>
    </interactant>
    <interactant intactId="EBI-489887">
        <id>P50402</id>
        <label>EMD</label>
    </interactant>
    <organismsDiffer>false</organismsDiffer>
    <experiments>4</experiments>
</comment>
<comment type="interaction">
    <interactant intactId="EBI-351949">
        <id>P02545-1</id>
    </interactant>
    <interactant intactId="EBI-968218">
        <id>P20700</id>
        <label>LMNB1</label>
    </interactant>
    <organismsDiffer>false</organismsDiffer>
    <experiments>5</experiments>
</comment>
<comment type="interaction">
    <interactant intactId="EBI-351949">
        <id>P02545-1</id>
    </interactant>
    <interactant intactId="EBI-22057616">
        <id>PRO_0000314029</id>
        <label>SREBF1</label>
        <dbReference type="UniProtKB" id="P36956"/>
    </interactant>
    <organismsDiffer>false</organismsDiffer>
    <experiments>6</experiments>
</comment>
<comment type="interaction">
    <interactant intactId="EBI-351949">
        <id>P02545-1</id>
    </interactant>
    <interactant intactId="EBI-1056377">
        <id>O75844</id>
        <label>ZMPSTE24</label>
    </interactant>
    <organismsDiffer>false</organismsDiffer>
    <experiments>2</experiments>
</comment>
<comment type="interaction">
    <interactant intactId="EBI-351953">
        <id>P02545-2</id>
    </interactant>
    <interactant intactId="EBI-3915761">
        <id>Q9HC96</id>
        <label>CAPN10</label>
    </interactant>
    <organismsDiffer>false</organismsDiffer>
    <experiments>3</experiments>
</comment>
<comment type="interaction">
    <interactant intactId="EBI-351953">
        <id>P02545-2</id>
    </interactant>
    <interactant intactId="EBI-350590">
        <id>Q9UNS2</id>
        <label>COPS3</label>
    </interactant>
    <organismsDiffer>false</organismsDiffer>
    <experiments>3</experiments>
</comment>
<comment type="interaction">
    <interactant intactId="EBI-351953">
        <id>P02545-2</id>
    </interactant>
    <interactant intactId="EBI-742894">
        <id>Q0D2I5</id>
        <label>IFFO1</label>
    </interactant>
    <organismsDiffer>false</organismsDiffer>
    <experiments>2</experiments>
</comment>
<comment type="interaction">
    <interactant intactId="EBI-351953">
        <id>P02545-2</id>
    </interactant>
    <interactant intactId="EBI-351953">
        <id>P02545-2</id>
        <label>LMNA</label>
    </interactant>
    <organismsDiffer>false</organismsDiffer>
    <experiments>4</experiments>
</comment>
<comment type="interaction">
    <interactant intactId="EBI-351953">
        <id>P02545-2</id>
    </interactant>
    <interactant intactId="EBI-968218">
        <id>P20700</id>
        <label>LMNB1</label>
    </interactant>
    <organismsDiffer>false</organismsDiffer>
    <experiments>19</experiments>
</comment>
<comment type="interaction">
    <interactant intactId="EBI-351953">
        <id>P02545-2</id>
    </interactant>
    <interactant intactId="EBI-629434">
        <id>O75925</id>
        <label>PIAS1</label>
    </interactant>
    <organismsDiffer>false</organismsDiffer>
    <experiments>3</experiments>
</comment>
<comment type="interaction">
    <interactant intactId="EBI-351953">
        <id>P02545-2</id>
    </interactant>
    <interactant intactId="EBI-358545">
        <id>Q9GZS3</id>
        <label>SKIC8</label>
    </interactant>
    <organismsDiffer>false</organismsDiffer>
    <experiments>3</experiments>
</comment>
<comment type="interaction">
    <interactant intactId="EBI-351953">
        <id>P02545-2</id>
    </interactant>
    <interactant intactId="EBI-6872807">
        <id>Q8N0S2</id>
        <label>SYCE1</label>
    </interactant>
    <organismsDiffer>false</organismsDiffer>
    <experiments>3</experiments>
</comment>
<comment type="interaction">
    <interactant intactId="EBI-9034379">
        <id>P02545-6</id>
    </interactant>
    <interactant intactId="EBI-750650">
        <id>Q71DI3</id>
        <label>H3C15</label>
    </interactant>
    <organismsDiffer>false</organismsDiffer>
    <experiments>3</experiments>
</comment>
<comment type="subcellular location">
    <subcellularLocation>
        <location evidence="75 79 85 94 95 106">Nucleus lamina</location>
    </subcellularLocation>
    <subcellularLocation>
        <location evidence="89 94 95">Nucleus envelope</location>
    </subcellularLocation>
    <subcellularLocation>
        <location evidence="46 85 91">Nucleus</location>
        <location evidence="46 85 91">Nucleoplasm</location>
    </subcellularLocation>
    <subcellularLocation>
        <location evidence="91">Nucleus matrix</location>
    </subcellularLocation>
    <text evidence="45 65 94">Farnesylation of prelamin-A/C facilitates nuclear envelope targeting and subsequent cleavage by ZMPSTE24/FACE1 to remove the farnesyl group produces mature lamin-A/C, which can then be inserted into the nuclear lamina (PubMed:15317753). EMD is required for proper localization of non-farnesylated prelamin-A/C (PubMed:19323649). Also localizes to the micronuclear envelope in response to response to genome instability (PubMed:37788673).</text>
</comment>
<comment type="subcellular location">
    <molecule>Isoform C</molecule>
    <subcellularLocation>
        <location evidence="51">Nucleus speckle</location>
    </subcellularLocation>
</comment>
<comment type="alternative products">
    <event type="alternative splicing"/>
    <isoform>
        <id>P02545-1</id>
        <name>A</name>
        <name>Lamin-A</name>
        <sequence type="displayed"/>
    </isoform>
    <isoform>
        <id>P02545-2</id>
        <name>C</name>
        <name>Lamin-C</name>
        <sequence type="described" ref="VSP_002469 VSP_002470"/>
    </isoform>
    <isoform>
        <id>P02545-3</id>
        <name>ADelta10</name>
        <name>Lamin ADelta10</name>
        <sequence type="described" ref="VSP_002468"/>
    </isoform>
    <isoform>
        <id>P02545-4</id>
        <name>4</name>
        <sequence type="described" ref="VSP_045977 VSP_045978 VSP_045979"/>
    </isoform>
    <isoform>
        <id>P02545-5</id>
        <name>5</name>
        <sequence type="described" ref="VSP_053503 VSP_053504"/>
    </isoform>
    <isoform>
        <id>P02545-6</id>
        <name>6</name>
        <name>Progerin</name>
        <sequence type="described" ref="VSP_053505"/>
    </isoform>
</comment>
<comment type="tissue specificity">
    <text evidence="69">In the arteries, prelamin-A/C accumulation is not observed in young healthy vessels but is prevalent in medial vascular smooth muscle cells (VSMCs) from aged individuals and in atherosclerotic lesions, where it often colocalizes with senescent and degenerate VSMCs. Prelamin-A/C expression increases with age and disease. In normal aging, the accumulation of prelamin-A/C is caused in part by the down-regulation of ZMPSTE24/FACE1 in response to oxidative stress.</text>
</comment>
<comment type="PTM">
    <text evidence="69 96 97">Proteolytic cleavage of the C-terminal of 18 residues of prelamin-A/C results in the production of lamin-A/C (PubMed:20458013, PubMed:8175923, PubMed:9030603). The prelamin-A/C maturation pathway includes farnesylation of CAAX motif by protein farnesyltransferase (FNTA and FNTB), removal of the last three amino acids (-AAX) by RCE1/FACE2 and/or ZMPSTE24, methylation of the C-terminal cysteine by ICMT and endoproteolytic removal of the last 15 C-terminal amino acids by ZMPSTE24 (PubMed:20458013, PubMed:8175923, PubMed:9030603). Proteolytic cleavage requires prior farnesylation and methylation, and absence of these blocks cleavage (PubMed:20458013, PubMed:8175923, PubMed:9030603).</text>
</comment>
<comment type="PTM">
    <text evidence="45 77">Farnesylation of prelamin-A/C facilitates nuclear envelope targeting.</text>
</comment>
<comment type="PTM">
    <text evidence="75 79 85 86 91 94 95">Phosphorylation plays a key role in lamin organization, subcellular localization and nuclear envelope disintegration (PubMed:2188730, PubMed:2344612, PubMed:24741066, PubMed:37788673, PubMed:37832547). Phosphorylation by CDK1 at Ser-22 and Ser-392 at the onset of mitosis drives lamin disassembly and nuclear envelope breakdown (PubMed:2188730, PubMed:2344612). Phosphorylation at Ser-22 and Ser-392 during interphase promotes localization to the nucleoplasm and regulates lamina assembly (PubMed:24741066). Phosphorylation at Ser-22, Ser-392 and Ser-628 during interphase causes redistribution between the nucleus and the cytoplasm (PubMed:24741066). Phosphorylation at Ser-22 by CDK1 regulates matrix stiffness (PubMed:25127216). Phosphorylation status of Ser-22 determines its localization between double-strand break (DSB) sites and the nuclear matrix (PubMed:31548606). Phosphorylated by ATR at Ser-282 in response to DNA damage, leading to lamin disassembly and nuclear envelope rupture (PubMed:37832547). Phosphorylation also regulates stability in micronuclei arising from genome instability: phosphorylation at Ser-395 by ATR in response to genome instability and double-stranded DNA breaks primes LMNA for subsequent phosphorylation at Ser-392 by CDK1 and micronuclei envelope rupture (PubMed:37788673). The rupture of micronuclear envelope triggers the cGAS-STING pathway thereby activating the type I interferon response and innate immunity (PubMed:37788673).</text>
</comment>
<comment type="PTM">
    <text evidence="1">Acetylation by KAT8 is required for nuclear architecture.</text>
</comment>
<comment type="PTM">
    <text evidence="60">Sumoylation is necessary for the localization to the nuclear envelope.</text>
</comment>
<comment type="disease" evidence="78 88">
    <disease id="DI-01520">
        <name>Emery-Dreifuss muscular dystrophy 2, autosomal dominant</name>
        <acronym>EDMD2</acronym>
        <description>A form of Emery-Dreifuss muscular dystrophy, a degenerative myopathy characterized by weakness and atrophy of muscle without involvement of the nervous system, early contractures of the elbows, Achilles tendons and spine, and cardiomyopathy associated with cardiac conduction defects.</description>
        <dbReference type="MIM" id="181350"/>
    </disease>
    <text>The disease is caused by variants affecting the gene represented in this entry.</text>
</comment>
<comment type="disease" evidence="78 88">
    <disease id="DI-03418">
        <name>Emery-Dreifuss muscular dystrophy 3, autosomal recessive</name>
        <acronym>EDMD3</acronym>
        <description>A form of Emery-Dreifuss muscular dystrophy, a degenerative myopathy characterized by weakness and atrophy of muscle without involvement of the nervous system, early contractures of the elbows, Achilles tendons and spine, and cardiomyopathy associated with cardiac conduction defects.</description>
        <dbReference type="MIM" id="616516"/>
    </disease>
    <text>The disease is caused by variants affecting the gene represented in this entry.</text>
</comment>
<comment type="disease" evidence="9 19 20 22 29 30 36 38 39 42 43 46 51 52 60 62 68 74">
    <disease id="DI-00210">
        <name>Cardiomyopathy, dilated, 1A</name>
        <acronym>CMD1A</acronym>
        <description>A disorder characterized by ventricular dilation and impaired systolic function, resulting in congestive heart failure and arrhythmia. Patients are at risk of premature death.</description>
        <dbReference type="MIM" id="115200"/>
    </disease>
    <text>The disease is caused by variants affecting the gene represented in this entry.</text>
</comment>
<comment type="disease" evidence="10 11 12 20 23 26 31 46 57 63 84">
    <disease id="DI-01595">
        <name>Lipodystrophy, familial partial, 2</name>
        <acronym>FPLD2</acronym>
        <description>A disorder characterized by the loss of subcutaneous adipose tissue in the lower parts of the body (limbs, buttocks, trunk). It is accompanied by an accumulation of adipose tissue in the face and neck causing a double chin, fat neck, or cushingoid appearance. Adipose tissue may also accumulate in the axillae, back, labia majora, and intraabdominal region. Affected patients are insulin-resistant and may develop glucose intolerance and diabetes mellitus after age 20 years, hypertriglyceridemia, and low levels of high density lipoprotein cholesterol.</description>
        <dbReference type="MIM" id="151660"/>
    </disease>
    <text>The disease is caused by variants affecting the gene represented in this entry.</text>
</comment>
<comment type="disease" evidence="21">
    <disease id="DI-00277">
        <name>Charcot-Marie-Tooth disease, axonal, type 2B1</name>
        <acronym>CMT2B1</acronym>
        <description>A recessive axonal form of Charcot-Marie-Tooth disease, a disorder of the peripheral nervous system, characterized by progressive weakness and atrophy, initially of the peroneal muscles and later of the distal muscles of the arms. Charcot-Marie-Tooth disease is classified in two main groups on the basis of electrophysiologic properties and histopathology: primary peripheral demyelinating neuropathies (designated CMT1 when they are dominantly inherited) and primary peripheral axonal neuropathies (CMT2). Neuropathies of the CMT2 group are characterized by signs of axonal degeneration in the absence of obvious myelin alterations, normal or slightly reduced nerve conduction velocities, and progressive distal muscle weakness and atrophy.</description>
        <dbReference type="MIM" id="605588"/>
    </disease>
    <text>The disease is caused by variants affecting the gene represented in this entry.</text>
</comment>
<comment type="disease" evidence="34 35 37 41 44 48 67 73 77 80">
    <disease id="DI-01757">
        <name>Hutchinson-Gilford progeria syndrome</name>
        <acronym>HGPS</acronym>
        <description>Rare genetic disorder characterized by features reminiscent of marked premature aging.</description>
        <dbReference type="MIM" id="176670"/>
    </disease>
    <text evidence="34">The disease is caused by variants affecting the gene represented in this entry. HGPS is caused by the toxic accumulation of a truncated form of lamin-A/C. This mutant protein, called progerin (isoform 6), acts to deregulate mitosis and DNA damage signaling, leading to premature cell death and senescence. The mutant form is mainly generated by a silent or missense mutation at codon 608 of prelamin A that causes activation of a cryptic splice donor site, resulting in production of isoform 6 with a deletion of 50 amino acids near the C terminus. Progerin lacks the conserved ZMPSTE24/FACE1 cleavage site and therefore remains permanently farnesylated. Thus, although it can enter the nucleus and associate with the nuclear envelope, it cannot incorporate normally into the nuclear lamina (PubMed:12714972).</text>
</comment>
<comment type="disease" evidence="37 56 64">
    <disease id="DI-02906">
        <name>Cardiomyopathy, dilated, with hypergonadotropic hypogonadism</name>
        <acronym>CMDHH</acronym>
        <description>A disorder characterized by the association of genital anomalies, hypergonadotropic hypogonadism and dilated cardiomyopathy. Patients can present other variable clinical manifestations including intellectual disability, skeletal anomalies, scleroderma-like skin, graying and thinning of hair, osteoporosis. Dilated cardiomyopathy is characterized by ventricular dilation and impaired systolic function, resulting in congestive heart failure and arrhythmia.</description>
        <dbReference type="MIM" id="212112"/>
    </disease>
    <text>The disease is caused by variants affecting the gene represented in this entry.</text>
</comment>
<comment type="disease" evidence="25 50 53">
    <disease id="DI-01932">
        <name>Mandibuloacral dysplasia with type A lipodystrophy</name>
        <acronym>MADA</acronym>
        <description>A form of mandibuloacral dysplasia, a rare progeroid disorder with clinical and genetic heterogeneity, characterized by growth retardation, craniofacial dysmorphic features due to distal bone resorption, musculoskeletal and skin abnormalities associated with lipodystrophy. MADA is an autosomal recessive disease characterized by mandibular and clavicular hypoplasia, acroosteolysis, delayed closure of the cranial suture, progeroid appearance, partial alopecia, soft tissue calcinosis, joint contractures, and partial lipodystrophy with loss of subcutaneous fat from the extremities. Adipose tissue in the face, neck and trunk is normal or increased.</description>
        <dbReference type="MIM" id="248370"/>
    </disease>
    <text>The disease is caused by variants affecting the gene represented in this entry.</text>
</comment>
<comment type="disease" evidence="45">
    <disease id="DI-06366">
        <name>Restrictive dermopathy 2</name>
        <acronym>RSDM2</acronym>
        <description>An autosomal dominant form of restrictive dermopathy, a genodermatosis mainly characterized by intrauterine growth retardation, tight and rigid skin with erosions, prominent superficial vasculature and epidermal hyperkeratosis, facial dysmorphism, sparse/absent eyelashes and eyebrows, mineralization defects of the skull, thin dysplastic clavicles, pulmonary hypoplasia, multiple joint contractures and an early neonatal lethal course. Liveborn children usually die within the first week of life.</description>
        <dbReference type="MIM" id="619793"/>
    </disease>
    <text>The disease is caused by variants affecting the gene represented in this entry.</text>
</comment>
<comment type="disease" evidence="61">
    <disease id="DI-01697">
        <name>Heart-hand syndrome Slovenian type</name>
        <acronym>HHS-Slovenian</acronym>
        <description>Heart-hand syndrome (HHS) is a clinically and genetically heterogeneous disorder characterized by the co-occurrence of a congenital cardiac disease and limb malformations.</description>
        <dbReference type="MIM" id="610140"/>
    </disease>
    <text>The disease is caused by variants affecting the gene represented in this entry.</text>
</comment>
<comment type="disease" evidence="59">
    <disease id="DI-02702">
        <name>Muscular dystrophy congenital LMNA-related</name>
        <acronym>MDCL</acronym>
        <description>A form of congenital muscular dystrophy. Patients present at birth, or within the first few months of life, with hypotonia, muscle weakness and often with joint contractures.</description>
        <dbReference type="MIM" id="613205"/>
    </disease>
    <text>The disease is caused by variants affecting the gene represented in this entry.</text>
</comment>
<comment type="disease">
    <text evidence="80">Defects in LMNA may cause a late-onset cardiocutaneous progeria syndrome characterized by cutaneous manifestations of aging appearing in the third decade of life, cardiac valve calcification and dysfunction, prominent atherosclerosis, and cardiomyopathy, leading to death on average in the fourth decade.</text>
</comment>
<comment type="miscellaneous">
    <molecule>Isoform 6</molecule>
    <text evidence="105">Disease-associated isoform. Polymorphism at codon 608 results in activation of a cryptic splice donor site within exon 11, resulting in a truncated protein product that lacks the site for endoproteolytic cleavage.</text>
</comment>
<comment type="similarity">
    <text evidence="5">Belongs to the intermediate filament family.</text>
</comment>
<comment type="sequence caution" evidence="105">
    <conflict type="frameshift">
        <sequence resource="EMBL-CDS" id="CAA27173"/>
    </conflict>
</comment>
<dbReference type="EMBL" id="X03444">
    <property type="protein sequence ID" value="CAA27173.1"/>
    <property type="status" value="ALT_FRAME"/>
    <property type="molecule type" value="mRNA"/>
</dbReference>
<dbReference type="EMBL" id="X03445">
    <property type="protein sequence ID" value="CAA27174.1"/>
    <property type="molecule type" value="mRNA"/>
</dbReference>
<dbReference type="EMBL" id="M13451">
    <property type="protein sequence ID" value="AAA36164.1"/>
    <property type="molecule type" value="mRNA"/>
</dbReference>
<dbReference type="EMBL" id="M13452">
    <property type="protein sequence ID" value="AAA36160.1"/>
    <property type="molecule type" value="mRNA"/>
</dbReference>
<dbReference type="EMBL" id="AY847597">
    <property type="protein sequence ID" value="AAW32540.1"/>
    <property type="molecule type" value="mRNA"/>
</dbReference>
<dbReference type="EMBL" id="AY847595">
    <property type="protein sequence ID" value="AAW32538.1"/>
    <property type="molecule type" value="mRNA"/>
</dbReference>
<dbReference type="EMBL" id="AY357727">
    <property type="protein sequence ID" value="AAR29466.1"/>
    <property type="molecule type" value="mRNA"/>
</dbReference>
<dbReference type="EMBL" id="AK295390">
    <property type="protein sequence ID" value="BAG58344.1"/>
    <property type="molecule type" value="mRNA"/>
</dbReference>
<dbReference type="EMBL" id="AL135927">
    <property type="status" value="NOT_ANNOTATED_CDS"/>
    <property type="molecule type" value="Genomic_DNA"/>
</dbReference>
<dbReference type="EMBL" id="AL355388">
    <property type="status" value="NOT_ANNOTATED_CDS"/>
    <property type="molecule type" value="Genomic_DNA"/>
</dbReference>
<dbReference type="EMBL" id="AL356734">
    <property type="status" value="NOT_ANNOTATED_CDS"/>
    <property type="molecule type" value="Genomic_DNA"/>
</dbReference>
<dbReference type="EMBL" id="CH471121">
    <property type="protein sequence ID" value="EAW52997.1"/>
    <property type="molecule type" value="Genomic_DNA"/>
</dbReference>
<dbReference type="EMBL" id="CH471121">
    <property type="protein sequence ID" value="EAW52999.1"/>
    <property type="molecule type" value="Genomic_DNA"/>
</dbReference>
<dbReference type="EMBL" id="BC000511">
    <property type="protein sequence ID" value="AAH00511.1"/>
    <property type="molecule type" value="mRNA"/>
</dbReference>
<dbReference type="EMBL" id="BC003162">
    <property type="protein sequence ID" value="AAH03162.1"/>
    <property type="molecule type" value="mRNA"/>
</dbReference>
<dbReference type="EMBL" id="BC014507">
    <property type="protein sequence ID" value="AAH14507.1"/>
    <property type="molecule type" value="mRNA"/>
</dbReference>
<dbReference type="EMBL" id="AF381029">
    <property type="protein sequence ID" value="AAK59326.1"/>
    <property type="molecule type" value="mRNA"/>
</dbReference>
<dbReference type="CCDS" id="CCDS1129.1">
    <molecule id="P02545-1"/>
</dbReference>
<dbReference type="CCDS" id="CCDS1131.1">
    <molecule id="P02545-2"/>
</dbReference>
<dbReference type="CCDS" id="CCDS58038.1">
    <molecule id="P02545-4"/>
</dbReference>
<dbReference type="CCDS" id="CCDS72941.1">
    <molecule id="P02545-6"/>
</dbReference>
<dbReference type="PIR" id="A02961">
    <property type="entry name" value="VEHULA"/>
</dbReference>
<dbReference type="PIR" id="A02962">
    <property type="entry name" value="VEHULC"/>
</dbReference>
<dbReference type="RefSeq" id="NP_001244303.1">
    <molecule id="P02545-4"/>
    <property type="nucleotide sequence ID" value="NM_001257374.3"/>
</dbReference>
<dbReference type="RefSeq" id="NP_001269553.1">
    <property type="nucleotide sequence ID" value="NM_001282624.1"/>
</dbReference>
<dbReference type="RefSeq" id="NP_001269554.1">
    <molecule id="P02545-2"/>
    <property type="nucleotide sequence ID" value="NM_001282625.2"/>
</dbReference>
<dbReference type="RefSeq" id="NP_001269555.1">
    <molecule id="P02545-6"/>
    <property type="nucleotide sequence ID" value="NM_001282626.2"/>
</dbReference>
<dbReference type="RefSeq" id="NP_001393912.1">
    <molecule id="P02545-1"/>
    <property type="nucleotide sequence ID" value="NM_001406983.1"/>
</dbReference>
<dbReference type="RefSeq" id="NP_001393913.1">
    <molecule id="P02545-2"/>
    <property type="nucleotide sequence ID" value="NM_001406984.1"/>
</dbReference>
<dbReference type="RefSeq" id="NP_001393917.1">
    <molecule id="P02545-5"/>
    <property type="nucleotide sequence ID" value="NM_001406988.1"/>
</dbReference>
<dbReference type="RefSeq" id="NP_001393920.1">
    <molecule id="P02545-1"/>
    <property type="nucleotide sequence ID" value="NM_001406991.1"/>
</dbReference>
<dbReference type="RefSeq" id="NP_001393921.1">
    <molecule id="P02545-2"/>
    <property type="nucleotide sequence ID" value="NM_001406992.1"/>
</dbReference>
<dbReference type="RefSeq" id="NP_005563.1">
    <molecule id="P02545-2"/>
    <property type="nucleotide sequence ID" value="NM_005572.4"/>
</dbReference>
<dbReference type="RefSeq" id="NP_733821.1">
    <molecule id="P02545-1"/>
    <property type="nucleotide sequence ID" value="NM_170707.4"/>
</dbReference>
<dbReference type="RefSeq" id="NP_733822.1">
    <molecule id="P02545-3"/>
    <property type="nucleotide sequence ID" value="NM_170708.4"/>
</dbReference>
<dbReference type="PDB" id="1IFR">
    <property type="method" value="X-ray"/>
    <property type="resolution" value="1.40 A"/>
    <property type="chains" value="A=436-552"/>
</dbReference>
<dbReference type="PDB" id="1IVT">
    <property type="method" value="NMR"/>
    <property type="chains" value="A=428-549"/>
</dbReference>
<dbReference type="PDB" id="1X8Y">
    <property type="method" value="X-ray"/>
    <property type="resolution" value="2.20 A"/>
    <property type="chains" value="A=305-387"/>
</dbReference>
<dbReference type="PDB" id="2XV5">
    <property type="method" value="X-ray"/>
    <property type="resolution" value="2.40 A"/>
    <property type="chains" value="A/B=328-398"/>
</dbReference>
<dbReference type="PDB" id="2YPT">
    <property type="method" value="X-ray"/>
    <property type="resolution" value="3.80 A"/>
    <property type="chains" value="F/G/H/I=661-664"/>
</dbReference>
<dbReference type="PDB" id="3GEF">
    <property type="method" value="X-ray"/>
    <property type="resolution" value="1.50 A"/>
    <property type="chains" value="A/B/C/D=436-552"/>
</dbReference>
<dbReference type="PDB" id="3V4Q">
    <property type="method" value="X-ray"/>
    <property type="resolution" value="3.06 A"/>
    <property type="chains" value="A=313-386"/>
</dbReference>
<dbReference type="PDB" id="3V4W">
    <property type="method" value="X-ray"/>
    <property type="resolution" value="3.70 A"/>
    <property type="chains" value="A=313-386"/>
</dbReference>
<dbReference type="PDB" id="3V5B">
    <property type="method" value="X-ray"/>
    <property type="resolution" value="3.00 A"/>
    <property type="chains" value="A=313-386"/>
</dbReference>
<dbReference type="PDB" id="6GHD">
    <property type="method" value="X-ray"/>
    <property type="resolution" value="2.10 A"/>
    <property type="chains" value="B/F=428-546"/>
</dbReference>
<dbReference type="PDB" id="6JLB">
    <property type="method" value="X-ray"/>
    <property type="resolution" value="3.21 A"/>
    <property type="chains" value="A/B/C/D=1-300"/>
</dbReference>
<dbReference type="PDB" id="6RPR">
    <property type="method" value="X-ray"/>
    <property type="resolution" value="2.26 A"/>
    <property type="chains" value="B=430-545"/>
</dbReference>
<dbReference type="PDB" id="6SNZ">
    <property type="method" value="X-ray"/>
    <property type="resolution" value="2.60 A"/>
    <property type="chains" value="A/B/C/D=65-222"/>
</dbReference>
<dbReference type="PDB" id="6YF5">
    <property type="method" value="X-ray"/>
    <property type="resolution" value="1.83 A"/>
    <property type="chains" value="A/B/C/D=17-70"/>
</dbReference>
<dbReference type="PDB" id="6YJD">
    <property type="method" value="X-ray"/>
    <property type="resolution" value="2.90 A"/>
    <property type="chains" value="A=329-403"/>
</dbReference>
<dbReference type="PDB" id="7CRG">
    <property type="method" value="X-ray"/>
    <property type="resolution" value="1.80 A"/>
    <property type="chains" value="A/B/C=406-553"/>
</dbReference>
<dbReference type="PDB" id="7D9N">
    <property type="method" value="X-ray"/>
    <property type="resolution" value="3.70 A"/>
    <property type="chains" value="A/B=27-229"/>
</dbReference>
<dbReference type="PDB" id="7WZZ">
    <property type="method" value="X-ray"/>
    <property type="resolution" value="1.30 A"/>
    <property type="chains" value="C=490-498"/>
</dbReference>
<dbReference type="PDB" id="7X1B">
    <property type="method" value="X-ray"/>
    <property type="resolution" value="1.40 A"/>
    <property type="chains" value="C=490-497"/>
</dbReference>
<dbReference type="PDB" id="7X5D">
    <property type="method" value="X-ray"/>
    <property type="resolution" value="1.82 A"/>
    <property type="chains" value="A/B=244-339"/>
</dbReference>
<dbReference type="PDB" id="7YVD">
    <property type="method" value="X-ray"/>
    <property type="resolution" value="2.10 A"/>
    <property type="chains" value="A/B/C=421-552"/>
</dbReference>
<dbReference type="PDB" id="7Z21">
    <property type="method" value="X-ray"/>
    <property type="resolution" value="1.63 A"/>
    <property type="chains" value="E/F=411-566"/>
</dbReference>
<dbReference type="PDB" id="8I33">
    <property type="method" value="X-ray"/>
    <property type="resolution" value="1.62 A"/>
    <property type="chains" value="A/B/C/D=24-65"/>
</dbReference>
<dbReference type="PDB" id="9J8M">
    <property type="method" value="EM"/>
    <property type="resolution" value="3.82 A"/>
    <property type="chains" value="M=411-566"/>
</dbReference>
<dbReference type="PDB" id="9J8N">
    <property type="method" value="EM"/>
    <property type="resolution" value="7.14 A"/>
    <property type="chains" value="M/P/m/p=411-566"/>
</dbReference>
<dbReference type="PDB" id="9J8O">
    <property type="method" value="EM"/>
    <property type="resolution" value="4.05 A"/>
    <property type="chains" value="M/m=411-566"/>
</dbReference>
<dbReference type="PDBsum" id="1IFR"/>
<dbReference type="PDBsum" id="1IVT"/>
<dbReference type="PDBsum" id="1X8Y"/>
<dbReference type="PDBsum" id="2XV5"/>
<dbReference type="PDBsum" id="2YPT"/>
<dbReference type="PDBsum" id="3GEF"/>
<dbReference type="PDBsum" id="3V4Q"/>
<dbReference type="PDBsum" id="3V4W"/>
<dbReference type="PDBsum" id="3V5B"/>
<dbReference type="PDBsum" id="6GHD"/>
<dbReference type="PDBsum" id="6JLB"/>
<dbReference type="PDBsum" id="6RPR"/>
<dbReference type="PDBsum" id="6SNZ"/>
<dbReference type="PDBsum" id="6YF5"/>
<dbReference type="PDBsum" id="6YJD"/>
<dbReference type="PDBsum" id="7CRG"/>
<dbReference type="PDBsum" id="7D9N"/>
<dbReference type="PDBsum" id="7WZZ"/>
<dbReference type="PDBsum" id="7X1B"/>
<dbReference type="PDBsum" id="7X5D"/>
<dbReference type="PDBsum" id="7YVD"/>
<dbReference type="PDBsum" id="7Z21"/>
<dbReference type="PDBsum" id="8I33"/>
<dbReference type="PDBsum" id="9J8M"/>
<dbReference type="PDBsum" id="9J8N"/>
<dbReference type="PDBsum" id="9J8O"/>
<dbReference type="BMRB" id="P02545"/>
<dbReference type="EMDB" id="EMD-61231"/>
<dbReference type="EMDB" id="EMD-61232"/>
<dbReference type="EMDB" id="EMD-61233"/>
<dbReference type="SMR" id="P02545"/>
<dbReference type="BioGRID" id="110186">
    <property type="interactions" value="1284"/>
</dbReference>
<dbReference type="CORUM" id="P02545"/>
<dbReference type="DIP" id="DIP-32948N"/>
<dbReference type="DIP" id="DIP-58162N"/>
<dbReference type="FunCoup" id="P02545">
    <property type="interactions" value="2057"/>
</dbReference>
<dbReference type="IntAct" id="P02545">
    <property type="interactions" value="430"/>
</dbReference>
<dbReference type="MINT" id="P02545"/>
<dbReference type="STRING" id="9606.ENSP00000357283"/>
<dbReference type="ChEMBL" id="CHEMBL1293235"/>
<dbReference type="GlyConnect" id="2876">
    <molecule id="P02545-3"/>
    <property type="glycosylation" value="1 O-GlcNAc glycan (2 sites)"/>
</dbReference>
<dbReference type="GlyCosmos" id="P02545">
    <property type="glycosylation" value="12 sites, 2 glycans"/>
</dbReference>
<dbReference type="GlyGen" id="P02545">
    <property type="glycosylation" value="28 sites, 2 O-linked glycans (27 sites)"/>
</dbReference>
<dbReference type="iPTMnet" id="P02545"/>
<dbReference type="MetOSite" id="P02545"/>
<dbReference type="PhosphoSitePlus" id="P02545"/>
<dbReference type="SwissPalm" id="P02545"/>
<dbReference type="BioMuta" id="LMNA"/>
<dbReference type="DMDM" id="125962"/>
<dbReference type="REPRODUCTION-2DPAGE" id="IPI00021405"/>
<dbReference type="REPRODUCTION-2DPAGE" id="IPI00216952"/>
<dbReference type="REPRODUCTION-2DPAGE" id="P02545"/>
<dbReference type="CPTAC" id="CPTAC-399"/>
<dbReference type="CPTAC" id="CPTAC-400"/>
<dbReference type="CPTAC" id="CPTAC-973"/>
<dbReference type="CPTAC" id="CPTAC-974"/>
<dbReference type="jPOST" id="P02545"/>
<dbReference type="MassIVE" id="P02545"/>
<dbReference type="PaxDb" id="9606-ENSP00000357283"/>
<dbReference type="PeptideAtlas" id="P02545"/>
<dbReference type="PRIDE" id="P02545"/>
<dbReference type="ProteomicsDB" id="13394"/>
<dbReference type="ProteomicsDB" id="18441"/>
<dbReference type="ProteomicsDB" id="51530">
    <molecule id="P02545-1"/>
</dbReference>
<dbReference type="ProteomicsDB" id="51531">
    <molecule id="P02545-2"/>
</dbReference>
<dbReference type="ProteomicsDB" id="51532">
    <molecule id="P02545-3"/>
</dbReference>
<dbReference type="ProteomicsDB" id="67698"/>
<dbReference type="Pumba" id="P02545"/>
<dbReference type="TopDownProteomics" id="P02545-1">
    <molecule id="P02545-1"/>
</dbReference>
<dbReference type="TopDownProteomics" id="P02545-2">
    <molecule id="P02545-2"/>
</dbReference>
<dbReference type="TopDownProteomics" id="P02545-4">
    <molecule id="P02545-4"/>
</dbReference>
<dbReference type="Antibodypedia" id="1676">
    <property type="antibodies" value="1681 antibodies from 51 providers"/>
</dbReference>
<dbReference type="DNASU" id="4000"/>
<dbReference type="Ensembl" id="ENST00000361308.9">
    <molecule id="P02545-1"/>
    <property type="protein sequence ID" value="ENSP00000355292.6"/>
    <property type="gene ID" value="ENSG00000160789.25"/>
</dbReference>
<dbReference type="Ensembl" id="ENST00000368299.7">
    <molecule id="P02545-6"/>
    <property type="protein sequence ID" value="ENSP00000357282.3"/>
    <property type="gene ID" value="ENSG00000160789.25"/>
</dbReference>
<dbReference type="Ensembl" id="ENST00000368300.9">
    <molecule id="P02545-1"/>
    <property type="protein sequence ID" value="ENSP00000357283.4"/>
    <property type="gene ID" value="ENSG00000160789.25"/>
</dbReference>
<dbReference type="Ensembl" id="ENST00000368301.6">
    <molecule id="P02545-2"/>
    <property type="protein sequence ID" value="ENSP00000357284.2"/>
    <property type="gene ID" value="ENSG00000160789.25"/>
</dbReference>
<dbReference type="Ensembl" id="ENST00000448611.6">
    <molecule id="P02545-4"/>
    <property type="protein sequence ID" value="ENSP00000395597.2"/>
    <property type="gene ID" value="ENSG00000160789.25"/>
</dbReference>
<dbReference type="Ensembl" id="ENST00000473598.6">
    <molecule id="P02545-5"/>
    <property type="protein sequence ID" value="ENSP00000421821.1"/>
    <property type="gene ID" value="ENSG00000160789.25"/>
</dbReference>
<dbReference type="Ensembl" id="ENST00000675939.1">
    <molecule id="P02545-1"/>
    <property type="protein sequence ID" value="ENSP00000502256.1"/>
    <property type="gene ID" value="ENSG00000160789.25"/>
</dbReference>
<dbReference type="Ensembl" id="ENST00000676385.2">
    <molecule id="P02545-3"/>
    <property type="protein sequence ID" value="ENSP00000502091.1"/>
    <property type="gene ID" value="ENSG00000160789.25"/>
</dbReference>
<dbReference type="Ensembl" id="ENST00000677389.1">
    <molecule id="P02545-2"/>
    <property type="protein sequence ID" value="ENSP00000503633.1"/>
    <property type="gene ID" value="ENSG00000160789.25"/>
</dbReference>
<dbReference type="Ensembl" id="ENST00000682650.1">
    <molecule id="P02545-3"/>
    <property type="protein sequence ID" value="ENSP00000506904.1"/>
    <property type="gene ID" value="ENSG00000160789.25"/>
</dbReference>
<dbReference type="Ensembl" id="ENST00000683032.1">
    <molecule id="P02545-1"/>
    <property type="protein sequence ID" value="ENSP00000506771.1"/>
    <property type="gene ID" value="ENSG00000160789.25"/>
</dbReference>
<dbReference type="GeneID" id="4000"/>
<dbReference type="KEGG" id="hsa:4000"/>
<dbReference type="MANE-Select" id="ENST00000368300.9">
    <property type="protein sequence ID" value="ENSP00000357283.4"/>
    <property type="RefSeq nucleotide sequence ID" value="NM_170707.4"/>
    <property type="RefSeq protein sequence ID" value="NP_733821.1"/>
</dbReference>
<dbReference type="UCSC" id="uc001fnf.3">
    <molecule id="P02545-1"/>
    <property type="organism name" value="human"/>
</dbReference>
<dbReference type="AGR" id="HGNC:6636"/>
<dbReference type="CTD" id="4000"/>
<dbReference type="DisGeNET" id="4000"/>
<dbReference type="GeneCards" id="LMNA"/>
<dbReference type="GeneReviews" id="LMNA"/>
<dbReference type="HGNC" id="HGNC:6636">
    <property type="gene designation" value="LMNA"/>
</dbReference>
<dbReference type="HPA" id="ENSG00000160789">
    <property type="expression patterns" value="Low tissue specificity"/>
</dbReference>
<dbReference type="MalaCards" id="LMNA"/>
<dbReference type="MIM" id="115200">
    <property type="type" value="phenotype"/>
</dbReference>
<dbReference type="MIM" id="150330">
    <property type="type" value="gene"/>
</dbReference>
<dbReference type="MIM" id="151660">
    <property type="type" value="phenotype"/>
</dbReference>
<dbReference type="MIM" id="176670">
    <property type="type" value="phenotype"/>
</dbReference>
<dbReference type="MIM" id="181350">
    <property type="type" value="phenotype"/>
</dbReference>
<dbReference type="MIM" id="212112">
    <property type="type" value="phenotype"/>
</dbReference>
<dbReference type="MIM" id="248370">
    <property type="type" value="phenotype"/>
</dbReference>
<dbReference type="MIM" id="605588">
    <property type="type" value="phenotype"/>
</dbReference>
<dbReference type="MIM" id="610140">
    <property type="type" value="phenotype"/>
</dbReference>
<dbReference type="MIM" id="613205">
    <property type="type" value="phenotype"/>
</dbReference>
<dbReference type="MIM" id="616516">
    <property type="type" value="phenotype"/>
</dbReference>
<dbReference type="MIM" id="619793">
    <property type="type" value="phenotype"/>
</dbReference>
<dbReference type="neXtProt" id="NX_P02545"/>
<dbReference type="OpenTargets" id="ENSG00000160789"/>
<dbReference type="Orphanet" id="79474">
    <property type="disease" value="Atypical Werner syndrome"/>
</dbReference>
<dbReference type="Orphanet" id="98853">
    <property type="disease" value="Autosomal dominant Emery-Dreifuss muscular dystrophy"/>
</dbReference>
<dbReference type="Orphanet" id="98855">
    <property type="disease" value="Autosomal recessive Emery-Dreifuss muscular dystrophy"/>
</dbReference>
<dbReference type="Orphanet" id="280365">
    <property type="disease" value="Autosomal semi-dominant severe lipodystrophic laminopathy"/>
</dbReference>
<dbReference type="Orphanet" id="98856">
    <property type="disease" value="Charcot-Marie-Tooth disease type 2B1"/>
</dbReference>
<dbReference type="Orphanet" id="157973">
    <property type="disease" value="Congenital muscular dystrophy due to LMNA mutation"/>
</dbReference>
<dbReference type="Orphanet" id="2229">
    <property type="disease" value="Dilated cardiomyopathy-hypergonadotropic hypogonadism syndrome"/>
</dbReference>
<dbReference type="Orphanet" id="675396">
    <property type="disease" value="Epithelioid hemangioma"/>
</dbReference>
<dbReference type="Orphanet" id="300751">
    <property type="disease" value="Familial dilated cardiomyopathy with conduction defect due to LMNA mutation"/>
</dbReference>
<dbReference type="Orphanet" id="154">
    <property type="disease" value="Familial isolated dilated cardiomyopathy"/>
</dbReference>
<dbReference type="Orphanet" id="2348">
    <property type="disease" value="Familial partial lipodystrophy, Dunnigan type"/>
</dbReference>
<dbReference type="Orphanet" id="79084">
    <property type="disease" value="Familial partial lipodystrophy, Koebberling type"/>
</dbReference>
<dbReference type="Orphanet" id="168796">
    <property type="disease" value="Heart-hand syndrome, Slovenian type"/>
</dbReference>
<dbReference type="Orphanet" id="740">
    <property type="disease" value="Hutchinson-Gilford progeria syndrome"/>
</dbReference>
<dbReference type="Orphanet" id="293888">
    <property type="disease" value="Inherited isolated arrhythmogenic cardiomyopathy, dominant-left variant"/>
</dbReference>
<dbReference type="Orphanet" id="293910">
    <property type="disease" value="Inherited isolated arrhythmogenic cardiomyopathy, dominant-right variant"/>
</dbReference>
<dbReference type="Orphanet" id="293899">
    <property type="disease" value="Inherited isolated arrhythmogenic ventricular dysplasia, biventricular variant"/>
</dbReference>
<dbReference type="Orphanet" id="54260">
    <property type="disease" value="Left ventricular noncompaction"/>
</dbReference>
<dbReference type="Orphanet" id="363618">
    <property type="disease" value="LMNA-related cardiocutaneous progeria syndrome"/>
</dbReference>
<dbReference type="Orphanet" id="90153">
    <property type="disease" value="Mandibuloacral dysplasia with type A lipodystrophy"/>
</dbReference>
<dbReference type="Orphanet" id="1662">
    <property type="disease" value="Restrictive dermopathy"/>
</dbReference>
<dbReference type="PharmGKB" id="PA231"/>
<dbReference type="VEuPathDB" id="HostDB:ENSG00000160789"/>
<dbReference type="eggNOG" id="KOG0977">
    <property type="taxonomic scope" value="Eukaryota"/>
</dbReference>
<dbReference type="GeneTree" id="ENSGT00940000157244"/>
<dbReference type="HOGENOM" id="CLU_012560_9_1_1"/>
<dbReference type="InParanoid" id="P02545"/>
<dbReference type="OMA" id="DDPPITY"/>
<dbReference type="OrthoDB" id="102442at2759"/>
<dbReference type="PAN-GO" id="P02545">
    <property type="GO annotations" value="8 GO annotations based on evolutionary models"/>
</dbReference>
<dbReference type="PhylomeDB" id="P02545"/>
<dbReference type="TreeFam" id="TF101181"/>
<dbReference type="PathwayCommons" id="P02545"/>
<dbReference type="Reactome" id="R-HSA-1221632">
    <molecule id="P02545-2"/>
    <property type="pathway name" value="Meiotic synapsis"/>
</dbReference>
<dbReference type="Reactome" id="R-HSA-2980766">
    <property type="pathway name" value="Nuclear Envelope Breakdown"/>
</dbReference>
<dbReference type="Reactome" id="R-HSA-2995383">
    <property type="pathway name" value="Initiation of Nuclear Envelope (NE) Reformation"/>
</dbReference>
<dbReference type="Reactome" id="R-HSA-352238">
    <molecule id="P02545-1"/>
    <property type="pathway name" value="Breakdown of the nuclear lamina"/>
</dbReference>
<dbReference type="Reactome" id="R-HSA-381038">
    <property type="pathway name" value="XBP1(S) activates chaperone genes"/>
</dbReference>
<dbReference type="Reactome" id="R-HSA-4419969">
    <property type="pathway name" value="Depolymerization of the Nuclear Lamina"/>
</dbReference>
<dbReference type="Reactome" id="R-HSA-6802952">
    <property type="pathway name" value="Signaling by BRAF and RAF1 fusions"/>
</dbReference>
<dbReference type="Reactome" id="R-HSA-8862803">
    <molecule id="P02545-1"/>
    <property type="pathway name" value="Deregulated CDK5 triggers multiple neurodegenerative pathways in Alzheimer's disease models"/>
</dbReference>
<dbReference type="SABIO-RK" id="P02545"/>
<dbReference type="SignaLink" id="P02545"/>
<dbReference type="SIGNOR" id="P02545"/>
<dbReference type="BioGRID-ORCS" id="4000">
    <property type="hits" value="90 hits in 1163 CRISPR screens"/>
</dbReference>
<dbReference type="CD-CODE" id="462A97B5">
    <property type="entry name" value="Leucocyte nuclear body"/>
</dbReference>
<dbReference type="CD-CODE" id="804901D1">
    <property type="entry name" value="Nuclear speckle"/>
</dbReference>
<dbReference type="CD-CODE" id="91857CE7">
    <property type="entry name" value="Nucleolus"/>
</dbReference>
<dbReference type="CD-CODE" id="DEE660B4">
    <property type="entry name" value="Stress granule"/>
</dbReference>
<dbReference type="ChiTaRS" id="LMNA">
    <property type="organism name" value="human"/>
</dbReference>
<dbReference type="EvolutionaryTrace" id="P02545"/>
<dbReference type="GeneWiki" id="LMNA"/>
<dbReference type="GenomeRNAi" id="4000"/>
<dbReference type="Pharos" id="P02545">
    <property type="development level" value="Tbio"/>
</dbReference>
<dbReference type="PRO" id="PR:P02545"/>
<dbReference type="Proteomes" id="UP000005640">
    <property type="component" value="Chromosome 1"/>
</dbReference>
<dbReference type="RNAct" id="P02545">
    <property type="molecule type" value="protein"/>
</dbReference>
<dbReference type="Bgee" id="ENSG00000160789">
    <property type="expression patterns" value="Expressed in nipple and 208 other cell types or tissues"/>
</dbReference>
<dbReference type="ExpressionAtlas" id="P02545">
    <property type="expression patterns" value="baseline and differential"/>
</dbReference>
<dbReference type="GO" id="GO:0005829">
    <property type="term" value="C:cytosol"/>
    <property type="evidence" value="ECO:0000304"/>
    <property type="project" value="Reactome"/>
</dbReference>
<dbReference type="GO" id="GO:0005882">
    <property type="term" value="C:intermediate filament"/>
    <property type="evidence" value="ECO:0000304"/>
    <property type="project" value="UniProtKB"/>
</dbReference>
<dbReference type="GO" id="GO:0005638">
    <property type="term" value="C:lamin filament"/>
    <property type="evidence" value="ECO:0000304"/>
    <property type="project" value="UniProtKB"/>
</dbReference>
<dbReference type="GO" id="GO:0005635">
    <property type="term" value="C:nuclear envelope"/>
    <property type="evidence" value="ECO:0000314"/>
    <property type="project" value="UniProtKB"/>
</dbReference>
<dbReference type="GO" id="GO:0005652">
    <property type="term" value="C:nuclear lamina"/>
    <property type="evidence" value="ECO:0000314"/>
    <property type="project" value="UniProtKB"/>
</dbReference>
<dbReference type="GO" id="GO:0016363">
    <property type="term" value="C:nuclear matrix"/>
    <property type="evidence" value="ECO:0000314"/>
    <property type="project" value="UniProtKB"/>
</dbReference>
<dbReference type="GO" id="GO:0031965">
    <property type="term" value="C:nuclear membrane"/>
    <property type="evidence" value="ECO:0007005"/>
    <property type="project" value="UniProtKB"/>
</dbReference>
<dbReference type="GO" id="GO:0016607">
    <property type="term" value="C:nuclear speck"/>
    <property type="evidence" value="ECO:0000314"/>
    <property type="project" value="HPA"/>
</dbReference>
<dbReference type="GO" id="GO:0005654">
    <property type="term" value="C:nucleoplasm"/>
    <property type="evidence" value="ECO:0000314"/>
    <property type="project" value="UniProtKB"/>
</dbReference>
<dbReference type="GO" id="GO:0005634">
    <property type="term" value="C:nucleus"/>
    <property type="evidence" value="ECO:0000314"/>
    <property type="project" value="ARUK-UCL"/>
</dbReference>
<dbReference type="GO" id="GO:0048471">
    <property type="term" value="C:perinuclear region of cytoplasm"/>
    <property type="evidence" value="ECO:0000314"/>
    <property type="project" value="UniProtKB"/>
</dbReference>
<dbReference type="GO" id="GO:0035861">
    <property type="term" value="C:site of double-strand break"/>
    <property type="evidence" value="ECO:0000314"/>
    <property type="project" value="UniProtKB"/>
</dbReference>
<dbReference type="GO" id="GO:0042802">
    <property type="term" value="F:identical protein binding"/>
    <property type="evidence" value="ECO:0000353"/>
    <property type="project" value="IntAct"/>
</dbReference>
<dbReference type="GO" id="GO:0005200">
    <property type="term" value="F:structural constituent of cytoskeleton"/>
    <property type="evidence" value="ECO:0000318"/>
    <property type="project" value="GO_Central"/>
</dbReference>
<dbReference type="GO" id="GO:0160123">
    <property type="term" value="F:structural constituent of nuclear lamina"/>
    <property type="evidence" value="ECO:0000314"/>
    <property type="project" value="UniProtKB"/>
</dbReference>
<dbReference type="GO" id="GO:0005198">
    <property type="term" value="F:structural molecule activity"/>
    <property type="evidence" value="ECO:0000304"/>
    <property type="project" value="UniProtKB"/>
</dbReference>
<dbReference type="GO" id="GO:0071456">
    <property type="term" value="P:cellular response to hypoxia"/>
    <property type="evidence" value="ECO:0000270"/>
    <property type="project" value="UniProtKB"/>
</dbReference>
<dbReference type="GO" id="GO:0090398">
    <property type="term" value="P:cellular senescence"/>
    <property type="evidence" value="ECO:0000314"/>
    <property type="project" value="GO_Central"/>
</dbReference>
<dbReference type="GO" id="GO:1990683">
    <property type="term" value="P:DNA double-strand break attachment to nuclear envelope"/>
    <property type="evidence" value="ECO:0000314"/>
    <property type="project" value="UniProtKB"/>
</dbReference>
<dbReference type="GO" id="GO:0030951">
    <property type="term" value="P:establishment or maintenance of microtubule cytoskeleton polarity"/>
    <property type="evidence" value="ECO:0000250"/>
    <property type="project" value="BHF-UCL"/>
</dbReference>
<dbReference type="GO" id="GO:0031507">
    <property type="term" value="P:heterochromatin formation"/>
    <property type="evidence" value="ECO:0000318"/>
    <property type="project" value="GO_Central"/>
</dbReference>
<dbReference type="GO" id="GO:0007517">
    <property type="term" value="P:muscle organ development"/>
    <property type="evidence" value="ECO:0000315"/>
    <property type="project" value="UniProtKB"/>
</dbReference>
<dbReference type="GO" id="GO:1903243">
    <property type="term" value="P:negative regulation of cardiac muscle hypertrophy in response to stress"/>
    <property type="evidence" value="ECO:0000250"/>
    <property type="project" value="UniProtKB"/>
</dbReference>
<dbReference type="GO" id="GO:0008285">
    <property type="term" value="P:negative regulation of cell population proliferation"/>
    <property type="evidence" value="ECO:0000315"/>
    <property type="project" value="CAFA"/>
</dbReference>
<dbReference type="GO" id="GO:2001237">
    <property type="term" value="P:negative regulation of extrinsic apoptotic signaling pathway"/>
    <property type="evidence" value="ECO:0007669"/>
    <property type="project" value="Ensembl"/>
</dbReference>
<dbReference type="GO" id="GO:0072201">
    <property type="term" value="P:negative regulation of mesenchymal cell proliferation"/>
    <property type="evidence" value="ECO:0007669"/>
    <property type="project" value="Ensembl"/>
</dbReference>
<dbReference type="GO" id="GO:0090201">
    <property type="term" value="P:negative regulation of release of cytochrome c from mitochondria"/>
    <property type="evidence" value="ECO:0007669"/>
    <property type="project" value="Ensembl"/>
</dbReference>
<dbReference type="GO" id="GO:0006998">
    <property type="term" value="P:nuclear envelope organization"/>
    <property type="evidence" value="ECO:0000314"/>
    <property type="project" value="UniProtKB"/>
</dbReference>
<dbReference type="GO" id="GO:0007097">
    <property type="term" value="P:nuclear migration"/>
    <property type="evidence" value="ECO:0000318"/>
    <property type="project" value="GO_Central"/>
</dbReference>
<dbReference type="GO" id="GO:0051664">
    <property type="term" value="P:nuclear pore localization"/>
    <property type="evidence" value="ECO:0000318"/>
    <property type="project" value="GO_Central"/>
</dbReference>
<dbReference type="GO" id="GO:0010628">
    <property type="term" value="P:positive regulation of gene expression"/>
    <property type="evidence" value="ECO:0007669"/>
    <property type="project" value="Ensembl"/>
</dbReference>
<dbReference type="GO" id="GO:0006606">
    <property type="term" value="P:protein import into nucleus"/>
    <property type="evidence" value="ECO:0007669"/>
    <property type="project" value="Ensembl"/>
</dbReference>
<dbReference type="GO" id="GO:0008104">
    <property type="term" value="P:protein localization"/>
    <property type="evidence" value="ECO:0000315"/>
    <property type="project" value="CAFA"/>
</dbReference>
<dbReference type="GO" id="GO:0090435">
    <property type="term" value="P:protein localization to nuclear envelope"/>
    <property type="evidence" value="ECO:0000318"/>
    <property type="project" value="GO_Central"/>
</dbReference>
<dbReference type="GO" id="GO:0034504">
    <property type="term" value="P:protein localization to nucleus"/>
    <property type="evidence" value="ECO:0000250"/>
    <property type="project" value="UniProtKB"/>
</dbReference>
<dbReference type="GO" id="GO:0030334">
    <property type="term" value="P:regulation of cell migration"/>
    <property type="evidence" value="ECO:0000250"/>
    <property type="project" value="BHF-UCL"/>
</dbReference>
<dbReference type="GO" id="GO:1900180">
    <property type="term" value="P:regulation of protein localization to nucleus"/>
    <property type="evidence" value="ECO:0007669"/>
    <property type="project" value="Ensembl"/>
</dbReference>
<dbReference type="GO" id="GO:0031647">
    <property type="term" value="P:regulation of protein stability"/>
    <property type="evidence" value="ECO:0007669"/>
    <property type="project" value="Ensembl"/>
</dbReference>
<dbReference type="GO" id="GO:0032204">
    <property type="term" value="P:regulation of telomere maintenance"/>
    <property type="evidence" value="ECO:0000315"/>
    <property type="project" value="BHF-UCL"/>
</dbReference>
<dbReference type="GO" id="GO:0055015">
    <property type="term" value="P:ventricular cardiac muscle cell development"/>
    <property type="evidence" value="ECO:0007669"/>
    <property type="project" value="Ensembl"/>
</dbReference>
<dbReference type="DisProt" id="DP00716"/>
<dbReference type="FunFam" id="1.20.5.170:FF:000033">
    <property type="entry name" value="Lamin A/C"/>
    <property type="match status" value="1"/>
</dbReference>
<dbReference type="FunFam" id="1.20.5.500:FF:000002">
    <property type="entry name" value="Lamin A/C"/>
    <property type="match status" value="1"/>
</dbReference>
<dbReference type="FunFam" id="2.60.40.1260:FF:000001">
    <property type="entry name" value="Lamin A/C"/>
    <property type="match status" value="1"/>
</dbReference>
<dbReference type="Gene3D" id="1.20.5.170">
    <property type="match status" value="1"/>
</dbReference>
<dbReference type="Gene3D" id="2.60.40.1260">
    <property type="entry name" value="Lamin Tail domain"/>
    <property type="match status" value="1"/>
</dbReference>
<dbReference type="Gene3D" id="1.20.5.500">
    <property type="entry name" value="Single helix bin"/>
    <property type="match status" value="1"/>
</dbReference>
<dbReference type="Gene3D" id="1.20.5.1160">
    <property type="entry name" value="Vasodilator-stimulated phosphoprotein"/>
    <property type="match status" value="1"/>
</dbReference>
<dbReference type="InterPro" id="IPR018039">
    <property type="entry name" value="IF_conserved"/>
</dbReference>
<dbReference type="InterPro" id="IPR039008">
    <property type="entry name" value="IF_rod_dom"/>
</dbReference>
<dbReference type="InterPro" id="IPR001322">
    <property type="entry name" value="Lamin_tail_dom"/>
</dbReference>
<dbReference type="InterPro" id="IPR036415">
    <property type="entry name" value="Lamin_tail_dom_sf"/>
</dbReference>
<dbReference type="PANTHER" id="PTHR45721">
    <property type="entry name" value="LAMIN DM0-RELATED"/>
    <property type="match status" value="1"/>
</dbReference>
<dbReference type="PANTHER" id="PTHR45721:SF5">
    <property type="entry name" value="PRELAMIN-A_C"/>
    <property type="match status" value="1"/>
</dbReference>
<dbReference type="Pfam" id="PF00038">
    <property type="entry name" value="Filament"/>
    <property type="match status" value="1"/>
</dbReference>
<dbReference type="Pfam" id="PF00932">
    <property type="entry name" value="LTD"/>
    <property type="match status" value="1"/>
</dbReference>
<dbReference type="SMART" id="SM01391">
    <property type="entry name" value="Filament"/>
    <property type="match status" value="1"/>
</dbReference>
<dbReference type="SUPFAM" id="SSF64593">
    <property type="entry name" value="Intermediate filament protein, coiled coil region"/>
    <property type="match status" value="2"/>
</dbReference>
<dbReference type="SUPFAM" id="SSF74853">
    <property type="entry name" value="Lamin A/C globular tail domain"/>
    <property type="match status" value="1"/>
</dbReference>
<dbReference type="SUPFAM" id="SSF90257">
    <property type="entry name" value="Myosin rod fragments"/>
    <property type="match status" value="1"/>
</dbReference>
<dbReference type="PROSITE" id="PS00226">
    <property type="entry name" value="IF_ROD_1"/>
    <property type="match status" value="1"/>
</dbReference>
<dbReference type="PROSITE" id="PS51842">
    <property type="entry name" value="IF_ROD_2"/>
    <property type="match status" value="1"/>
</dbReference>
<dbReference type="PROSITE" id="PS51841">
    <property type="entry name" value="LTD"/>
    <property type="match status" value="1"/>
</dbReference>
<protein>
    <recommendedName>
        <fullName>Prelamin-A/C</fullName>
    </recommendedName>
    <component>
        <recommendedName>
            <fullName>Lamin-A/C</fullName>
        </recommendedName>
        <alternativeName>
            <fullName>70 kDa lamin</fullName>
        </alternativeName>
        <alternativeName>
            <fullName>Renal carcinoma antigen NY-REN-32</fullName>
        </alternativeName>
    </component>
</protein>
<sequence length="664" mass="74139">METPSQRRATRSGAQASSTPLSPTRITRLQEKEDLQELNDRLAVYIDRVRSLETENAGLRLRITESEEVVSREVSGIKAAYEAELGDARKTLDSVAKERARLQLELSKVREEFKELKARNTKKEGDLIAAQARLKDLEALLNSKEAALSTALSEKRTLEGELHDLRGQVAKLEAALGEAKKQLQDEMLRRVDAENRLQTMKEELDFQKNIYSEELRETKRRHETRLVEIDNGKQREFESRLADALQELRAQHEDQVEQYKKELEKTYSAKLDNARQSAERNSNLVGAAHEELQQSRIRIDSLSAQLSQLQKQLAAKEAKLRDLEDSLARERDTSRRLLAEKEREMAEMRARMQQQLDEYQELLDIKLALDMEIHAYRKLLEGEEERLRLSPSPTSQRSRGRASSHSSQTQGGGSVTKKRKLESTESRSSFSQHARTSGRVAVEEVDEEGKFVRLRNKSNEDQSMGNWQIKRQNGDDPLLTYRFPPKFTLKAGQVVTIWAAGAGATHSPPTDLVWKAQNTWGCGNSLRTALINSTGEEVAMRKLVRSVTVVEDDEDEDGDDLLHHHHGSHCSSSGDPAEYNLRSRTVLCGTCGQPADKASASGSGAQVGGPISSGSSASSVTVTRSYRSVGGSGGGSFGDNLVTRSYLLGNSSPRTQSPQNCSIM</sequence>
<keyword id="KW-0002">3D-structure</keyword>
<keyword id="KW-0007">Acetylation</keyword>
<keyword id="KW-0025">Alternative splicing</keyword>
<keyword id="KW-0122">Cardiomyopathy</keyword>
<keyword id="KW-0144">Charcot-Marie-Tooth disease</keyword>
<keyword id="KW-0175">Coiled coil</keyword>
<keyword id="KW-0912">Congenital muscular dystrophy</keyword>
<keyword id="KW-0903">Direct protein sequencing</keyword>
<keyword id="KW-0225">Disease variant</keyword>
<keyword id="KW-1067">Emery-Dreifuss muscular dystrophy</keyword>
<keyword id="KW-0325">Glycoprotein</keyword>
<keyword id="KW-0403">Intermediate filament</keyword>
<keyword id="KW-1017">Isopeptide bond</keyword>
<keyword id="KW-0947">Limb-girdle muscular dystrophy</keyword>
<keyword id="KW-0449">Lipoprotein</keyword>
<keyword id="KW-0488">Methylation</keyword>
<keyword id="KW-0523">Neurodegeneration</keyword>
<keyword id="KW-0622">Neuropathy</keyword>
<keyword id="KW-0539">Nucleus</keyword>
<keyword id="KW-0597">Phosphoprotein</keyword>
<keyword id="KW-0636">Prenylation</keyword>
<keyword id="KW-1267">Proteomics identification</keyword>
<keyword id="KW-1185">Reference proteome</keyword>
<keyword id="KW-0832">Ubl conjugation</keyword>
<accession>P02545</accession>
<accession>B4DI32</accession>
<accession>D3DVB0</accession>
<accession>D6RAQ3</accession>
<accession>E7EUI9</accession>
<accession>P02546</accession>
<accession>Q5I6Y4</accession>
<accession>Q5I6Y6</accession>
<accession>Q5TCJ2</accession>
<accession>Q5TCJ3</accession>
<accession>Q6UYC3</accession>
<accession>Q969I8</accession>
<accession>Q96JA2</accession>
<evidence type="ECO:0000250" key="1">
    <source>
        <dbReference type="UniProtKB" id="P48678"/>
    </source>
</evidence>
<evidence type="ECO:0000250" key="2">
    <source>
        <dbReference type="UniProtKB" id="P48679"/>
    </source>
</evidence>
<evidence type="ECO:0000255" key="3"/>
<evidence type="ECO:0000255" key="4">
    <source>
        <dbReference type="PROSITE-ProRule" id="PRU01187"/>
    </source>
</evidence>
<evidence type="ECO:0000255" key="5">
    <source>
        <dbReference type="PROSITE-ProRule" id="PRU01188"/>
    </source>
</evidence>
<evidence type="ECO:0000256" key="6">
    <source>
        <dbReference type="SAM" id="MobiDB-lite"/>
    </source>
</evidence>
<evidence type="ECO:0000269" key="7">
    <source>
    </source>
</evidence>
<evidence type="ECO:0000269" key="8">
    <source>
    </source>
</evidence>
<evidence type="ECO:0000269" key="9">
    <source>
    </source>
</evidence>
<evidence type="ECO:0000269" key="10">
    <source>
    </source>
</evidence>
<evidence type="ECO:0000269" key="11">
    <source>
    </source>
</evidence>
<evidence type="ECO:0000269" key="12">
    <source>
    </source>
</evidence>
<evidence type="ECO:0000269" key="13">
    <source>
    </source>
</evidence>
<evidence type="ECO:0000269" key="14">
    <source>
    </source>
</evidence>
<evidence type="ECO:0000269" key="15">
    <source>
    </source>
</evidence>
<evidence type="ECO:0000269" key="16">
    <source>
    </source>
</evidence>
<evidence type="ECO:0000269" key="17">
    <source>
    </source>
</evidence>
<evidence type="ECO:0000269" key="18">
    <source>
    </source>
</evidence>
<evidence type="ECO:0000269" key="19">
    <source>
    </source>
</evidence>
<evidence type="ECO:0000269" key="20">
    <source>
    </source>
</evidence>
<evidence type="ECO:0000269" key="21">
    <source>
    </source>
</evidence>
<evidence type="ECO:0000269" key="22">
    <source>
    </source>
</evidence>
<evidence type="ECO:0000269" key="23">
    <source>
    </source>
</evidence>
<evidence type="ECO:0000269" key="24">
    <source>
    </source>
</evidence>
<evidence type="ECO:0000269" key="25">
    <source>
    </source>
</evidence>
<evidence type="ECO:0000269" key="26">
    <source>
    </source>
</evidence>
<evidence type="ECO:0000269" key="27">
    <source>
    </source>
</evidence>
<evidence type="ECO:0000269" key="28">
    <source>
    </source>
</evidence>
<evidence type="ECO:0000269" key="29">
    <source>
    </source>
</evidence>
<evidence type="ECO:0000269" key="30">
    <source>
    </source>
</evidence>
<evidence type="ECO:0000269" key="31">
    <source>
    </source>
</evidence>
<evidence type="ECO:0000269" key="32">
    <source>
    </source>
</evidence>
<evidence type="ECO:0000269" key="33">
    <source>
    </source>
</evidence>
<evidence type="ECO:0000269" key="34">
    <source>
    </source>
</evidence>
<evidence type="ECO:0000269" key="35">
    <source>
    </source>
</evidence>
<evidence type="ECO:0000269" key="36">
    <source>
    </source>
</evidence>
<evidence type="ECO:0000269" key="37">
    <source>
    </source>
</evidence>
<evidence type="ECO:0000269" key="38">
    <source>
    </source>
</evidence>
<evidence type="ECO:0000269" key="39">
    <source>
    </source>
</evidence>
<evidence type="ECO:0000269" key="40">
    <source>
    </source>
</evidence>
<evidence type="ECO:0000269" key="41">
    <source>
    </source>
</evidence>
<evidence type="ECO:0000269" key="42">
    <source>
    </source>
</evidence>
<evidence type="ECO:0000269" key="43">
    <source>
    </source>
</evidence>
<evidence type="ECO:0000269" key="44">
    <source>
    </source>
</evidence>
<evidence type="ECO:0000269" key="45">
    <source>
    </source>
</evidence>
<evidence type="ECO:0000269" key="46">
    <source>
    </source>
</evidence>
<evidence type="ECO:0000269" key="47">
    <source>
    </source>
</evidence>
<evidence type="ECO:0000269" key="48">
    <source>
    </source>
</evidence>
<evidence type="ECO:0000269" key="49">
    <source>
    </source>
</evidence>
<evidence type="ECO:0000269" key="50">
    <source>
    </source>
</evidence>
<evidence type="ECO:0000269" key="51">
    <source>
    </source>
</evidence>
<evidence type="ECO:0000269" key="52">
    <source>
    </source>
</evidence>
<evidence type="ECO:0000269" key="53">
    <source>
    </source>
</evidence>
<evidence type="ECO:0000269" key="54">
    <source>
    </source>
</evidence>
<evidence type="ECO:0000269" key="55">
    <source>
    </source>
</evidence>
<evidence type="ECO:0000269" key="56">
    <source>
    </source>
</evidence>
<evidence type="ECO:0000269" key="57">
    <source>
    </source>
</evidence>
<evidence type="ECO:0000269" key="58">
    <source>
    </source>
</evidence>
<evidence type="ECO:0000269" key="59">
    <source>
    </source>
</evidence>
<evidence type="ECO:0000269" key="60">
    <source>
    </source>
</evidence>
<evidence type="ECO:0000269" key="61">
    <source>
    </source>
</evidence>
<evidence type="ECO:0000269" key="62">
    <source>
    </source>
</evidence>
<evidence type="ECO:0000269" key="63">
    <source>
    </source>
</evidence>
<evidence type="ECO:0000269" key="64">
    <source>
    </source>
</evidence>
<evidence type="ECO:0000269" key="65">
    <source>
    </source>
</evidence>
<evidence type="ECO:0000269" key="66">
    <source>
    </source>
</evidence>
<evidence type="ECO:0000269" key="67">
    <source>
    </source>
</evidence>
<evidence type="ECO:0000269" key="68">
    <source>
    </source>
</evidence>
<evidence type="ECO:0000269" key="69">
    <source>
    </source>
</evidence>
<evidence type="ECO:0000269" key="70">
    <source>
    </source>
</evidence>
<evidence type="ECO:0000269" key="71">
    <source>
    </source>
</evidence>
<evidence type="ECO:0000269" key="72">
    <source>
    </source>
</evidence>
<evidence type="ECO:0000269" key="73">
    <source>
    </source>
</evidence>
<evidence type="ECO:0000269" key="74">
    <source>
    </source>
</evidence>
<evidence type="ECO:0000269" key="75">
    <source>
    </source>
</evidence>
<evidence type="ECO:0000269" key="76">
    <source>
    </source>
</evidence>
<evidence type="ECO:0000269" key="77">
    <source>
    </source>
</evidence>
<evidence type="ECO:0000269" key="78">
    <source>
    </source>
</evidence>
<evidence type="ECO:0000269" key="79">
    <source>
    </source>
</evidence>
<evidence type="ECO:0000269" key="80">
    <source>
    </source>
</evidence>
<evidence type="ECO:0000269" key="81">
    <source>
    </source>
</evidence>
<evidence type="ECO:0000269" key="82">
    <source>
    </source>
</evidence>
<evidence type="ECO:0000269" key="83">
    <source>
    </source>
</evidence>
<evidence type="ECO:0000269" key="84">
    <source>
    </source>
</evidence>
<evidence type="ECO:0000269" key="85">
    <source>
    </source>
</evidence>
<evidence type="ECO:0000269" key="86">
    <source>
    </source>
</evidence>
<evidence type="ECO:0000269" key="87">
    <source>
    </source>
</evidence>
<evidence type="ECO:0000269" key="88">
    <source>
    </source>
</evidence>
<evidence type="ECO:0000269" key="89">
    <source>
    </source>
</evidence>
<evidence type="ECO:0000269" key="90">
    <source>
    </source>
</evidence>
<evidence type="ECO:0000269" key="91">
    <source>
    </source>
</evidence>
<evidence type="ECO:0000269" key="92">
    <source>
    </source>
</evidence>
<evidence type="ECO:0000269" key="93">
    <source>
    </source>
</evidence>
<evidence type="ECO:0000269" key="94">
    <source>
    </source>
</evidence>
<evidence type="ECO:0000269" key="95">
    <source>
    </source>
</evidence>
<evidence type="ECO:0000269" key="96">
    <source>
    </source>
</evidence>
<evidence type="ECO:0000269" key="97">
    <source>
    </source>
</evidence>
<evidence type="ECO:0000269" key="98">
    <source ref="9"/>
</evidence>
<evidence type="ECO:0000303" key="99">
    <source>
    </source>
</evidence>
<evidence type="ECO:0000303" key="100">
    <source>
    </source>
</evidence>
<evidence type="ECO:0000303" key="101">
    <source>
    </source>
</evidence>
<evidence type="ECO:0000303" key="102">
    <source>
    </source>
</evidence>
<evidence type="ECO:0000303" key="103">
    <source>
    </source>
</evidence>
<evidence type="ECO:0000303" key="104">
    <source ref="4"/>
</evidence>
<evidence type="ECO:0000305" key="105"/>
<evidence type="ECO:0000305" key="106">
    <source>
    </source>
</evidence>
<evidence type="ECO:0007744" key="107">
    <source>
        <dbReference type="PDB" id="6JLB"/>
    </source>
</evidence>
<evidence type="ECO:0007744" key="108">
    <source>
        <dbReference type="PDB" id="7CRG"/>
    </source>
</evidence>
<evidence type="ECO:0007744" key="109">
    <source>
    </source>
</evidence>
<evidence type="ECO:0007744" key="110">
    <source>
    </source>
</evidence>
<evidence type="ECO:0007744" key="111">
    <source>
    </source>
</evidence>
<evidence type="ECO:0007744" key="112">
    <source>
    </source>
</evidence>
<evidence type="ECO:0007744" key="113">
    <source>
    </source>
</evidence>
<evidence type="ECO:0007744" key="114">
    <source>
    </source>
</evidence>
<evidence type="ECO:0007744" key="115">
    <source>
    </source>
</evidence>
<evidence type="ECO:0007744" key="116">
    <source>
    </source>
</evidence>
<evidence type="ECO:0007744" key="117">
    <source>
    </source>
</evidence>
<evidence type="ECO:0007744" key="118">
    <source>
    </source>
</evidence>
<evidence type="ECO:0007744" key="119">
    <source>
    </source>
</evidence>
<evidence type="ECO:0007744" key="120">
    <source>
    </source>
</evidence>
<evidence type="ECO:0007744" key="121">
    <source>
    </source>
</evidence>
<evidence type="ECO:0007744" key="122">
    <source>
    </source>
</evidence>
<evidence type="ECO:0007744" key="123">
    <source>
    </source>
</evidence>
<evidence type="ECO:0007744" key="124">
    <source>
    </source>
</evidence>
<evidence type="ECO:0007829" key="125">
    <source>
        <dbReference type="PDB" id="1IFR"/>
    </source>
</evidence>
<evidence type="ECO:0007829" key="126">
    <source>
        <dbReference type="PDB" id="1IVT"/>
    </source>
</evidence>
<evidence type="ECO:0007829" key="127">
    <source>
        <dbReference type="PDB" id="3GEF"/>
    </source>
</evidence>
<evidence type="ECO:0007829" key="128">
    <source>
        <dbReference type="PDB" id="6SNZ"/>
    </source>
</evidence>
<evidence type="ECO:0007829" key="129">
    <source>
        <dbReference type="PDB" id="6YF5"/>
    </source>
</evidence>
<evidence type="ECO:0007829" key="130">
    <source>
        <dbReference type="PDB" id="7X5D"/>
    </source>
</evidence>
<evidence type="ECO:0007829" key="131">
    <source>
        <dbReference type="PDB" id="7Z21"/>
    </source>
</evidence>
<evidence type="ECO:0007829" key="132">
    <source>
        <dbReference type="PDB" id="8I33"/>
    </source>
</evidence>
<proteinExistence type="evidence at protein level"/>
<name>LMNA_HUMAN</name>
<feature type="chain" id="PRO_0000398835" description="Prelamin-A/C">
    <location>
        <begin position="1"/>
        <end position="661"/>
    </location>
</feature>
<feature type="chain" id="PRO_0000063810" description="Lamin-A/C">
    <location>
        <begin position="1"/>
        <end position="646"/>
    </location>
</feature>
<feature type="propeptide" id="PRO_0000398836" description="Removed in Lamin-A/C form">
    <location>
        <begin position="647"/>
        <end position="661"/>
    </location>
</feature>
<feature type="propeptide" id="PRO_0000403442" description="Removed in Prelamin-A/C form and in Lamin-A/C form">
    <location>
        <begin position="662"/>
        <end position="664"/>
    </location>
</feature>
<feature type="domain" description="IF rod" evidence="5">
    <location>
        <begin position="31"/>
        <end position="387"/>
    </location>
</feature>
<feature type="domain" description="LTD" evidence="4">
    <location>
        <begin position="428"/>
        <end position="545"/>
    </location>
</feature>
<feature type="region of interest" description="Interaction with MLIP" evidence="71">
    <location>
        <begin position="1"/>
        <end position="130"/>
    </location>
</feature>
<feature type="region of interest" description="Head">
    <location>
        <begin position="1"/>
        <end position="33"/>
    </location>
</feature>
<feature type="region of interest" description="Disordered" evidence="6">
    <location>
        <begin position="1"/>
        <end position="25"/>
    </location>
</feature>
<feature type="region of interest" description="Coil 1A">
    <location>
        <begin position="34"/>
        <end position="70"/>
    </location>
</feature>
<feature type="region of interest" description="Linker 1">
    <location>
        <begin position="71"/>
        <end position="80"/>
    </location>
</feature>
<feature type="region of interest" description="Coil 1B">
    <location>
        <begin position="81"/>
        <end position="218"/>
    </location>
</feature>
<feature type="region of interest" description="Linker 2">
    <location>
        <begin position="219"/>
        <end position="242"/>
    </location>
</feature>
<feature type="region of interest" description="Coil 2">
    <location>
        <begin position="243"/>
        <end position="383"/>
    </location>
</feature>
<feature type="region of interest" description="Necessary and sufficient for the interaction with IFFO1" evidence="91">
    <location>
        <begin position="259"/>
        <end position="331"/>
    </location>
</feature>
<feature type="region of interest" description="Tail">
    <location>
        <begin position="384"/>
        <end position="664"/>
    </location>
</feature>
<feature type="region of interest" description="Disordered" evidence="6">
    <location>
        <begin position="384"/>
        <end position="442"/>
    </location>
</feature>
<feature type="region of interest" description="Disordered" evidence="6">
    <location>
        <begin position="552"/>
        <end position="576"/>
    </location>
</feature>
<feature type="region of interest" description="Disordered" evidence="6">
    <location>
        <begin position="598"/>
        <end position="619"/>
    </location>
</feature>
<feature type="short sequence motif" description="Nuclear localization signal" evidence="3">
    <location>
        <begin position="417"/>
        <end position="422"/>
    </location>
</feature>
<feature type="compositionally biased region" description="Polar residues" evidence="6">
    <location>
        <begin position="426"/>
        <end position="435"/>
    </location>
</feature>
<feature type="site" description="Heptad change of phase">
    <location>
        <position position="266"/>
    </location>
</feature>
<feature type="site" description="Stutter" evidence="105">
    <location>
        <position position="325"/>
    </location>
</feature>
<feature type="site" description="Heptad change of phase">
    <location>
        <position position="330"/>
    </location>
</feature>
<feature type="site" description="Cleavage; by endoprotease">
    <location>
        <begin position="646"/>
        <end position="647"/>
    </location>
</feature>
<feature type="modified residue" description="N-acetylmethionine" evidence="116">
    <location>
        <position position="1"/>
    </location>
</feature>
<feature type="modified residue" description="Phosphothreonine" evidence="85 116">
    <location>
        <position position="3"/>
    </location>
</feature>
<feature type="modified residue" description="Phosphoserine" evidence="85">
    <location>
        <position position="5"/>
    </location>
</feature>
<feature type="modified residue" description="Phosphothreonine" evidence="85">
    <location>
        <position position="10"/>
    </location>
</feature>
<feature type="modified residue" description="Phosphoserine" evidence="85 113 116 118 119">
    <location>
        <position position="12"/>
    </location>
</feature>
<feature type="modified residue" description="Phosphoserine" evidence="85 113">
    <location>
        <position position="18"/>
    </location>
</feature>
<feature type="modified residue" description="Phosphothreonine" evidence="85 109 113 116 118 119">
    <location>
        <position position="19"/>
    </location>
</feature>
<feature type="modified residue" description="Phosphoserine; by CDK1" evidence="75 79 85 86 98 109 113 116 118 119">
    <location>
        <position position="22"/>
    </location>
</feature>
<feature type="modified residue" description="N6-acetyllysine; alternate" evidence="1">
    <location>
        <position position="32"/>
    </location>
</feature>
<feature type="modified residue" description="N6-succinyllysine; alternate" evidence="1">
    <location>
        <position position="32"/>
    </location>
</feature>
<feature type="modified residue" description="Phosphoserine" evidence="118">
    <location>
        <position position="51"/>
    </location>
</feature>
<feature type="modified residue" description="Phosphoserine" evidence="118">
    <location>
        <position position="66"/>
    </location>
</feature>
<feature type="modified residue" description="Phosphoserine" evidence="118">
    <location>
        <position position="71"/>
    </location>
</feature>
<feature type="modified residue" description="N6-acetyllysine" evidence="1">
    <location>
        <position position="78"/>
    </location>
</feature>
<feature type="modified residue" description="N6-acetyllysine" evidence="1">
    <location>
        <position position="97"/>
    </location>
</feature>
<feature type="modified residue" description="Phosphoserine" evidence="118">
    <location>
        <position position="107"/>
    </location>
</feature>
<feature type="modified residue" description="N6-acetyllysine" evidence="115">
    <location>
        <position position="108"/>
    </location>
</feature>
<feature type="modified residue" description="N6-acetyllysine" evidence="1">
    <location>
        <position position="114"/>
    </location>
</feature>
<feature type="modified residue" description="N6-acetyllysine" evidence="1">
    <location>
        <position position="123"/>
    </location>
</feature>
<feature type="modified residue" description="N6-acetyllysine" evidence="1">
    <location>
        <position position="135"/>
    </location>
</feature>
<feature type="modified residue" description="N6-acetyllysine" evidence="1">
    <location>
        <position position="144"/>
    </location>
</feature>
<feature type="modified residue" description="N6-acetyllysine" evidence="1">
    <location>
        <position position="155"/>
    </location>
</feature>
<feature type="modified residue" description="N6-acetyllysine; alternate" evidence="1">
    <location>
        <position position="171"/>
    </location>
</feature>
<feature type="modified residue" description="N6-succinyllysine; alternate" evidence="1">
    <location>
        <position position="171"/>
    </location>
</feature>
<feature type="modified residue" description="N6-acetyllysine" evidence="1">
    <location>
        <position position="180"/>
    </location>
</feature>
<feature type="modified residue" description="N6-acetyllysine" evidence="1">
    <location>
        <position position="201"/>
    </location>
</feature>
<feature type="modified residue" description="N6-acetyllysine" evidence="1">
    <location>
        <position position="208"/>
    </location>
</feature>
<feature type="modified residue" description="Phosphoserine" evidence="116 118 119">
    <location>
        <position position="212"/>
    </location>
</feature>
<feature type="modified residue" description="N6-acetyllysine" evidence="1">
    <location>
        <position position="233"/>
    </location>
</feature>
<feature type="modified residue" description="N6-acetyllysine" evidence="1">
    <location>
        <position position="260"/>
    </location>
</feature>
<feature type="modified residue" description="N6-acetyllysine" evidence="1">
    <location>
        <position position="265"/>
    </location>
</feature>
<feature type="modified residue" description="N6-acetyllysine" evidence="115">
    <location>
        <position position="270"/>
    </location>
</feature>
<feature type="modified residue" description="Phosphoserine" evidence="110 116">
    <location>
        <position position="277"/>
    </location>
</feature>
<feature type="modified residue" description="Phosphoserine; by ATR" evidence="95">
    <location>
        <position position="282"/>
    </location>
</feature>
<feature type="modified residue" description="Phosphoserine" evidence="113 116 118 119">
    <location>
        <position position="301"/>
    </location>
</feature>
<feature type="modified residue" description="Phosphoserine" evidence="119">
    <location>
        <position position="307"/>
    </location>
</feature>
<feature type="modified residue" description="N6-acetyllysine" evidence="115">
    <location>
        <position position="311"/>
    </location>
</feature>
<feature type="modified residue" description="N6-acetyllysine" evidence="1">
    <location>
        <position position="316"/>
    </location>
</feature>
<feature type="modified residue" description="N6-acetyllysine" evidence="1">
    <location>
        <position position="341"/>
    </location>
</feature>
<feature type="modified residue" description="Phosphoserine" evidence="85 86 109 113 116 117 118 119">
    <location>
        <position position="390"/>
    </location>
</feature>
<feature type="modified residue" description="Phosphoserine; by CDK1" evidence="75 79 85 86 94 109 113 116 117 118">
    <location>
        <position position="392"/>
    </location>
</feature>
<feature type="modified residue" description="Phosphoserine; by ATR" evidence="94 109 113 116 119">
    <location>
        <position position="395"/>
    </location>
</feature>
<feature type="modified residue" description="Phosphoserine" evidence="118">
    <location>
        <position position="398"/>
    </location>
</feature>
<feature type="modified residue" description="Phosphoserine" evidence="85 119">
    <location>
        <position position="403"/>
    </location>
</feature>
<feature type="modified residue" description="Phosphoserine" evidence="75 85 116 117 119">
    <location>
        <position position="404"/>
    </location>
</feature>
<feature type="modified residue" description="Phosphoserine" evidence="85">
    <location>
        <position position="406"/>
    </location>
</feature>
<feature type="modified residue" description="Phosphoserine" evidence="85">
    <location>
        <position position="407"/>
    </location>
</feature>
<feature type="modified residue" description="Phosphoserine" evidence="116 117 119">
    <location>
        <position position="414"/>
    </location>
</feature>
<feature type="modified residue" description="Phosphothreonine" evidence="85">
    <location>
        <position position="416"/>
    </location>
</feature>
<feature type="modified residue" description="N6-acetyllysine" evidence="1">
    <location>
        <position position="417"/>
    </location>
</feature>
<feature type="modified residue" description="Phosphoserine" evidence="85">
    <location>
        <position position="423"/>
    </location>
</feature>
<feature type="modified residue" description="Phosphoserine" evidence="85">
    <location>
        <position position="426"/>
    </location>
</feature>
<feature type="modified residue" description="Phosphoserine" evidence="118">
    <location>
        <position position="429"/>
    </location>
</feature>
<feature type="modified residue" description="Phosphoserine" evidence="116">
    <location>
        <position position="431"/>
    </location>
</feature>
<feature type="modified residue" description="N6-acetyllysine" evidence="115">
    <location>
        <position position="450"/>
    </location>
</feature>
<feature type="modified residue" description="N6-acetyllysine" evidence="1">
    <location>
        <position position="457"/>
    </location>
</feature>
<feature type="modified residue" description="Phosphoserine" evidence="85 113 116 117 118 119">
    <location>
        <position position="458"/>
    </location>
</feature>
<feature type="modified residue" description="Phosphoserine" evidence="116 118 119">
    <location>
        <position position="463"/>
    </location>
</feature>
<feature type="modified residue" description="N6-acetyllysine" evidence="1">
    <location>
        <position position="486"/>
    </location>
</feature>
<feature type="modified residue" description="Phosphothreonine" evidence="2">
    <location>
        <position position="496"/>
    </location>
</feature>
<feature type="modified residue" description="Phosphothreonine" evidence="116">
    <location>
        <position position="505"/>
    </location>
</feature>
<feature type="modified residue" description="Phosphothreonine" evidence="2">
    <location>
        <position position="510"/>
    </location>
</feature>
<feature type="modified residue" description="Phosphoserine" evidence="118">
    <location>
        <position position="533"/>
    </location>
</feature>
<feature type="modified residue" description="Phosphoserine" evidence="1">
    <location>
        <position position="546"/>
    </location>
</feature>
<feature type="modified residue" description="Phosphothreonine" evidence="1">
    <location>
        <position position="548"/>
    </location>
</feature>
<feature type="modified residue" description="Phosphoserine" evidence="1">
    <location>
        <position position="568"/>
    </location>
</feature>
<feature type="modified residue" description="Phosphoserine" evidence="1">
    <location>
        <position position="571"/>
    </location>
</feature>
<feature type="modified residue" description="Phosphoserine" evidence="119">
    <location>
        <position position="612"/>
    </location>
</feature>
<feature type="modified residue" description="Phosphoserine" evidence="118">
    <location>
        <position position="613"/>
    </location>
</feature>
<feature type="modified residue" description="Phosphoserine" evidence="1">
    <location>
        <position position="616"/>
    </location>
</feature>
<feature type="modified residue" description="Phosphoserine" evidence="118">
    <location>
        <position position="619"/>
    </location>
</feature>
<feature type="modified residue" description="Phosphoserine" evidence="85 109 111 112 113 116 118">
    <location>
        <position position="628"/>
    </location>
</feature>
<feature type="modified residue" description="Phosphoserine" evidence="109 113 114 116 118">
    <location>
        <position position="632"/>
    </location>
</feature>
<feature type="modified residue" description="Phosphoserine" evidence="85 109 113 116 117 118 119">
    <location>
        <position position="636"/>
    </location>
</feature>
<feature type="modified residue" description="Phosphoserine" evidence="85 113 116">
    <location>
        <position position="652"/>
    </location>
</feature>
<feature type="modified residue" description="Cysteine methyl ester" evidence="96 97">
    <location>
        <position position="661"/>
    </location>
</feature>
<feature type="lipid moiety-binding region" description="S-farnesyl cysteine" evidence="96 97">
    <location>
        <position position="661"/>
    </location>
</feature>
<feature type="glycosylation site" description="O-linked (GlcNAc) serine" evidence="87">
    <location>
        <position position="625"/>
    </location>
</feature>
<feature type="glycosylation site" description="O-linked (GlcNAc) serine" evidence="87">
    <location>
        <position position="628"/>
    </location>
</feature>
<feature type="cross-link" description="Glycyl lysine isopeptide (Lys-Gly) (interchain with G-Cter in SUMO2); alternate" evidence="124">
    <location>
        <position position="32"/>
    </location>
</feature>
<feature type="cross-link" description="Glycyl lysine isopeptide (Lys-Gly) (interchain with G-Cter in SUMO2)" evidence="121 123 124">
    <location>
        <position position="97"/>
    </location>
</feature>
<feature type="cross-link" description="Glycyl lysine isopeptide (Lys-Gly) (interchain with G-Cter in SUMO2); alternate" evidence="124">
    <location>
        <position position="171"/>
    </location>
</feature>
<feature type="cross-link" description="Glycyl lysine isopeptide (Lys-Gly) (interchain with G-Cter in SUMO); alternate">
    <location>
        <position position="201"/>
    </location>
</feature>
<feature type="cross-link" description="Glycyl lysine isopeptide (Lys-Gly) (interchain with G-Cter in SUMO2); alternate" evidence="124">
    <location>
        <position position="201"/>
    </location>
</feature>
<feature type="cross-link" description="Glycyl lysine isopeptide (Lys-Gly) (interchain with G-Cter in SUMO2)" evidence="121 124">
    <location>
        <position position="208"/>
    </location>
</feature>
<feature type="cross-link" description="Glycyl lysine isopeptide (Lys-Gly) (interchain with G-Cter in SUMO2)" evidence="124">
    <location>
        <position position="219"/>
    </location>
</feature>
<feature type="cross-link" description="Glycyl lysine isopeptide (Lys-Gly) (interchain with G-Cter in SUMO2)" evidence="120 121 122 124">
    <location>
        <position position="233"/>
    </location>
</feature>
<feature type="cross-link" description="Glycyl lysine isopeptide (Lys-Gly) (interchain with G-Cter in SUMO2); alternate" evidence="122 124">
    <location>
        <position position="260"/>
    </location>
</feature>
<feature type="cross-link" description="Glycyl lysine isopeptide (Lys-Gly) (interchain with G-Cter in SUMO2); alternate" evidence="122 124">
    <location>
        <position position="270"/>
    </location>
</feature>
<feature type="cross-link" description="Glycyl lysine isopeptide (Lys-Gly) (interchain with G-Cter in SUMO2); alternate" evidence="121 123 124">
    <location>
        <position position="311"/>
    </location>
</feature>
<feature type="cross-link" description="Glycyl lysine isopeptide (Lys-Gly) (interchain with G-Cter in SUMO2)" evidence="124">
    <location>
        <position position="366"/>
    </location>
</feature>
<feature type="cross-link" description="Glycyl lysine isopeptide (Lys-Gly) (interchain with G-Cter in SUMO2)" evidence="121 122 123 124">
    <location>
        <position position="378"/>
    </location>
</feature>
<feature type="cross-link" description="Glycyl lysine isopeptide (Lys-Gly) (interchain with G-Cter in SUMO2)" evidence="121 122 124">
    <location>
        <position position="417"/>
    </location>
</feature>
<feature type="cross-link" description="Glycyl lysine isopeptide (Lys-Gly) (interchain with G-Cter in SUMO2)" evidence="121 122 123 124">
    <location>
        <position position="420"/>
    </location>
</feature>
<feature type="cross-link" description="Glycyl lysine isopeptide (Lys-Gly) (interchain with G-Cter in SUMO2); alternate" evidence="124">
    <location>
        <position position="450"/>
    </location>
</feature>
<feature type="cross-link" description="Glycyl lysine isopeptide (Lys-Gly) (interchain with G-Cter in SUMO2)" evidence="124">
    <location>
        <position position="470"/>
    </location>
</feature>
<feature type="cross-link" description="Glycyl lysine isopeptide (Lys-Gly) (interchain with G-Cter in SUMO2)" evidence="124">
    <location>
        <position position="486"/>
    </location>
</feature>
<feature type="cross-link" description="Glycyl lysine isopeptide (Lys-Gly) (interchain with G-Cter in SUMO1); alternate" evidence="120">
    <location>
        <position position="597"/>
    </location>
</feature>
<feature type="cross-link" description="Glycyl lysine isopeptide (Lys-Gly) (interchain with G-Cter in SUMO2); alternate" evidence="120 124">
    <location>
        <position position="597"/>
    </location>
</feature>
<feature type="splice variant" id="VSP_053503" description="In isoform 5." evidence="105">
    <location>
        <begin position="1"/>
        <end position="99"/>
    </location>
</feature>
<feature type="splice variant" id="VSP_045977" description="In isoform 4." evidence="99">
    <original>METPSQR</original>
    <variation>MGNSEGC</variation>
    <location>
        <begin position="1"/>
        <end position="7"/>
    </location>
</feature>
<feature type="splice variant" id="VSP_045978" description="In isoform 4." evidence="99">
    <location>
        <begin position="8"/>
        <end position="119"/>
    </location>
</feature>
<feature type="splice variant" id="VSP_053504" description="In isoform 5." evidence="105">
    <original>ARLQLELSKVREEFKELKAR</original>
    <variation>MDLEAWDPHLEPDAEAMVDG</variation>
    <location>
        <begin position="100"/>
        <end position="119"/>
    </location>
</feature>
<feature type="splice variant" id="VSP_002468" description="In isoform ADelta10." evidence="103">
    <location>
        <begin position="537"/>
        <end position="566"/>
    </location>
</feature>
<feature type="splice variant" id="VSP_002469" description="In isoform C." evidence="100 101 102">
    <original>GSHCSS</original>
    <variation>VSGSRR</variation>
    <location>
        <begin position="567"/>
        <end position="572"/>
    </location>
</feature>
<feature type="splice variant" id="VSP_002470" description="In isoform C." evidence="100 101 102">
    <location>
        <begin position="573"/>
        <end position="664"/>
    </location>
</feature>
<feature type="splice variant" id="VSP_053505" description="In isoform 6." evidence="104">
    <location>
        <begin position="607"/>
        <end position="656"/>
    </location>
</feature>
<feature type="splice variant" id="VSP_045979" description="In isoform 4." evidence="99">
    <original>M</original>
    <variation>IQEMGMRWEVEEGRRKVSLSCLP</variation>
    <location>
        <position position="664"/>
    </location>
</feature>
<feature type="sequence variant" id="VAR_039745" description="Found in an atypical progeroid patient diagnosed as Seip syndrome; uncertain significance; dbSNP:rs57077886." evidence="41">
    <original>T</original>
    <variation>I</variation>
    <location>
        <position position="10"/>
    </location>
</feature>
<feature type="sequence variant" id="VAR_076562" description="In EDMD3." evidence="88">
    <original>T</original>
    <variation>S</variation>
    <location>
        <position position="24"/>
    </location>
</feature>
<feature type="sequence variant" id="VAR_039746" description="In EDMD2; dbSNP:rs58327533." evidence="39">
    <original>R</original>
    <variation>G</variation>
    <location>
        <position position="25"/>
    </location>
</feature>
<feature type="sequence variant" id="VAR_039747" description="In EDMD2; mis-localized in the nucleus; causes nuclear deformations and LMNB1 redistribution; dbSNP:rs61578124." evidence="17 70">
    <original>R</original>
    <variation>P</variation>
    <location>
        <position position="25"/>
    </location>
</feature>
<feature type="sequence variant" id="VAR_039748" description="In FPLD2; dbSNP:rs59914820." evidence="23">
    <original>R</original>
    <variation>W</variation>
    <location>
        <position position="28"/>
    </location>
</feature>
<feature type="sequence variant" id="VAR_039749" description="In EDMD2; abnormal nuclear localization in a honeycomb expression pattern in about 11% of cultured skin fibroblasts from heterozygous patients; no effect on protein level." evidence="27 39 46">
    <location>
        <position position="32"/>
    </location>
</feature>
<feature type="sequence variant" id="VAR_039750" description="Found in a patient with autosomal dominant Charcot-Marie-Tooth disease; uncertain significance; dbSNP:rs57966821." evidence="40">
    <original>E</original>
    <variation>D</variation>
    <location>
        <position position="33"/>
    </location>
</feature>
<feature type="sequence variant" id="VAR_039751" description="In EDMD2; dbSNP:rs267607614." evidence="40">
    <original>E</original>
    <variation>G</variation>
    <location>
        <position position="33"/>
    </location>
</feature>
<feature type="sequence variant" id="VAR_039752" description="In EDMD2; dbSNP:rs56694480." evidence="39">
    <original>L</original>
    <variation>V</variation>
    <location>
        <position position="35"/>
    </location>
</feature>
<feature type="sequence variant" id="VAR_063588" description="In MDCL and EDMD2; dbSNP:rs57983345." evidence="59 70">
    <original>N</original>
    <variation>S</variation>
    <location>
        <position position="39"/>
    </location>
</feature>
<feature type="sequence variant" id="VAR_039753" description="In EDMD2; dbSNP:rs60446065." evidence="17">
    <original>A</original>
    <variation>T</variation>
    <location>
        <position position="43"/>
    </location>
</feature>
<feature type="sequence variant" id="VAR_009971" description="In EDMD2; dbSNP:rs58436778." evidence="16 70">
    <original>Y</original>
    <variation>C</variation>
    <location>
        <position position="45"/>
    </location>
</feature>
<feature type="sequence variant" id="VAR_009972" description="In EDMD2 and MDCL; dbSNP:rs60695352." evidence="16 59">
    <original>R</original>
    <variation>P</variation>
    <location>
        <position position="50"/>
    </location>
</feature>
<feature type="sequence variant" id="VAR_039754" description="In EDMD2; dbSNP:rs59931416." evidence="17">
    <original>R</original>
    <variation>S</variation>
    <location>
        <position position="50"/>
    </location>
</feature>
<feature type="sequence variant" id="VAR_017656" description="In CMDHH; phenotype originally designated as atypical Werner syndrome; dbSNP:rs28928903." evidence="37">
    <original>A</original>
    <variation>P</variation>
    <location>
        <position position="57"/>
    </location>
</feature>
<feature type="sequence variant" id="VAR_064055" description="In CMDHH; dbSNP:rs58922911." evidence="56 64">
    <original>L</original>
    <variation>R</variation>
    <location>
        <position position="59"/>
    </location>
</feature>
<feature type="sequence variant" id="VAR_034706" description="In CMD1A and FPLD2; interacts with itself and with wild-type LMNA and LMNB1; no decrease in the stability compared with wild-type; dbSNP:rs28928900." evidence="9 20 26">
    <original>R</original>
    <variation>G</variation>
    <location>
        <position position="60"/>
    </location>
</feature>
<feature type="sequence variant" id="VAR_039755" description="In FPLD2; dbSNP:rs56793579." evidence="23">
    <original>R</original>
    <variation>G</variation>
    <location>
        <position position="62"/>
    </location>
</feature>
<feature type="sequence variant" id="VAR_039756" description="In EDMD2; dbSNP:rs57793737." evidence="27 32 49">
    <original>I</original>
    <variation>N</variation>
    <location>
        <position position="63"/>
    </location>
</feature>
<feature type="sequence variant" id="VAR_009974" description="In EDMD2; no effect on protein level; no obvious effect on nuclear morphology in cultured skin fibroblasts from heterozygous patients; dbSNP:rs57793737." evidence="16 46">
    <original>I</original>
    <variation>S</variation>
    <location>
        <position position="63"/>
    </location>
</feature>
<feature type="sequence variant" id="VAR_039757" description="In EDMD2." evidence="39">
    <original>E</original>
    <variation>G</variation>
    <location>
        <position position="65"/>
    </location>
</feature>
<feature type="sequence variant" id="VAR_009975" description="In CMD1A; interacts with itself and with wild-type LMNA and LMNB1; no decrease in the stability compared with wild-type; dbSNP:rs28933090." evidence="9 20">
    <original>L</original>
    <variation>R</variation>
    <location>
        <position position="85"/>
    </location>
</feature>
<feature type="sequence variant" id="VAR_039758" description="In CMD1A; dramatically aberrant localization with almost no nuclear rim staining and formation of intranuclear foci; dbSNP:rs59040894." evidence="30 68">
    <original>R</original>
    <variation>L</variation>
    <location>
        <position position="89"/>
    </location>
</feature>
<feature type="sequence variant" id="VAR_067257" description="In CMD1A; dbSNP:rs267607560." evidence="74">
    <original>L</original>
    <variation>F</variation>
    <location>
        <position position="92"/>
    </location>
</feature>
<feature type="sequence variant" id="VAR_039759" description="In CMD1A; dbSNP:rs59065411." evidence="22">
    <original>K</original>
    <variation>E</variation>
    <location>
        <position position="97"/>
    </location>
</feature>
<feature type="sequence variant" id="VAR_070174" description="In CMD1A; dramatically aberrant localization with almost no nuclear rim staining and formation of intranuclear foci; dbSNP:rs267607568." evidence="68">
    <original>R</original>
    <variation>P</variation>
    <location>
        <position position="101"/>
    </location>
</feature>
<feature type="sequence variant" id="VAR_009976" description="In EDMD2." evidence="16 39">
    <location>
        <position position="112"/>
    </location>
</feature>
<feature type="sequence variant" id="VAR_072817" description="Found in patients with atrial fibrillation; uncertain significance; dbSNP:rs267607605." evidence="66">
    <original>G</original>
    <variation>S</variation>
    <location>
        <position position="125"/>
    </location>
</feature>
<feature type="sequence variant" id="VAR_016913" description="In FPLD2; dbSNP:rs60864230." evidence="31">
    <original>R</original>
    <variation>L</variation>
    <location>
        <position position="133"/>
    </location>
</feature>
<feature type="sequence variant" id="VAR_017657" description="In EDMD2; dbSNP:rs60864230." evidence="17">
    <original>R</original>
    <variation>P</variation>
    <location>
        <position position="133"/>
    </location>
</feature>
<feature type="sequence variant" id="VAR_070175" description="In HGPS; dbSNP:rs267607649." evidence="73">
    <original>E</original>
    <variation>K</variation>
    <location>
        <position position="138"/>
    </location>
</feature>
<feature type="sequence variant" id="VAR_039760" description="In EDMD2; dbSNP:rs60652225." evidence="32 49">
    <original>L</original>
    <variation>P</variation>
    <location>
        <position position="140"/>
    </location>
</feature>
<feature type="sequence variant" id="VAR_017658" description="In HGPS; phenotype originally designated as atypical Werner syndrome; dbSNP:rs60652225." evidence="37">
    <original>L</original>
    <variation>R</variation>
    <location>
        <position position="140"/>
    </location>
</feature>
<feature type="sequence variant" id="VAR_034707" description="In HGPS; dbSNP:rs58912633." evidence="48">
    <original>S</original>
    <variation>F</variation>
    <location>
        <position position="143"/>
    </location>
</feature>
<feature type="sequence variant" id="VAR_039761" description="In CMD1A; dbSNP:rs61661343." evidence="42">
    <original>S</original>
    <variation>P</variation>
    <location>
        <position position="143"/>
    </location>
</feature>
<feature type="sequence variant" id="VAR_017659" description="In HGPS; atypical; dbSNP:rs60310264." evidence="34">
    <original>E</original>
    <variation>K</variation>
    <location>
        <position position="145"/>
    </location>
</feature>
<feature type="sequence variant" id="VAR_039762" description="In EDMD2; dbSNP:rs58917027." evidence="15 70">
    <original>T</original>
    <variation>P</variation>
    <location>
        <position position="150"/>
    </location>
</feature>
<feature type="sequence variant" id="VAR_017660" description="In CMD1A; dbSNP:rs28933093." evidence="36 74">
    <original>E</original>
    <variation>K</variation>
    <location>
        <position position="161"/>
    </location>
</feature>
<feature type="sequence variant" id="VAR_070176" description="In CMD1A; dramatically aberrant localization with almost no nuclear rim staining and formation of intranuclear foci; dbSNP:rs267607570." evidence="68">
    <original>R</original>
    <variation>P</variation>
    <location>
        <position position="166"/>
    </location>
</feature>
<feature type="sequence variant" id="VAR_064962" description="In EDMD2; found also in a patient with limb-girdle muscular dystrophy; sporadic; dbSNP:rs267607643." evidence="70">
    <original>R</original>
    <variation>P</variation>
    <location>
        <position position="189"/>
    </location>
</feature>
<feature type="sequence variant" id="VAR_039763" description="In EDMD2 and CMD1A; aberrant localization with decreased nuclear rim staining and increased formation of intranuclear foci; dbSNP:rs267607571." evidence="49 68">
    <original>R</original>
    <variation>Q</variation>
    <location>
        <position position="190"/>
    </location>
</feature>
<feature type="sequence variant" id="VAR_064963" description="In EDMD2." evidence="70">
    <original>R</original>
    <variation>RR</variation>
    <location>
        <position position="190"/>
    </location>
</feature>
<feature type="sequence variant" id="VAR_039764" description="In CMD1A; dbSNP:rs59026483." evidence="22 43 51">
    <original>R</original>
    <variation>W</variation>
    <location>
        <position position="190"/>
    </location>
</feature>
<feature type="sequence variant" id="VAR_039765" description="In CMD1A; dramatically increases the size of intranuclear speckles and reduces their number; this phenotype is only partially reversed by coexpression of the G-192 mutation and wild-type lamin-C; precludes insertion of lamin-C into the nuclear envelope when co-transfected with the G-192 LMNA; G-192 lamin-C expression totally disrupts the SUMO1 pattern; dbSNP:rs57045855." evidence="51">
    <original>D</original>
    <variation>G</variation>
    <location>
        <position position="192"/>
    </location>
</feature>
<feature type="sequence variant" id="VAR_009977" description="In CMD1A; dramatically aberrant localization with decreased nuclear rim staining and formation of intranuclear foci; distribution of endogenous LMNA, LMNB1 and LMNB2 are altered in cells expressing this mutant; causes an increased loss of endogenous EMD from the nuclear envelope; interacts with itself and with wild-type LMNA and LMNB1; no decrease in the stability compared with wild-type; dbSNP:rs28933091." evidence="9 20">
    <original>N</original>
    <variation>K</variation>
    <location>
        <position position="195"/>
    </location>
</feature>
<feature type="sequence variant" id="VAR_039766" description="In EDMD2." evidence="17">
    <original>RLQT</original>
    <variation>S</variation>
    <location>
        <begin position="196"/>
        <end position="199"/>
    </location>
</feature>
<feature type="sequence variant" id="VAR_009978" description="In CMD1A; interacts with itself and with wild-type LMNA and LMNB1; no decrease in the stability compared with wild-type; decreased sumoylation; aberrant localization with decreased nuclear rim staining and formation of intranuclear foci; results in increased cell death; dbSNP:rs28933092." evidence="9 20 60">
    <original>E</original>
    <variation>G</variation>
    <location>
        <position position="203"/>
    </location>
</feature>
<feature type="sequence variant" id="VAR_039767" description="In CMD1A; decreased sumoylation; aberrant localization with decreased nuclear rim staining and formation of intranuclear foci; results in increased cell death; dbSNP:rs61195471." evidence="19 60 68">
    <original>E</original>
    <variation>K</variation>
    <location>
        <position position="203"/>
    </location>
</feature>
<feature type="sequence variant" id="VAR_064964" description="In EDMD2; dbSNP:rs267607629." evidence="70">
    <original>F</original>
    <variation>L</variation>
    <location>
        <position position="206"/>
    </location>
</feature>
<feature type="sequence variant" id="VAR_034708" description="In EDMD2; no obvious effect on nuclear morphology in cultured skin fibroblasts from heterozygous patients; no effect on protein level." evidence="14 46">
    <location>
        <position position="208"/>
    </location>
</feature>
<feature type="sequence variant" id="VAR_070177" description="In CMD1A; dramatically aberrant localization with almost no nuclear rim staining and increased formation of intranuclear foci; dbSNP:rs267607572." evidence="68">
    <original>I</original>
    <variation>S</variation>
    <location>
        <position position="210"/>
    </location>
</feature>
<feature type="sequence variant" id="VAR_039768" description="In CMD1A; aberrant localization with decreased nuclear rim staining and formation of intranuclear foci; dbSNP:rs61295588." evidence="29 68">
    <original>L</original>
    <variation>P</variation>
    <location>
        <position position="215"/>
    </location>
</feature>
<feature type="sequence variant" id="VAR_039769" description="In EDMD2; dbSNP:rs58034145." evidence="16">
    <original>H</original>
    <variation>P</variation>
    <location>
        <position position="222"/>
    </location>
</feature>
<feature type="sequence variant" id="VAR_009979" description="In EDMD2; dbSNP:rs28928901." evidence="13">
    <original>H</original>
    <variation>Y</variation>
    <location>
        <position position="222"/>
    </location>
</feature>
<feature type="sequence variant" id="VAR_067697" description="In EDMD3; dbSNP:rs199474724." evidence="78">
    <original>R</original>
    <variation>Q</variation>
    <location>
        <position position="225"/>
    </location>
</feature>
<feature type="sequence variant" id="VAR_039770" description="In FPLD2; dbSNP:rs61214927." evidence="57">
    <original>D</original>
    <variation>N</variation>
    <location>
        <position position="230"/>
    </location>
</feature>
<feature type="sequence variant" id="VAR_039771" description="In EDMD2; dbSNP:rs57207746." evidence="16">
    <original>G</original>
    <variation>E</variation>
    <location>
        <position position="232"/>
    </location>
</feature>
<feature type="sequence variant" id="VAR_039772" description="In EDMD2; dbSNP:rs58850446." evidence="39">
    <original>L</original>
    <variation>P</variation>
    <location>
        <position position="248"/>
    </location>
</feature>
<feature type="sequence variant" id="VAR_009980" description="In EDMD2; no obvious effect on nuclear morphology in cultured skin fibroblasts from heterozygous patients; no effect on protein level; dbSNP:rs59332535." evidence="13 16 17 24 32 39 46 49 70">
    <original>R</original>
    <variation>Q</variation>
    <location>
        <position position="249"/>
    </location>
</feature>
<feature type="sequence variant" id="VAR_063589" description="In MDCL and EDMD2; mislocalized in the nucleus; causes nuclear deformations and LMNB1 redistribution; dbSNP:rs121912496." evidence="59 70">
    <original>R</original>
    <variation>W</variation>
    <location>
        <position position="249"/>
    </location>
</feature>
<feature type="sequence variant" id="VAR_076563" description="In EDMD2." evidence="88">
    <original>Y</original>
    <variation>C</variation>
    <location>
        <position position="259"/>
    </location>
</feature>
<feature type="sequence variant" id="VAR_039773" description="In CMD1A." evidence="52">
    <original>K</original>
    <variation>N</variation>
    <location>
        <position position="260"/>
    </location>
</feature>
<feature type="sequence variant" id="VAR_009981" description="In EDMD2." evidence="15 16 17">
    <location>
        <position position="261"/>
    </location>
</feature>
<feature type="sequence variant" id="VAR_039774" description="In EDMD2; dbSNP:rs57048196." evidence="39">
    <original>Y</original>
    <variation>C</variation>
    <location>
        <position position="267"/>
    </location>
</feature>
<feature type="sequence variant" id="VAR_064965" description="In EDMD2; dbSNP:rs267607630." evidence="70">
    <original>S</original>
    <variation>P</variation>
    <location>
        <position position="268"/>
    </location>
</feature>
<feature type="sequence variant" id="VAR_064966" description="In EDMD2; dbSNP:rs267607641." evidence="70">
    <original>L</original>
    <variation>P</variation>
    <location>
        <position position="271"/>
    </location>
</feature>
<feature type="sequence variant" id="VAR_009982" description="In EDMD2; dbSNP:rs61616775." evidence="16 70">
    <original>Q</original>
    <variation>P</variation>
    <location>
        <position position="294"/>
    </location>
</feature>
<feature type="sequence variant" id="VAR_064967" description="In EDMD2; dbSNP:rs267607633." evidence="70">
    <original>S</original>
    <variation>P</variation>
    <location>
        <position position="295"/>
    </location>
</feature>
<feature type="sequence variant" id="VAR_017661" description="In CMT2B1; dbSNP:rs59885338." evidence="21">
    <original>R</original>
    <variation>C</variation>
    <location>
        <position position="298"/>
    </location>
</feature>
<feature type="sequence variant" id="VAR_070178" description="In HGPS; atypical form with late onset; abnormal nuclear morphology with single or multple blebs, lobulation and occasional ringed or donut shaped nuclei; dbSNP:rs79907212." evidence="80">
    <original>D</original>
    <variation>G</variation>
    <location>
        <position position="300"/>
    </location>
</feature>
<feature type="sequence variant" id="VAR_063590" description="In MDCL; dbSNP:rs267607596." evidence="59">
    <original>L</original>
    <variation>P</variation>
    <location>
        <position position="302"/>
    </location>
</feature>
<feature type="sequence variant" id="VAR_064968" description="In EDMD2; dbSNP:rs61527854." evidence="70">
    <original>S</original>
    <variation>P</variation>
    <location>
        <position position="303"/>
    </location>
</feature>
<feature type="sequence variant" id="VAR_039775" description="In CMD1A; dbSNP:rs56816490." evidence="22 74">
    <original>E</original>
    <variation>K</variation>
    <location>
        <position position="317"/>
    </location>
</feature>
<feature type="sequence variant" id="VAR_070179" description="In CMD1A; no effect on nuclear morphology and lamin A localization; dbSNP:rs267607574." evidence="68">
    <original>A</original>
    <variation>T</variation>
    <location>
        <position position="318"/>
    </location>
</feature>
<feature type="sequence variant" id="VAR_009983" description="In EDMD2; dbSNP:rs58105277." evidence="13 27">
    <original>R</original>
    <variation>Q</variation>
    <location>
        <position position="336"/>
    </location>
</feature>
<feature type="sequence variant" id="VAR_009984" description="In EDMD2; dbSNP:rs61177390." evidence="27">
    <original>R</original>
    <variation>Q</variation>
    <location>
        <position position="343"/>
    </location>
</feature>
<feature type="sequence variant" id="VAR_039776" description="In CMD1A; dbSNP:rs58789393." evidence="43">
    <original>R</original>
    <variation>L</variation>
    <location>
        <position position="349"/>
    </location>
</feature>
<feature type="sequence variant" id="VAR_064969" description="In EDMD2." evidence="70">
    <location>
        <position position="355"/>
    </location>
</feature>
<feature type="sequence variant" id="VAR_009985" description="In EDMD2 and MDCL; aberrant localization with decreased nuclear rim staining and formation of intranuclear foci when transfected in C2C12 myoblasts; no obvious effect on nuclear morphology in cultured skin fibroblasts from heterozygous patients; distribution of endogenous LMNA, LMNB1 and LMNB2 are altered in cells expressing this mutant; interacts with itself and with wild-type LMNA and LMNB1; no effect on protein level; loss of interaction with IFFO1; dbSNP:rs60458016." evidence="16 17 20 46 59 70 91">
    <original>E</original>
    <variation>K</variation>
    <location>
        <position position="358"/>
    </location>
</feature>
<feature type="sequence variant" id="VAR_064970" description="In EDMD2; dbSNP:rs267607634." evidence="70">
    <original>E</original>
    <variation>K</variation>
    <location>
        <position position="361"/>
    </location>
</feature>
<feature type="sequence variant" id="VAR_009986" description="In EDMD2; dramatically aberrant localization with decreased nuclear rim staining and formation of intranuclear foci; distribution of endogenous LMNA, LMNB1 and LMNB2 are altered in cells expressing this mutant; causes an increased loss of endogenous EMD from the nuclear envelope; interacts with itself and with wild-type LMNA and LMNB1; no decrease in the stability compared with wild-type; dbSNP:rs59653062." evidence="16 20">
    <original>M</original>
    <variation>K</variation>
    <location>
        <position position="371"/>
    </location>
</feature>
<feature type="sequence variant" id="VAR_016205" description="In EDMD2; no obvious effect on nuclear morphology in cultured skin fibroblasts from heterozygous patients; no effect on protein level; dbSNP:rs61672878." evidence="14 30 33 46 49 55">
    <original>R</original>
    <variation>H</variation>
    <location>
        <position position="377"/>
    </location>
</feature>
<feature type="sequence variant" id="VAR_039777" description="In EDMD2; dbSNP:rs61672878." evidence="24 32">
    <original>R</original>
    <variation>L</variation>
    <location>
        <position position="377"/>
    </location>
</feature>
<feature type="sequence variant" id="VAR_063591" description="In MDCL; dbSNP:rs121912495." evidence="59">
    <original>L</original>
    <variation>S</variation>
    <location>
        <position position="380"/>
    </location>
</feature>
<feature type="sequence variant" id="VAR_009987" description="In EDMD2; dramatically aberrant localization with decreased nuclear rim staining and formation of intranuclear foci; distribution of endogenous LMNA, LMNB1 and LMNB2 are altered in cells expressing this mutant; causes an increased loss of endogenous EMD from the nuclear envelope; interacts with itself and with wild-type LMNA and LMNB1; no decrease in the stability compared with wild-type; dbSNP:rs267607545." evidence="16 20 32 70">
    <original>R</original>
    <variation>K</variation>
    <location>
        <position position="386"/>
    </location>
</feature>
<feature type="sequence variant" id="VAR_070180" description="In CMD1A; no effect on nuclear morphology but restricts lamin A to the cytoplasm; dbSNP:rs267607576." evidence="68">
    <original>R</original>
    <variation>H</variation>
    <location>
        <position position="388"/>
    </location>
</feature>
<feature type="sequence variant" id="VAR_039778" description="In FPLD2 and CMD1A; no effect on nuclear morphology and lamin A localization; dbSNP:rs58672172." evidence="57 68">
    <original>R</original>
    <variation>C</variation>
    <location>
        <position position="399"/>
    </location>
</feature>
<feature type="sequence variant" id="VAR_072818" description="In EDMD2; abnormal nuclear localization in a honeycomb expression pattern in about 22% of cultured skin fibroblasts from heterozygous patients; enhances the interaction with SYNE2; no effect on nuclear localization; no effect on protein level; dbSNP:rs61094188." evidence="27 46 82">
    <original>R</original>
    <variation>C</variation>
    <location>
        <position position="401"/>
    </location>
</feature>
<feature type="sequence variant" id="VAR_072819" description="Found in patients with metabolic syndromes; likely pathogenic; no effect on nuclear lamin A localization; no effect on the interaction with SYNE2; dbSNP:rs267607647." evidence="72 82">
    <original>G</original>
    <variation>D</variation>
    <location>
        <position position="411"/>
    </location>
</feature>
<feature type="sequence variant" id="VAR_072820" description="Found in patients with skeletal and cardiac muscular dystrophies; no effect on nuclear lamin A localization; no effect on the interaction with SYNE2; dbSNP:rs766811975." evidence="82">
    <original>G</original>
    <variation>C</variation>
    <location>
        <position position="413"/>
    </location>
</feature>
<feature type="sequence variant" id="VAR_072821" description="Rare variant; found in patients with atrial fibrillation; uncertain significance; no effect on nuclear lamin A localization; enhances the interaction with SYNE2; causes nuclear deformations in heat shock experiments; dbSNP:rs267607606." evidence="66 82">
    <original>V</original>
    <variation>I</variation>
    <location>
        <position position="415"/>
    </location>
</feature>
<feature type="sequence variant" id="VAR_072822" description="Found in patients with lipodystrophy; no effect on nuclear lamin A localization; no effect on the interaction with SYNE2; dbSNP:rs755686359." evidence="82">
    <original>R</original>
    <variation>C</variation>
    <location>
        <position position="419"/>
    </location>
</feature>
<feature type="sequence variant" id="VAR_072823" description="Found in patient with severe metabolic syndrome; likely pathogenic; no effect on nuclear lamin A localization; no effect on the interaction with SYNE2; dbSNP:rs267607564." evidence="58 82">
    <original>L</original>
    <variation>P</variation>
    <location>
        <position position="421"/>
    </location>
</feature>
<feature type="sequence variant" id="VAR_072824" description="Found in patients with skeletal and cardiac muscular dystrophies; uncertain significance; no effect on nuclear lamin A localization; no effect on the interaction with SYNE2." evidence="82">
    <original>R</original>
    <variation>G</variation>
    <location>
        <position position="427"/>
    </location>
</feature>
<feature type="sequence variant" id="VAR_039779" description="In CMD1A; dbSNP:rs150840924." evidence="39">
    <original>R</original>
    <variation>C</variation>
    <location>
        <position position="435"/>
    </location>
</feature>
<feature type="sequence variant" id="VAR_070181" description="In FPLD2; increase in nuclear blebbing and formation of honeycomb-like structures in the nuclei with no accumulation of prelamin A in skin fibroblasts; causes oligomerization of the C-terminal globular domain of lamins A and C under no-reducing conditions and increases binding affinity for DNA; increases sensitivity to oxidative stress; no significant differences in stability and structure compared with the wild-type; dbSNP:rs62636506." evidence="63">
    <original>R</original>
    <variation>C</variation>
    <location>
        <position position="439"/>
    </location>
</feature>
<feature type="sequence variant" id="VAR_039780" description="In EDMD2; dbSNP:rs58541611." evidence="39">
    <original>D</original>
    <variation>V</variation>
    <location>
        <position position="446"/>
    </location>
</feature>
<feature type="sequence variant" id="VAR_064971" description="In EDMD2; dbSNP:rs267607637." evidence="70">
    <original>G</original>
    <variation>D</variation>
    <location>
        <position position="449"/>
    </location>
</feature>
<feature type="sequence variant" id="VAR_063592" description="In MDCL; dbSNP:rs267607598." evidence="59">
    <original>R</original>
    <variation>P</variation>
    <location>
        <position position="453"/>
    </location>
</feature>
<feature type="sequence variant" id="VAR_009988" description="In EDMD2; abnormal nuclear localization; forms nuclear foci in about 8% of cultured skin fibroblasts from heterozygous patients; interacts with itself and with wild-type LMNA and LMNB1; no effect on protein level; dbSNP:rs58932704." evidence="7 13 16 17 20 39 46 70">
    <original>R</original>
    <variation>W</variation>
    <location>
        <position position="453"/>
    </location>
</feature>
<feature type="sequence variant" id="VAR_064972" description="In EDMD2; dbSNP:rs267607638." evidence="70">
    <original>L</original>
    <variation>P</variation>
    <location>
        <position position="454"/>
    </location>
</feature>
<feature type="sequence variant" id="VAR_063593" description="In MDCL; dbSNP:rs267607597." evidence="59">
    <original>R</original>
    <variation>P</variation>
    <location>
        <position position="455"/>
    </location>
</feature>
<feature type="sequence variant" id="VAR_063594" description="In MDCL; dbSNP:rs267607599." evidence="59">
    <original>N</original>
    <variation>D</variation>
    <location>
        <position position="456"/>
    </location>
</feature>
<feature type="sequence variant" id="VAR_039781" description="In EDMD2; mislocalized in the nucleus; does not alter nuclear size or shape; dbSNP:rs60992550." evidence="17 70">
    <original>N</original>
    <variation>I</variation>
    <location>
        <position position="456"/>
    </location>
</feature>
<feature type="sequence variant" id="VAR_039782" description="In EDMD2; dbSNP:rs61235244." evidence="16">
    <original>N</original>
    <variation>K</variation>
    <location>
        <position position="456"/>
    </location>
</feature>
<feature type="sequence variant" id="VAR_064973" description="In EDMD2; dbSNP:rs267607642." evidence="70">
    <original>D</original>
    <variation>Y</variation>
    <location>
        <position position="461"/>
    </location>
</feature>
<feature type="sequence variant" id="VAR_009989" description="In FPLD2; dbSNP:rs61282106." evidence="12">
    <original>G</original>
    <variation>D</variation>
    <location>
        <position position="465"/>
    </location>
</feature>
<feature type="sequence variant" id="VAR_064974" description="In EDMD2; dbSNP:rs267607639." evidence="70">
    <original>W</original>
    <variation>R</variation>
    <location>
        <position position="467"/>
    </location>
</feature>
<feature type="sequence variant" id="VAR_009990" description="In EDMD2; dbSNP:rs57394692." evidence="13">
    <original>I</original>
    <variation>T</variation>
    <location>
        <position position="469"/>
    </location>
</feature>
<feature type="sequence variant" id="VAR_017662" description="In HGPS; dbSNP:rs28928902." evidence="35">
    <original>R</original>
    <variation>C</variation>
    <location>
        <position position="471"/>
    </location>
</feature>
<feature type="sequence variant" id="VAR_070182" description="In CMD1A; no effect on nuclear morphology and lamin A localization; dbSNP:rs267607578." evidence="68">
    <original>R</original>
    <variation>H</variation>
    <location>
        <position position="471"/>
    </location>
</feature>
<feature type="sequence variant" id="VAR_039783" description="In EDMD2; dbSNP:rs57747780." evidence="18">
    <original>Y</original>
    <variation>H</variation>
    <location>
        <position position="481"/>
    </location>
</feature>
<feature type="sequence variant" id="VAR_009991" description="In FPLD2; abnormal nuclear localization in a honeycomb expression pattern in about 10% of cultured skin fibroblasts from heterozygous patients; no effect on protein level; dbSNP:rs11575937." evidence="11 46">
    <original>R</original>
    <variation>L</variation>
    <location>
        <position position="482"/>
    </location>
</feature>
<feature type="sequence variant" id="VAR_009992" description="In FPLD2; interacts with itself and with wild-type LMNA and LMNB1; no decrease in the stability compared with wild-type; dbSNP:rs11575937." evidence="10 12 20">
    <original>R</original>
    <variation>Q</variation>
    <location>
        <position position="482"/>
    </location>
</feature>
<feature type="sequence variant" id="VAR_009993" description="In FPLD2; interacts with itself and with wild-type LMNA and LMNB1; no decrease in the stability compared with wild-type; decreases binding affinity for DNA; increases sensitivity to oxidative stress; dbSNP:rs57920071." evidence="11 12 20 63">
    <original>R</original>
    <variation>W</variation>
    <location>
        <position position="482"/>
    </location>
</feature>
<feature type="sequence variant" id="VAR_009994" description="In FPLD2; interacts with itself and with wild-type LMNA and LMNB1; no decrease in the stability compared with wild-type; dbSNP:rs59981161." evidence="20">
    <original>K</original>
    <variation>N</variation>
    <location>
        <position position="486"/>
    </location>
</feature>
<feature type="sequence variant" id="VAR_072825" description="Found in patient with atrial fibrillation; dbSNP:rs267607607." evidence="66">
    <original>T</original>
    <variation>P</variation>
    <location>
        <position position="488"/>
    </location>
</feature>
<feature type="sequence variant" id="VAR_071968" description="In FPLD2." evidence="84">
    <original>K</original>
    <variation>E</variation>
    <location>
        <position position="515"/>
    </location>
</feature>
<feature type="sequence variant" id="VAR_039784" description="In EDMD2; interacts with itself and with wild-type LMNA and LMNB1; no decrease in the stability compared with wild-type; dbSNP:rs58362413." evidence="16 20">
    <original>W</original>
    <variation>S</variation>
    <location>
        <position position="520"/>
    </location>
</feature>
<feature type="sequence variant" id="VAR_067258" description="In CMD1A; uncertain significance; dbSNP:rs201583907." evidence="74">
    <original>G</original>
    <variation>R</variation>
    <location>
        <position position="523"/>
    </location>
</feature>
<feature type="sequence variant" id="VAR_017663" description="In HGPS; dbSNP:rs57318642." evidence="35">
    <original>R</original>
    <variation>C</variation>
    <location>
        <position position="527"/>
    </location>
</feature>
<feature type="sequence variant" id="VAR_018727" description="In MADA; dbSNP:rs57520892." evidence="25">
    <original>R</original>
    <variation>H</variation>
    <location>
        <position position="527"/>
    </location>
</feature>
<feature type="sequence variant" id="VAR_009995" description="In EDMD2 and FPLD2; interacts with itself and with wild-type LMNA and LMNB1; reduced binding to SUN1; abnormal nuclear localization; forms nuclear foci in about 13% of cultured skin fibroblasts from heterozygous patients; no effect on protein level; dbSNP:rs57520892." evidence="7 13 16 17 20 26 32 46 49 67 70">
    <original>R</original>
    <variation>P</variation>
    <location>
        <position position="527"/>
    </location>
</feature>
<feature type="sequence variant" id="VAR_009996" description="In EDMD2; interacts with itself and with wild-type LMNA and LMNB1; no decrease in the stability compared with wild-type; dbSNP:rs57629361." evidence="13 16 20 70">
    <original>T</original>
    <variation>K</variation>
    <location>
        <position position="528"/>
    </location>
</feature>
<feature type="sequence variant" id="VAR_039785" description="In EDMD2; dbSNP:rs57629361." evidence="39 70">
    <original>T</original>
    <variation>R</variation>
    <location>
        <position position="528"/>
    </location>
</feature>
<feature type="sequence variant" id="VAR_034709" description="In MADA; dbSNP:rs60580541." evidence="50">
    <original>A</original>
    <variation>V</variation>
    <location>
        <position position="529"/>
    </location>
</feature>
<feature type="sequence variant" id="VAR_009997" description="In EDMD2; interacts with itself and with wild-type LMNA and LMNB1; reduced binding to SUN1; no decrease in the stability compared with wild-type; dbSNP:rs60934003." evidence="7 20 67">
    <original>L</original>
    <variation>P</variation>
    <location>
        <position position="530"/>
    </location>
</feature>
<feature type="sequence variant" id="VAR_039786" description="In CMD1A; grossly abnormal nuclear shape with the nuclear envelope producing prominent lobules in about 10% of cultured skin fibroblasts from heterozygous patients; dbSNP:rs56984562." evidence="38 46 62">
    <original>R</original>
    <variation>C</variation>
    <location>
        <position position="541"/>
    </location>
</feature>
<feature type="sequence variant" id="VAR_039787" description="In EDMD2; dbSNP:rs61444459." evidence="39">
    <original>R</original>
    <variation>H</variation>
    <location>
        <position position="541"/>
    </location>
</feature>
<feature type="sequence variant" id="VAR_064975" description="In EDMD2; mis-localized in the nucleus; does not alter nuclear size or shape; dbSNP:rs61444459." evidence="70">
    <original>R</original>
    <variation>P</variation>
    <location>
        <position position="541"/>
    </location>
</feature>
<feature type="sequence variant" id="VAR_039788" description="In EDMD2 and CMD1A; modest and non-specific nuclear membrane alterations; the phenotype is entirely reversed by coexpression of the S-541 mutation and wild-type lamin-C; dbSNP:rs56984562." evidence="51 70">
    <original>R</original>
    <variation>S</variation>
    <location>
        <position position="541"/>
    </location>
</feature>
<feature type="sequence variant" id="VAR_034710" description="In HGPS; dbSNP:rs56673169." evidence="44">
    <original>K</original>
    <variation>N</variation>
    <location>
        <position position="542"/>
    </location>
</feature>
<feature type="sequence variant" id="VAR_039789" description="In CMD1A, FPLD2 and MADA; dbSNP:rs60890628." evidence="30 53 57">
    <original>S</original>
    <variation>L</variation>
    <location>
        <position position="573"/>
    </location>
</feature>
<feature type="sequence variant" id="VAR_039790" description="In an atypical progeroid patient; diagnosed as Werner syndrome; dbSNP:rs61224243." evidence="41">
    <original>E</original>
    <variation>V</variation>
    <location>
        <position position="578"/>
    </location>
</feature>
<feature type="sequence variant" id="VAR_009998" description="In FPLD2; dbSNP:rs57830985." evidence="12">
    <original>R</original>
    <variation>H</variation>
    <location>
        <position position="582"/>
    </location>
</feature>
<feature type="sequence variant" id="VAR_064976" description="In EDMD2; dbSNP:rs60662302." evidence="70">
    <original>G</original>
    <variation>S</variation>
    <location>
        <position position="602"/>
    </location>
</feature>
<feature type="sequence variant" id="VAR_017664" description="In HGPS; reduced binding to SUN1; may affect splicing by activating a cryptic splice donor site; dbSNP:rs61064130." evidence="34 35 67">
    <original>G</original>
    <variation>S</variation>
    <location>
        <position position="608"/>
    </location>
</feature>
<feature type="sequence variant" id="VAR_039791" description="In EDMD2; dbSNP:rs13768." evidence="17">
    <original>R</original>
    <variation>H</variation>
    <location>
        <position position="624"/>
    </location>
</feature>
<feature type="sequence variant" id="VAR_072826" description="Found in a patient with metabolic syndrome; likely pathogenic; dbSNP:rs267607648." evidence="72">
    <original>G</original>
    <variation>D</variation>
    <location>
        <position position="631"/>
    </location>
</feature>
<feature type="sequence variant" id="VAR_039792" description="In HGPS and EDMD2; uncertain significance; partially inhibits tail cleavage; dbSNP:rs142000963." evidence="41 70 77">
    <original>R</original>
    <variation>C</variation>
    <location>
        <position position="644"/>
    </location>
</feature>
<feature type="mutagenesis site" description="Mitotic arrest; when associated with Missing 391-P--P-393." evidence="79">
    <location>
        <begin position="20"/>
        <end position="23"/>
    </location>
</feature>
<feature type="mutagenesis site" description="Impaired disassembly of the nuclear envelope during mitosis. Strongly decreased disassembly of the nuclear envelope during mitosis; when associates with A-392. Decreased accumulation to the double-strand break (DSB) sites." evidence="79 85 91">
    <original>S</original>
    <variation>A</variation>
    <location>
        <position position="22"/>
    </location>
</feature>
<feature type="mutagenesis site" description="Mimics phosphorylation; increased localization to the nucleoplasm during interphase. Causes redistribution between the nucleus and the cytoplasm during interphase; when associated with D-392 and D-628. Decreased nuclear mechanical properties. Increased accumulation to the double-strand break (DSB) sites." evidence="85 86 91">
    <original>S</original>
    <variation>D</variation>
    <location>
        <position position="22"/>
    </location>
</feature>
<feature type="mutagenesis site" description="Impaired lamin assembly." evidence="79">
    <original>R</original>
    <variation>T</variation>
    <location>
        <position position="28"/>
    </location>
</feature>
<feature type="mutagenesis site" description="Impaired lamin assembly." evidence="79">
    <original>K</original>
    <variation>Q</variation>
    <location>
        <position position="32"/>
    </location>
</feature>
<feature type="mutagenesis site" description="Impaired lamin assembly." evidence="79">
    <original>R</original>
    <variation>H</variation>
    <location>
        <position position="41"/>
    </location>
</feature>
<feature type="mutagenesis site" description="Decreased sumoylation; aberrant localization with decreased nuclear rim staining and formation of intranuclear foci; associated with increased cell death." evidence="60">
    <original>K</original>
    <variation>L</variation>
    <location>
        <position position="201"/>
    </location>
</feature>
<feature type="mutagenesis site" description="Impaired phosphorylation by ATR in response to DNA damage, leading to decreased nuclear envelope rupture." evidence="95">
    <original>S</original>
    <variation>A</variation>
    <location>
        <position position="282"/>
    </location>
</feature>
<feature type="mutagenesis site" description="Impaired lamin assembly." evidence="79">
    <original>I</original>
    <variation>E</variation>
    <location>
        <position position="373"/>
    </location>
</feature>
<feature type="mutagenesis site" description="Impaired lamin assembly." evidence="79">
    <original>A</original>
    <variation>D</variation>
    <location>
        <position position="375"/>
    </location>
</feature>
<feature type="mutagenesis site" description="Impaired lamin assembly." evidence="79">
    <original>R</original>
    <variation>H</variation>
    <variation>P</variation>
    <location>
        <position position="377"/>
    </location>
</feature>
<feature type="mutagenesis site" description="Impaired lamin assembly." evidence="79">
    <original>E</original>
    <variation>K</variation>
    <location>
        <position position="381"/>
    </location>
</feature>
<feature type="mutagenesis site" description="Impaired lamin assembly." evidence="79">
    <original>E</original>
    <variation>K</variation>
    <location>
        <position position="384"/>
    </location>
</feature>
<feature type="mutagenesis site" description="Loss of interaction with IFFO1." evidence="91">
    <original>R</original>
    <variation>M</variation>
    <location>
        <position position="386"/>
    </location>
</feature>
<feature type="mutagenesis site" description="Impaired lamin assembly." evidence="79">
    <original>R</original>
    <variation>V</variation>
    <variation>L</variation>
    <variation>P</variation>
    <location>
        <position position="386"/>
    </location>
</feature>
<feature type="mutagenesis site" description="Decreased localization to the nucleoplasm during interphase." evidence="85">
    <original>S</original>
    <variation>A</variation>
    <location>
        <position position="390"/>
    </location>
</feature>
<feature type="mutagenesis site" description="Mitotic arrest; when associated with Missing 20-P--P-23." evidence="79">
    <location>
        <begin position="391"/>
        <end position="393"/>
    </location>
</feature>
<feature type="mutagenesis site" description="Impaired disassembly of the nuclear envelope during mitosis. Strongly decreased disassembly of the nuclear envelope during mitosis; when associates with A-22. Decreased localization to the nucleoplasm during interphase. Impaired disassembly of the micronuclear envelope in response to genome instability." evidence="79 85 94">
    <original>S</original>
    <variation>A</variation>
    <location>
        <position position="392"/>
    </location>
</feature>
<feature type="mutagenesis site" description="Mimics phosphorylation; increased localization to the nucleoplasm during interphase. Causes redistribution between the nucleus and the cytoplasm during interphase; when associated with D-22 and D-628." evidence="85">
    <original>S</original>
    <variation>D</variation>
    <location>
        <position position="392"/>
    </location>
</feature>
<feature type="mutagenesis site" description="Impaired phosphorylation by ATR in response to genome instability leading ro decreased phosphorylation by CDK1." evidence="94">
    <original>S</original>
    <variation>A</variation>
    <location>
        <position position="395"/>
    </location>
</feature>
<feature type="mutagenesis site" description="Mimics phosphorylation; disassembly of the micronuclear envelope in response to genome instability." evidence="94">
    <original>S</original>
    <variation>D</variation>
    <location>
        <position position="395"/>
    </location>
</feature>
<feature type="mutagenesis site" description="Mimics phosphorylation; increased localization to the nucleoplasm during interphase." evidence="85">
    <original>SHSS</original>
    <variation>DHSD</variation>
    <location>
        <begin position="404"/>
        <end position="407"/>
    </location>
</feature>
<feature type="mutagenesis site" description="Mimics phosphorylation; causes redistribution between the nucleus and the cytoplasm during interphase; when associated with D-22 and D-392.">
    <original>S</original>
    <variation>D</variation>
    <location>
        <position position="628"/>
    </location>
</feature>
<feature type="mutagenesis site" description="Does not affect tail cleavage." evidence="77">
    <original>R</original>
    <variation>A</variation>
    <location>
        <position position="644"/>
    </location>
</feature>
<feature type="mutagenesis site" description="Completely inhibits tail cleavage." evidence="77">
    <original>L</original>
    <variation>R</variation>
    <location>
        <position position="647"/>
    </location>
</feature>
<feature type="mutagenesis site" description="Completely inhibits tail cleavage." evidence="77">
    <original>L</original>
    <variation>A</variation>
    <location>
        <position position="648"/>
    </location>
</feature>
<feature type="mutagenesis site" description="Partially inhibits tail cleavage." evidence="77">
    <original>N</original>
    <variation>A</variation>
    <location>
        <position position="650"/>
    </location>
</feature>
<feature type="mutagenesis site" description="Loss of interaction with NARF. Abolishes farnesylation." evidence="8 77">
    <original>C</original>
    <variation>S</variation>
    <location>
        <position position="661"/>
    </location>
</feature>
<feature type="sequence conflict" description="In Ref. 5; BAG58344." evidence="105" ref="5">
    <original>E</original>
    <variation>K</variation>
    <location>
        <position position="340"/>
    </location>
</feature>
<feature type="strand" evidence="129">
    <location>
        <begin position="20"/>
        <end position="22"/>
    </location>
</feature>
<feature type="strand" evidence="129">
    <location>
        <begin position="25"/>
        <end position="27"/>
    </location>
</feature>
<feature type="helix" evidence="132">
    <location>
        <begin position="28"/>
        <end position="64"/>
    </location>
</feature>
<feature type="helix" evidence="128">
    <location>
        <begin position="65"/>
        <end position="218"/>
    </location>
</feature>
<feature type="helix" evidence="130">
    <location>
        <begin position="244"/>
        <end position="335"/>
    </location>
</feature>
<feature type="strand" evidence="131">
    <location>
        <begin position="430"/>
        <end position="436"/>
    </location>
</feature>
<feature type="strand" evidence="125">
    <location>
        <begin position="438"/>
        <end position="445"/>
    </location>
</feature>
<feature type="strand" evidence="125">
    <location>
        <begin position="449"/>
        <end position="456"/>
    </location>
</feature>
<feature type="strand" evidence="125">
    <location>
        <begin position="458"/>
        <end position="460"/>
    </location>
</feature>
<feature type="helix" evidence="126">
    <location>
        <begin position="464"/>
        <end position="466"/>
    </location>
</feature>
<feature type="strand" evidence="125">
    <location>
        <begin position="468"/>
        <end position="473"/>
    </location>
</feature>
<feature type="strand" evidence="125">
    <location>
        <begin position="479"/>
        <end position="482"/>
    </location>
</feature>
<feature type="strand" evidence="125">
    <location>
        <begin position="494"/>
        <end position="499"/>
    </location>
</feature>
<feature type="helix" evidence="127">
    <location>
        <begin position="500"/>
        <end position="502"/>
    </location>
</feature>
<feature type="turn" evidence="125">
    <location>
        <begin position="508"/>
        <end position="510"/>
    </location>
</feature>
<feature type="strand" evidence="125">
    <location>
        <begin position="511"/>
        <end position="514"/>
    </location>
</feature>
<feature type="strand" evidence="125">
    <location>
        <begin position="526"/>
        <end position="531"/>
    </location>
</feature>
<feature type="strand" evidence="125">
    <location>
        <begin position="537"/>
        <end position="543"/>
    </location>
</feature>
<feature type="sequence conflict" description="In Ref. 5; BAG58344." evidence="105" ref="5">
    <original>G</original>
    <variation>R</variation>
    <location sequence="P02545-4">
        <position position="556"/>
    </location>
</feature>